<evidence type="ECO:0000256" key="1">
    <source>
        <dbReference type="SAM" id="MobiDB-lite"/>
    </source>
</evidence>
<evidence type="ECO:0000269" key="2">
    <source>
    </source>
</evidence>
<evidence type="ECO:0000269" key="3">
    <source>
    </source>
</evidence>
<evidence type="ECO:0000269" key="4">
    <source>
    </source>
</evidence>
<evidence type="ECO:0000269" key="5">
    <source>
    </source>
</evidence>
<evidence type="ECO:0000269" key="6">
    <source>
    </source>
</evidence>
<evidence type="ECO:0000269" key="7">
    <source>
    </source>
</evidence>
<evidence type="ECO:0000269" key="8">
    <source>
    </source>
</evidence>
<evidence type="ECO:0000269" key="9">
    <source>
    </source>
</evidence>
<evidence type="ECO:0000269" key="10">
    <source>
    </source>
</evidence>
<evidence type="ECO:0000269" key="11">
    <source>
    </source>
</evidence>
<evidence type="ECO:0000269" key="12">
    <source>
    </source>
</evidence>
<evidence type="ECO:0000269" key="13">
    <source>
    </source>
</evidence>
<evidence type="ECO:0000269" key="14">
    <source>
    </source>
</evidence>
<evidence type="ECO:0000269" key="15">
    <source>
    </source>
</evidence>
<evidence type="ECO:0000269" key="16">
    <source>
    </source>
</evidence>
<evidence type="ECO:0000269" key="17">
    <source>
    </source>
</evidence>
<evidence type="ECO:0000269" key="18">
    <source>
    </source>
</evidence>
<evidence type="ECO:0000269" key="19">
    <source>
    </source>
</evidence>
<evidence type="ECO:0000269" key="20">
    <source>
    </source>
</evidence>
<evidence type="ECO:0000269" key="21">
    <source>
    </source>
</evidence>
<evidence type="ECO:0000269" key="22">
    <source>
    </source>
</evidence>
<evidence type="ECO:0000269" key="23">
    <source>
    </source>
</evidence>
<evidence type="ECO:0000269" key="24">
    <source>
    </source>
</evidence>
<evidence type="ECO:0000269" key="25">
    <source>
    </source>
</evidence>
<evidence type="ECO:0000269" key="26">
    <source>
    </source>
</evidence>
<evidence type="ECO:0000269" key="27">
    <source>
    </source>
</evidence>
<evidence type="ECO:0000269" key="28">
    <source>
    </source>
</evidence>
<evidence type="ECO:0000269" key="29">
    <source>
    </source>
</evidence>
<evidence type="ECO:0000269" key="30">
    <source>
    </source>
</evidence>
<evidence type="ECO:0000269" key="31">
    <source>
    </source>
</evidence>
<evidence type="ECO:0000269" key="32">
    <source>
    </source>
</evidence>
<evidence type="ECO:0000269" key="33">
    <source>
    </source>
</evidence>
<evidence type="ECO:0000269" key="34">
    <source>
    </source>
</evidence>
<evidence type="ECO:0000269" key="35">
    <source>
    </source>
</evidence>
<evidence type="ECO:0000269" key="36">
    <source>
    </source>
</evidence>
<evidence type="ECO:0000269" key="37">
    <source>
    </source>
</evidence>
<evidence type="ECO:0000269" key="38">
    <source>
    </source>
</evidence>
<evidence type="ECO:0000269" key="39">
    <source>
    </source>
</evidence>
<evidence type="ECO:0000269" key="40">
    <source>
    </source>
</evidence>
<evidence type="ECO:0000269" key="41">
    <source>
    </source>
</evidence>
<evidence type="ECO:0000269" key="42">
    <source>
    </source>
</evidence>
<evidence type="ECO:0000269" key="43">
    <source>
    </source>
</evidence>
<evidence type="ECO:0000269" key="44">
    <source>
    </source>
</evidence>
<evidence type="ECO:0000269" key="45">
    <source>
    </source>
</evidence>
<evidence type="ECO:0000269" key="46">
    <source>
    </source>
</evidence>
<evidence type="ECO:0000269" key="47">
    <source>
    </source>
</evidence>
<evidence type="ECO:0000269" key="48">
    <source>
    </source>
</evidence>
<evidence type="ECO:0000269" key="49">
    <source>
    </source>
</evidence>
<evidence type="ECO:0000269" key="50">
    <source>
    </source>
</evidence>
<evidence type="ECO:0000269" key="51">
    <source>
    </source>
</evidence>
<evidence type="ECO:0000269" key="52">
    <source>
    </source>
</evidence>
<evidence type="ECO:0000269" key="53">
    <source>
    </source>
</evidence>
<evidence type="ECO:0000269" key="54">
    <source>
    </source>
</evidence>
<evidence type="ECO:0000269" key="55">
    <source>
    </source>
</evidence>
<evidence type="ECO:0000269" key="56">
    <source>
    </source>
</evidence>
<evidence type="ECO:0000269" key="57">
    <source>
    </source>
</evidence>
<evidence type="ECO:0000269" key="58">
    <source>
    </source>
</evidence>
<evidence type="ECO:0000269" key="59">
    <source>
    </source>
</evidence>
<evidence type="ECO:0000269" key="60">
    <source>
    </source>
</evidence>
<evidence type="ECO:0000269" key="61">
    <source>
    </source>
</evidence>
<evidence type="ECO:0000269" key="62">
    <source>
    </source>
</evidence>
<evidence type="ECO:0000269" key="63">
    <source>
    </source>
</evidence>
<evidence type="ECO:0000269" key="64">
    <source>
    </source>
</evidence>
<evidence type="ECO:0000269" key="65">
    <source>
    </source>
</evidence>
<evidence type="ECO:0000269" key="66">
    <source>
    </source>
</evidence>
<evidence type="ECO:0000269" key="67">
    <source>
    </source>
</evidence>
<evidence type="ECO:0000269" key="68">
    <source>
    </source>
</evidence>
<evidence type="ECO:0000269" key="69">
    <source>
    </source>
</evidence>
<evidence type="ECO:0000269" key="70">
    <source>
    </source>
</evidence>
<evidence type="ECO:0000269" key="71">
    <source>
    </source>
</evidence>
<evidence type="ECO:0000269" key="72">
    <source>
    </source>
</evidence>
<evidence type="ECO:0000269" key="73">
    <source>
    </source>
</evidence>
<evidence type="ECO:0000269" key="74">
    <source>
    </source>
</evidence>
<evidence type="ECO:0000269" key="75">
    <source>
    </source>
</evidence>
<evidence type="ECO:0000269" key="76">
    <source>
    </source>
</evidence>
<evidence type="ECO:0000269" key="77">
    <source>
    </source>
</evidence>
<evidence type="ECO:0000269" key="78">
    <source>
    </source>
</evidence>
<evidence type="ECO:0000269" key="79">
    <source>
    </source>
</evidence>
<evidence type="ECO:0000269" key="80">
    <source>
    </source>
</evidence>
<evidence type="ECO:0000269" key="81">
    <source>
    </source>
</evidence>
<evidence type="ECO:0000269" key="82">
    <source>
    </source>
</evidence>
<evidence type="ECO:0000269" key="83">
    <source>
    </source>
</evidence>
<evidence type="ECO:0000269" key="84">
    <source>
    </source>
</evidence>
<evidence type="ECO:0000269" key="85">
    <source>
    </source>
</evidence>
<evidence type="ECO:0000269" key="86">
    <source>
    </source>
</evidence>
<evidence type="ECO:0000269" key="87">
    <source>
    </source>
</evidence>
<evidence type="ECO:0000269" key="88">
    <source>
    </source>
</evidence>
<evidence type="ECO:0000269" key="89">
    <source>
    </source>
</evidence>
<evidence type="ECO:0000269" key="90">
    <source>
    </source>
</evidence>
<evidence type="ECO:0000269" key="91">
    <source ref="5"/>
</evidence>
<evidence type="ECO:0000303" key="92">
    <source>
    </source>
</evidence>
<evidence type="ECO:0000305" key="93"/>
<evidence type="ECO:0000305" key="94">
    <source>
    </source>
</evidence>
<evidence type="ECO:0007744" key="95">
    <source>
        <dbReference type="PDB" id="4P7A"/>
    </source>
</evidence>
<evidence type="ECO:0007744" key="96">
    <source>
        <dbReference type="PDB" id="5U5P"/>
    </source>
</evidence>
<evidence type="ECO:0007744" key="97">
    <source>
    </source>
</evidence>
<evidence type="ECO:0007744" key="98">
    <source>
    </source>
</evidence>
<evidence type="ECO:0007744" key="99">
    <source>
    </source>
</evidence>
<evidence type="ECO:0007744" key="100">
    <source>
    </source>
</evidence>
<evidence type="ECO:0007744" key="101">
    <source>
    </source>
</evidence>
<evidence type="ECO:0007744" key="102">
    <source>
    </source>
</evidence>
<evidence type="ECO:0007829" key="103">
    <source>
        <dbReference type="PDB" id="3RBN"/>
    </source>
</evidence>
<evidence type="ECO:0007829" key="104">
    <source>
        <dbReference type="PDB" id="4P7A"/>
    </source>
</evidence>
<accession>P40692</accession>
<accession>B4DI13</accession>
<accession>B4DQ11</accession>
<accession>E9PCU2</accession>
<proteinExistence type="evidence at protein level"/>
<protein>
    <recommendedName>
        <fullName>DNA mismatch repair protein Mlh1</fullName>
    </recommendedName>
    <alternativeName>
        <fullName>MutL protein homolog 1</fullName>
    </alternativeName>
</protein>
<keyword id="KW-0002">3D-structure</keyword>
<keyword id="KW-0007">Acetylation</keyword>
<keyword id="KW-0025">Alternative splicing</keyword>
<keyword id="KW-0067">ATP-binding</keyword>
<keyword id="KW-0131">Cell cycle</keyword>
<keyword id="KW-0158">Chromosome</keyword>
<keyword id="KW-0225">Disease variant</keyword>
<keyword id="KW-0227">DNA damage</keyword>
<keyword id="KW-0234">DNA repair</keyword>
<keyword id="KW-0362">Hereditary nonpolyposis colorectal cancer</keyword>
<keyword id="KW-0547">Nucleotide-binding</keyword>
<keyword id="KW-0539">Nucleus</keyword>
<keyword id="KW-0597">Phosphoprotein</keyword>
<keyword id="KW-1267">Proteomics identification</keyword>
<keyword id="KW-1185">Reference proteome</keyword>
<keyword id="KW-0043">Tumor suppressor</keyword>
<keyword id="KW-0832">Ubl conjugation</keyword>
<comment type="function">
    <text evidence="49 54 56 58 64 82">Heterodimerizes with PMS2 to form MutL alpha, a component of the post-replicative DNA mismatch repair system (MMR). DNA repair is initiated by MutS alpha (MSH2-MSH6) or MutS beta (MSH2-MSH3) binding to a dsDNA mismatch, then MutL alpha is recruited to the heteroduplex. Assembly of the MutL-MutS-heteroduplex ternary complex in presence of RFC and PCNA is sufficient to activate endonuclease activity of PMS2. It introduces single-strand breaks near the mismatch and thus generates new entry points for the exonuclease EXO1 to degrade the strand containing the mismatch. DNA methylation would prevent cleavage and therefore assure that only the newly mutated DNA strand is going to be corrected. MutL alpha (MLH1-PMS2) interacts physically with the clamp loader subunits of DNA polymerase III, suggesting that it may play a role to recruit the DNA polymerase III to the site of the MMR. Also implicated in DNA damage signaling, a process which induces cell cycle arrest and can lead to apoptosis in case of major DNA damages. Heterodimerizes with MLH3 to form MutL gamma which plays a role in meiosis.</text>
</comment>
<comment type="subunit">
    <text evidence="2 15 19 20 34 40 57 59 60 64">Component of the DNA mismatch repair (MMR) complex composed at least of MSH2, MSH3, MSH6, PMS1 and MLH1 (PubMed:26300262). Heterodimer of MLH1 and PMS2 (MutL alpha), MLH1 and PMS1 (MutL beta) or MLH1 and MLH3 (MutL gamma). Forms a ternary complex with MutS alpha (MSH2-MSH6) or MutS beta (MSH2-MSH3). Part of the BRCA1-associated genome surveillance complex (BASC), which contains BRCA1, MSH2, MSH6, MLH1, ATM, BLM, PMS2 and the RAD50-MRE11-NBS1 protein complex (PubMed:10783165). This association could be a dynamic process changing throughout the cell cycle and within subnuclear domains (PubMed:10097147). Interacts with MCM9; the interaction recruits MLH1 to chromatin (PubMed:26300262). Interacts with MCM8 (PubMed:26300262). Interacts with PMS2; this interaction promotes MLH1 stability (PubMed:11427529, PubMed:22753075, PubMed:39032648). Interacts with MBD4 (PubMed:10097147). Interacts with EXO1 (PubMed:11427529, PubMed:11429708, PubMed:12414623, PubMed:14676842, PubMed:22753075). Interacts with MTMR15/FAN1 (PubMed:20603073).</text>
</comment>
<comment type="interaction">
    <interactant intactId="EBI-744248">
        <id>P40692</id>
    </interactant>
    <interactant intactId="EBI-351292">
        <id>P63261</id>
        <label>ACTG1</label>
    </interactant>
    <organismsDiffer>false</organismsDiffer>
    <experiments>6</experiments>
</comment>
<comment type="interaction">
    <interactant intactId="EBI-744248">
        <id>P40692</id>
    </interactant>
    <interactant intactId="EBI-352622">
        <id>P07355</id>
        <label>ANXA2</label>
    </interactant>
    <organismsDiffer>false</organismsDiffer>
    <experiments>6</experiments>
</comment>
<comment type="interaction">
    <interactant intactId="EBI-744248">
        <id>P40692</id>
    </interactant>
    <interactant intactId="EBI-11978055">
        <id>Q10567-3</id>
        <label>AP1B1</label>
    </interactant>
    <organismsDiffer>false</organismsDiffer>
    <experiments>3</experiments>
</comment>
<comment type="interaction">
    <interactant intactId="EBI-744248">
        <id>P40692</id>
    </interactant>
    <interactant intactId="EBI-11529439">
        <id>P63010-2</id>
        <label>AP2B1</label>
    </interactant>
    <organismsDiffer>false</organismsDiffer>
    <experiments>8</experiments>
</comment>
<comment type="interaction">
    <interactant intactId="EBI-744248">
        <id>P40692</id>
    </interactant>
    <interactant intactId="EBI-3509650">
        <id>Q9BX63</id>
        <label>BRIP1</label>
    </interactant>
    <organismsDiffer>false</organismsDiffer>
    <experiments>20</experiments>
</comment>
<comment type="interaction">
    <interactant intactId="EBI-744248">
        <id>P40692</id>
    </interactant>
    <interactant intactId="EBI-710091">
        <id>Q9BX70</id>
        <label>BTBD2</label>
    </interactant>
    <organismsDiffer>false</organismsDiffer>
    <experiments>3</experiments>
</comment>
<comment type="interaction">
    <interactant intactId="EBI-744248">
        <id>P40692</id>
    </interactant>
    <interactant intactId="EBI-18560658">
        <id>Q5JTZ5</id>
        <label>C9orf152</label>
    </interactant>
    <organismsDiffer>false</organismsDiffer>
    <experiments>3</experiments>
</comment>
<comment type="interaction">
    <interactant intactId="EBI-744248">
        <id>P40692</id>
    </interactant>
    <interactant intactId="EBI-741724">
        <id>Q8NA61</id>
        <label>CBY2</label>
    </interactant>
    <organismsDiffer>false</organismsDiffer>
    <experiments>6</experiments>
</comment>
<comment type="interaction">
    <interactant intactId="EBI-744248">
        <id>P40692</id>
    </interactant>
    <interactant intactId="EBI-11524851">
        <id>Q8NA61-2</id>
        <label>CBY2</label>
    </interactant>
    <organismsDiffer>false</organismsDiffer>
    <experiments>11</experiments>
</comment>
<comment type="interaction">
    <interactant intactId="EBI-744248">
        <id>P40692</id>
    </interactant>
    <interactant intactId="EBI-740841">
        <id>Q8N5R6</id>
        <label>CCDC33</label>
    </interactant>
    <organismsDiffer>false</organismsDiffer>
    <experiments>4</experiments>
</comment>
<comment type="interaction">
    <interactant intactId="EBI-744248">
        <id>P40692</id>
    </interactant>
    <interactant intactId="EBI-17967022">
        <id>Q96LY2-2</id>
        <label>CCDC74B</label>
    </interactant>
    <organismsDiffer>false</organismsDiffer>
    <experiments>3</experiments>
</comment>
<comment type="interaction">
    <interactant intactId="EBI-744248">
        <id>P40692</id>
    </interactant>
    <interactant intactId="EBI-5278764">
        <id>Q96GN5</id>
        <label>CDCA7L</label>
    </interactant>
    <organismsDiffer>false</organismsDiffer>
    <experiments>4</experiments>
</comment>
<comment type="interaction">
    <interactant intactId="EBI-744248">
        <id>P40692</id>
    </interactant>
    <interactant intactId="EBI-1752465">
        <id>O76039</id>
        <label>CDKL5</label>
    </interactant>
    <organismsDiffer>false</organismsDiffer>
    <experiments>4</experiments>
</comment>
<comment type="interaction">
    <interactant intactId="EBI-744248">
        <id>P40692</id>
    </interactant>
    <interactant intactId="EBI-715062">
        <id>P07858</id>
        <label>CTSB</label>
    </interactant>
    <organismsDiffer>false</organismsDiffer>
    <experiments>6</experiments>
</comment>
<comment type="interaction">
    <interactant intactId="EBI-744248">
        <id>P40692</id>
    </interactant>
    <interactant intactId="EBI-1055572">
        <id>P17661</id>
        <label>DES</label>
    </interactant>
    <organismsDiffer>false</organismsDiffer>
    <experiments>6</experiments>
</comment>
<comment type="interaction">
    <interactant intactId="EBI-744248">
        <id>P40692</id>
    </interactant>
    <interactant intactId="EBI-744099">
        <id>Q9H0I2</id>
        <label>ENKD1</label>
    </interactant>
    <organismsDiffer>false</organismsDiffer>
    <experiments>3</experiments>
</comment>
<comment type="interaction">
    <interactant intactId="EBI-744248">
        <id>P40692</id>
    </interactant>
    <interactant intactId="EBI-12958227">
        <id>Q86W67</id>
        <label>FAM228A</label>
    </interactant>
    <organismsDiffer>false</organismsDiffer>
    <experiments>3</experiments>
</comment>
<comment type="interaction">
    <interactant intactId="EBI-744248">
        <id>P40692</id>
    </interactant>
    <interactant intactId="EBI-742802">
        <id>Q9Y247</id>
        <label>FAM50B</label>
    </interactant>
    <organismsDiffer>false</organismsDiffer>
    <experiments>3</experiments>
</comment>
<comment type="interaction">
    <interactant intactId="EBI-744248">
        <id>P40692</id>
    </interactant>
    <interactant intactId="EBI-6658203">
        <id>Q86YD7</id>
        <label>FAM90A1</label>
    </interactant>
    <organismsDiffer>false</organismsDiffer>
    <experiments>3</experiments>
</comment>
<comment type="interaction">
    <interactant intactId="EBI-744248">
        <id>P40692</id>
    </interactant>
    <interactant intactId="EBI-741729">
        <id>Q96NE9</id>
        <label>FRMD6</label>
    </interactant>
    <organismsDiffer>false</organismsDiffer>
    <experiments>3</experiments>
</comment>
<comment type="interaction">
    <interactant intactId="EBI-744248">
        <id>P40692</id>
    </interactant>
    <interactant intactId="EBI-13213391">
        <id>Q96NE9-2</id>
        <label>FRMD6</label>
    </interactant>
    <organismsDiffer>false</organismsDiffer>
    <experiments>4</experiments>
</comment>
<comment type="interaction">
    <interactant intactId="EBI-744248">
        <id>P40692</id>
    </interactant>
    <interactant intactId="EBI-351076">
        <id>Q16658</id>
        <label>FSCN1</label>
    </interactant>
    <organismsDiffer>false</organismsDiffer>
    <experiments>7</experiments>
</comment>
<comment type="interaction">
    <interactant intactId="EBI-744248">
        <id>P40692</id>
    </interactant>
    <interactant intactId="EBI-351896">
        <id>P11142</id>
        <label>HSPA8</label>
    </interactant>
    <organismsDiffer>false</organismsDiffer>
    <experiments>2</experiments>
</comment>
<comment type="interaction">
    <interactant intactId="EBI-744248">
        <id>P40692</id>
    </interactant>
    <interactant intactId="EBI-2557660">
        <id>Q9ULR0</id>
        <label>ISY1</label>
    </interactant>
    <organismsDiffer>false</organismsDiffer>
    <experiments>3</experiments>
</comment>
<comment type="interaction">
    <interactant intactId="EBI-744248">
        <id>P40692</id>
    </interactant>
    <interactant intactId="EBI-349938">
        <id>P52292</id>
        <label>KPNA2</label>
    </interactant>
    <organismsDiffer>false</organismsDiffer>
    <experiments>9</experiments>
</comment>
<comment type="interaction">
    <interactant intactId="EBI-744248">
        <id>P40692</id>
    </interactant>
    <interactant intactId="EBI-540602">
        <id>O15131</id>
        <label>KPNA5</label>
    </interactant>
    <organismsDiffer>false</organismsDiffer>
    <experiments>3</experiments>
</comment>
<comment type="interaction">
    <interactant intactId="EBI-744248">
        <id>P40692</id>
    </interactant>
    <interactant intactId="EBI-10981970">
        <id>Q5T749</id>
        <label>KPRP</label>
    </interactant>
    <organismsDiffer>false</organismsDiffer>
    <experiments>3</experiments>
</comment>
<comment type="interaction">
    <interactant intactId="EBI-744248">
        <id>P40692</id>
    </interactant>
    <interactant intactId="EBI-19157865">
        <id>O95232-2</id>
        <label>LUC7L3</label>
    </interactant>
    <organismsDiffer>false</organismsDiffer>
    <experiments>3</experiments>
</comment>
<comment type="interaction">
    <interactant intactId="EBI-744248">
        <id>P40692</id>
    </interactant>
    <interactant intactId="EBI-10182930">
        <id>P43361</id>
        <label>MAGEA8</label>
    </interactant>
    <organismsDiffer>false</organismsDiffer>
    <experiments>7</experiments>
</comment>
<comment type="interaction">
    <interactant intactId="EBI-744248">
        <id>P40692</id>
    </interactant>
    <interactant intactId="EBI-12516603">
        <id>Q8WWY6</id>
        <label>MBD3L1</label>
    </interactant>
    <organismsDiffer>false</organismsDiffer>
    <experiments>3</experiments>
</comment>
<comment type="interaction">
    <interactant intactId="EBI-744248">
        <id>P40692</id>
    </interactant>
    <interactant intactId="EBI-6448717">
        <id>O95243-2</id>
        <label>MBD4</label>
    </interactant>
    <organismsDiffer>false</organismsDiffer>
    <experiments>3</experiments>
</comment>
<comment type="interaction">
    <interactant intactId="EBI-744248">
        <id>P40692</id>
    </interactant>
    <interactant intactId="EBI-8756095">
        <id>Q9UJA3</id>
        <label>MCM8</label>
    </interactant>
    <organismsDiffer>false</organismsDiffer>
    <experiments>2</experiments>
</comment>
<comment type="interaction">
    <interactant intactId="EBI-744248">
        <id>P40692</id>
    </interactant>
    <interactant intactId="EBI-2804985">
        <id>Q9NXL9</id>
        <label>MCM9</label>
    </interactant>
    <organismsDiffer>false</organismsDiffer>
    <experiments>5</experiments>
</comment>
<comment type="interaction">
    <interactant intactId="EBI-744248">
        <id>P40692</id>
    </interactant>
    <interactant intactId="EBI-3893094">
        <id>Q9UHC1</id>
        <label>MLH3</label>
    </interactant>
    <organismsDiffer>false</organismsDiffer>
    <experiments>6</experiments>
</comment>
<comment type="interaction">
    <interactant intactId="EBI-744248">
        <id>P40692</id>
    </interactant>
    <interactant intactId="EBI-9675802">
        <id>Q6PF18</id>
        <label>MORN3</label>
    </interactant>
    <organismsDiffer>false</organismsDiffer>
    <experiments>3</experiments>
</comment>
<comment type="interaction">
    <interactant intactId="EBI-744248">
        <id>P40692</id>
    </interactant>
    <interactant intactId="EBI-10695618">
        <id>P29372-4</id>
        <label>MPG</label>
    </interactant>
    <organismsDiffer>false</organismsDiffer>
    <experiments>3</experiments>
</comment>
<comment type="interaction">
    <interactant intactId="EBI-744248">
        <id>P40692</id>
    </interactant>
    <interactant intactId="EBI-1164205">
        <id>P20585</id>
        <label>MSH3</label>
    </interactant>
    <organismsDiffer>false</organismsDiffer>
    <experiments>5</experiments>
</comment>
<comment type="interaction">
    <interactant intactId="EBI-744248">
        <id>P40692</id>
    </interactant>
    <interactant intactId="EBI-3906629">
        <id>P15173</id>
        <label>MYOG</label>
    </interactant>
    <organismsDiffer>false</organismsDiffer>
    <experiments>12</experiments>
</comment>
<comment type="interaction">
    <interactant intactId="EBI-744248">
        <id>P40692</id>
    </interactant>
    <interactant intactId="EBI-18012223">
        <id>P60323-2</id>
        <label>NANOS3</label>
    </interactant>
    <organismsDiffer>false</organismsDiffer>
    <experiments>3</experiments>
</comment>
<comment type="interaction">
    <interactant intactId="EBI-744248">
        <id>P40692</id>
    </interactant>
    <interactant intactId="EBI-5461341">
        <id>Q9H3P2</id>
        <label>NELFA</label>
    </interactant>
    <organismsDiffer>false</organismsDiffer>
    <experiments>3</experiments>
</comment>
<comment type="interaction">
    <interactant intactId="EBI-744248">
        <id>P40692</id>
    </interactant>
    <interactant intactId="EBI-12024662">
        <id>Q14938-5</id>
        <label>NFIX</label>
    </interactant>
    <organismsDiffer>false</organismsDiffer>
    <experiments>3</experiments>
</comment>
<comment type="interaction">
    <interactant intactId="EBI-744248">
        <id>P40692</id>
    </interactant>
    <interactant intactId="EBI-744871">
        <id>O00746</id>
        <label>NME4</label>
    </interactant>
    <organismsDiffer>false</organismsDiffer>
    <experiments>3</experiments>
</comment>
<comment type="interaction">
    <interactant intactId="EBI-744248">
        <id>P40692</id>
    </interactant>
    <interactant intactId="EBI-1054296">
        <id>O15055</id>
        <label>PER2</label>
    </interactant>
    <organismsDiffer>false</organismsDiffer>
    <experiments>3</experiments>
</comment>
<comment type="interaction">
    <interactant intactId="EBI-744248">
        <id>P40692</id>
    </interactant>
    <interactant intactId="EBI-11532361">
        <id>P78356-2</id>
        <label>PIP4K2B</label>
    </interactant>
    <organismsDiffer>false</organismsDiffer>
    <experiments>3</experiments>
</comment>
<comment type="interaction">
    <interactant intactId="EBI-744248">
        <id>P40692</id>
    </interactant>
    <interactant intactId="EBI-2893308">
        <id>P54277</id>
        <label>PMS1</label>
    </interactant>
    <organismsDiffer>false</organismsDiffer>
    <experiments>7</experiments>
</comment>
<comment type="interaction">
    <interactant intactId="EBI-744248">
        <id>P40692</id>
    </interactant>
    <interactant intactId="EBI-1162561">
        <id>P54278</id>
        <label>PMS2</label>
    </interactant>
    <organismsDiffer>false</organismsDiffer>
    <experiments>23</experiments>
</comment>
<comment type="interaction">
    <interactant intactId="EBI-744248">
        <id>P40692</id>
    </interactant>
    <interactant intactId="EBI-1105153">
        <id>Q96KQ4</id>
        <label>PPP1R13B</label>
    </interactant>
    <organismsDiffer>false</organismsDiffer>
    <experiments>3</experiments>
</comment>
<comment type="interaction">
    <interactant intactId="EBI-744248">
        <id>P40692</id>
    </interactant>
    <interactant intactId="EBI-1567866">
        <id>Q6MZQ0</id>
        <label>PRR5L</label>
    </interactant>
    <organismsDiffer>false</organismsDiffer>
    <experiments>3</experiments>
</comment>
<comment type="interaction">
    <interactant intactId="EBI-744248">
        <id>P40692</id>
    </interactant>
    <interactant intactId="EBI-359352">
        <id>P25786</id>
        <label>PSMA1</label>
    </interactant>
    <organismsDiffer>false</organismsDiffer>
    <experiments>5</experiments>
</comment>
<comment type="interaction">
    <interactant intactId="EBI-744248">
        <id>P40692</id>
    </interactant>
    <interactant intactId="EBI-1047946">
        <id>P26045</id>
        <label>PTPN3</label>
    </interactant>
    <organismsDiffer>false</organismsDiffer>
    <experiments>3</experiments>
</comment>
<comment type="interaction">
    <interactant intactId="EBI-744248">
        <id>P40692</id>
    </interactant>
    <interactant intactId="EBI-8634209">
        <id>Q6NSI4</id>
        <label>RADX</label>
    </interactant>
    <organismsDiffer>false</organismsDiffer>
    <experiments>9</experiments>
</comment>
<comment type="interaction">
    <interactant intactId="EBI-744248">
        <id>P40692</id>
    </interactant>
    <interactant intactId="EBI-473821">
        <id>Q5RL73</id>
        <label>RBM48</label>
    </interactant>
    <organismsDiffer>false</organismsDiffer>
    <experiments>3</experiments>
</comment>
<comment type="interaction">
    <interactant intactId="EBI-744248">
        <id>P40692</id>
    </interactant>
    <interactant intactId="EBI-6873025">
        <id>Q86UC2</id>
        <label>RSPH3</label>
    </interactant>
    <organismsDiffer>false</organismsDiffer>
    <experiments>3</experiments>
</comment>
<comment type="interaction">
    <interactant intactId="EBI-744248">
        <id>P40692</id>
    </interactant>
    <interactant intactId="EBI-8635958">
        <id>Q6RVD6</id>
        <label>SPATA8</label>
    </interactant>
    <organismsDiffer>false</organismsDiffer>
    <experiments>3</experiments>
</comment>
<comment type="interaction">
    <interactant intactId="EBI-744248">
        <id>P40692</id>
    </interactant>
    <interactant intactId="EBI-351450">
        <id>Q13813</id>
        <label>SPTAN1</label>
    </interactant>
    <organismsDiffer>false</organismsDiffer>
    <experiments>6</experiments>
</comment>
<comment type="interaction">
    <interactant intactId="EBI-744248">
        <id>P40692</id>
    </interactant>
    <interactant intactId="EBI-2557644">
        <id>O95926</id>
        <label>SYF2</label>
    </interactant>
    <organismsDiffer>false</organismsDiffer>
    <experiments>3</experiments>
</comment>
<comment type="interaction">
    <interactant intactId="EBI-744248">
        <id>P40692</id>
    </interactant>
    <interactant intactId="EBI-745958">
        <id>Q5VWN6</id>
        <label>TASOR2</label>
    </interactant>
    <organismsDiffer>false</organismsDiffer>
    <experiments>6</experiments>
</comment>
<comment type="interaction">
    <interactant intactId="EBI-744248">
        <id>P40692</id>
    </interactant>
    <interactant intactId="EBI-11952651">
        <id>Q7Z6R9</id>
        <label>TFAP2D</label>
    </interactant>
    <organismsDiffer>false</organismsDiffer>
    <experiments>5</experiments>
</comment>
<comment type="interaction">
    <interactant intactId="EBI-744248">
        <id>P40692</id>
    </interactant>
    <interactant intactId="EBI-11741437">
        <id>Q08117-2</id>
        <label>TLE5</label>
    </interactant>
    <organismsDiffer>false</organismsDiffer>
    <experiments>3</experiments>
</comment>
<comment type="interaction">
    <interactant intactId="EBI-744248">
        <id>P40692</id>
    </interactant>
    <interactant intactId="EBI-712598">
        <id>P62328</id>
        <label>TMSB4X</label>
    </interactant>
    <organismsDiffer>false</organismsDiffer>
    <experiments>15</experiments>
</comment>
<comment type="interaction">
    <interactant intactId="EBI-744248">
        <id>P40692</id>
    </interactant>
    <interactant intactId="EBI-12390276">
        <id>Q96PP4</id>
        <label>TSGA13</label>
    </interactant>
    <organismsDiffer>false</organismsDiffer>
    <experiments>3</experiments>
</comment>
<comment type="interaction">
    <interactant intactId="EBI-744248">
        <id>P40692</id>
    </interactant>
    <interactant intactId="EBI-632461">
        <id>Q01081</id>
        <label>U2AF1</label>
    </interactant>
    <organismsDiffer>false</organismsDiffer>
    <experiments>3</experiments>
</comment>
<comment type="interaction">
    <interactant intactId="EBI-744248">
        <id>P40692</id>
    </interactant>
    <interactant intactId="EBI-751901">
        <id>O94941</id>
        <label>UBOX5</label>
    </interactant>
    <organismsDiffer>false</organismsDiffer>
    <experiments>7</experiments>
</comment>
<comment type="interaction">
    <interactant intactId="EBI-744248">
        <id>P40692</id>
    </interactant>
    <interactant intactId="EBI-748480">
        <id>O75152</id>
        <label>ZC3H11A</label>
    </interactant>
    <organismsDiffer>false</organismsDiffer>
    <experiments>8</experiments>
</comment>
<comment type="interaction">
    <interactant intactId="EBI-744248">
        <id>P40692</id>
    </interactant>
    <interactant intactId="EBI-12879708">
        <id>Q9NU63-3</id>
        <label>ZFP57</label>
    </interactant>
    <organismsDiffer>false</organismsDiffer>
    <experiments>3</experiments>
</comment>
<comment type="interaction">
    <interactant intactId="EBI-744248">
        <id>P40692</id>
    </interactant>
    <interactant intactId="EBI-11419867">
        <id>Q8TF47</id>
        <label>ZFP90</label>
    </interactant>
    <organismsDiffer>false</organismsDiffer>
    <experiments>3</experiments>
</comment>
<comment type="interaction">
    <interactant intactId="EBI-744248">
        <id>P40692</id>
    </interactant>
    <interactant intactId="EBI-7850213">
        <id>Q9UDW3</id>
        <label>ZMAT5</label>
    </interactant>
    <organismsDiffer>false</organismsDiffer>
    <experiments>3</experiments>
</comment>
<comment type="interaction">
    <interactant intactId="EBI-744248">
        <id>P40692</id>
    </interactant>
    <interactant intactId="EBI-12272076">
        <id>Q13360-2</id>
        <label>ZNF177</label>
    </interactant>
    <organismsDiffer>false</organismsDiffer>
    <experiments>3</experiments>
</comment>
<comment type="interaction">
    <interactant intactId="EBI-744248">
        <id>P40692</id>
    </interactant>
    <interactant intactId="EBI-1640204">
        <id>Q9UDV6</id>
        <label>ZNF212</label>
    </interactant>
    <organismsDiffer>false</organismsDiffer>
    <experiments>3</experiments>
</comment>
<comment type="interaction">
    <interactant intactId="EBI-744248">
        <id>P40692</id>
    </interactant>
    <interactant intactId="EBI-17269964">
        <id>Q6S9Z5</id>
        <label>ZNF474</label>
    </interactant>
    <organismsDiffer>false</organismsDiffer>
    <experiments>3</experiments>
</comment>
<comment type="interaction">
    <interactant intactId="EBI-744248">
        <id>P40692</id>
    </interactant>
    <interactant intactId="EBI-10251462">
        <id>Q6NX45</id>
        <label>ZNF774</label>
    </interactant>
    <organismsDiffer>false</organismsDiffer>
    <experiments>3</experiments>
</comment>
<comment type="subcellular location">
    <subcellularLocation>
        <location evidence="20 40 58 59 63">Nucleus</location>
    </subcellularLocation>
    <subcellularLocation>
        <location evidence="60">Chromosome</location>
    </subcellularLocation>
    <text evidence="60">Recruited to chromatin in a MCM9-dependent manner.</text>
</comment>
<comment type="alternative products">
    <event type="alternative splicing"/>
    <isoform>
        <id>P40692-1</id>
        <name>1</name>
        <sequence type="displayed"/>
    </isoform>
    <isoform>
        <id>P40692-2</id>
        <name>2</name>
        <sequence type="described" ref="VSP_045201"/>
    </isoform>
    <isoform>
        <id>P40692-3</id>
        <name>3</name>
        <sequence type="described" ref="VSP_047023"/>
    </isoform>
</comment>
<comment type="tissue specificity">
    <text>Colon, lymphocytes, breast, lung, spleen, testis, prostate, thyroid, gall bladder and heart.</text>
</comment>
<comment type="PTM">
    <text evidence="63">Acetylated (PubMed:30770470). Deacetylated by HDAC6 which prevents the MutL alpha complex, formed by the MLH1-PMS2 heterodimer, from being recruited to the MutS alpha complex, formed by the MSH2-MSH6 heterodimer, leading to tolerance of DNA damage (PubMed:30770470).</text>
</comment>
<comment type="PTM">
    <text evidence="64">Ubiquitinated by UBR4; leading to proteasomal degradation. This ubiquitination is counteracted by the deubiquitinase USP5.</text>
</comment>
<comment type="disease" evidence="3 4 5 6 7 9 10 11 12 13 14 16 17 19 21 22 23 24 25 26 27 28 30 31 32 33 35 37 39 41 42 43 45 46 47 48 50 52 55 56 58 59 66 67 68 69 72 73 74 76 77 79 80 81 82 83 84 86 88 89 90 91">
    <disease id="DI-00551">
        <name>Lynch syndrome 2</name>
        <acronym>LYNCH2</acronym>
        <description>A form of Lynch syndrome, an autosomal dominant disease associated with marked increase in cancer susceptibility. It is characterized by a familial predisposition to early-onset colorectal carcinoma (CRC) and extra-colonic tumors of the gastrointestinal, urological and female reproductive tracts. Lynch syndrome is reported to be the most common form of inherited colorectal cancer in the Western world. Clinically, it is often divided into two subgroups. Type I is characterized by hereditary predisposition to colorectal cancer, a young age of onset, and carcinoma observed in the proximal colon. Type II is characterized by increased risk for cancers in certain tissues such as the uterus, ovary, breast, stomach, small intestine, skin, and larynx in addition to the colon. Diagnosis of classical Lynch syndrome is based on the Amsterdam criteria: 3 or more relatives affected by colorectal cancer, one a first degree relative of the other two; 2 or more generation affected; 1 or more colorectal cancers presenting before 50 years of age; exclusion of hereditary polyposis syndromes. The term 'suspected Lynch syndrome' or 'incomplete Lynch syndrome' can be used to describe families who do not or only partially fulfill the Amsterdam criteria, but in whom a genetic basis for colon cancer is strongly suspected.</description>
        <dbReference type="MIM" id="609310"/>
    </disease>
    <text>The disease is caused by variants affecting the gene represented in this entry.</text>
</comment>
<comment type="disease" evidence="19 51 65">
    <disease id="DI-01980">
        <name>Mismatch repair cancer syndrome 1</name>
        <acronym>MMRCS1</acronym>
        <description>An autosomal recessive form of mismatch repair cancer syndrome, a childhood cancer predisposition syndrome encompassing a broad tumor spectrum. This includes hematological malignancies, central nervous system tumors, Lynch syndrome-associated malignancies such as colorectal tumors as well as multiple intestinal polyps, embryonic tumors and rhabdomyosarcoma. Multiple cafe-au-lait macules, a feature reminiscent of neurofibromatosis type 1, are often found as first manifestation of the underlying cancer.</description>
        <dbReference type="MIM" id="276300"/>
    </disease>
    <text>The disease is caused by variants affecting the gene represented in this entry.</text>
</comment>
<comment type="disease" evidence="71">
    <disease id="DI-02000">
        <name>Muir-Torre syndrome</name>
        <acronym>MRTES</acronym>
        <description>Rare autosomal dominant disorder characterized by sebaceous neoplasms and visceral malignancy.</description>
        <dbReference type="MIM" id="158320"/>
    </disease>
    <text>The disease is caused by variants affecting the gene represented in this entry.</text>
</comment>
<comment type="disease">
    <text>Defects in MLH1 may contribute to lobular carcinoma in situ (LCIS), a non-invasive neoplastic disease of the breast.</text>
</comment>
<comment type="disease">
    <disease id="DI-01526">
        <name>Endometrial cancer</name>
        <acronym>ENDMC</acronym>
        <description>A malignancy of endometrium, the mucous lining of the uterus. Most endometrial cancers are adenocarcinomas, cancers that begin in cells that make and release mucus and other fluids.</description>
        <dbReference type="MIM" id="608089"/>
    </disease>
    <text>Disease susceptibility is associated with variants affecting the gene represented in this entry.</text>
</comment>
<comment type="disease">
    <text>Some epigenetic changes can be transmitted unchanged through the germline (termed 'epigenetic inheritance'). Evidence that this mechanism occurs in humans is provided by the identification of individuals in whom 1 allele of the MLH1 gene is epigenetically silenced throughout the soma (implying a germline event). These individuals are affected by Lynch syndrome but does not have identifiable mutations in MLH1, even though it is silenced, which demonstrates that an epimutation can phenocopy a genetic disease.</text>
</comment>
<comment type="disease" evidence="9 16 30 36 38 53 73 75 78 87">
    <disease id="DI-01359">
        <name>Colorectal cancer</name>
        <acronym>CRC</acronym>
        <description>A complex disease characterized by malignant lesions arising from the inner wall of the large intestine (the colon) and the rectum. Genetic alterations are often associated with progression from premalignant lesion (adenoma) to invasive adenocarcinoma. Risk factors for cancer of the colon and rectum include colon polyps, long-standing ulcerative colitis, and genetic family history.</description>
        <dbReference type="MIM" id="114500"/>
    </disease>
    <text>Disease susceptibility is associated with variants affecting the gene represented in this entry.</text>
</comment>
<comment type="similarity">
    <text evidence="93">Belongs to the DNA mismatch repair MutL/HexB family.</text>
</comment>
<comment type="online information" name="Atlas of Genetics and Cytogenetics in Oncology and Haematology">
    <link uri="https://atlasgeneticsoncology.org/gene/149/MLH1"/>
</comment>
<comment type="online information" name="Colon cancer gene variant databases MutL homolog 1 (E.coli) (MLH1)">
    <link uri="https://databases.lovd.nl/shared/genes/MLH1"/>
    <text>Leiden Open Variation Database (LOVD)</text>
</comment>
<gene>
    <name type="primary">MLH1</name>
    <name type="synonym">COCA2</name>
</gene>
<feature type="initiator methionine" description="Removed" evidence="100">
    <location>
        <position position="1"/>
    </location>
</feature>
<feature type="chain" id="PRO_0000178000" description="DNA mismatch repair protein Mlh1">
    <location>
        <begin position="2"/>
        <end position="756"/>
    </location>
</feature>
<feature type="region of interest" description="Disordered" evidence="1">
    <location>
        <begin position="355"/>
        <end position="378"/>
    </location>
</feature>
<feature type="region of interest" description="Disordered" evidence="1">
    <location>
        <begin position="400"/>
        <end position="491"/>
    </location>
</feature>
<feature type="region of interest" description="Interaction with EXO1" evidence="19 20 34 40 59">
    <location>
        <begin position="410"/>
        <end position="650"/>
    </location>
</feature>
<feature type="short sequence motif" description="Nuclear localization signal" evidence="62">
    <location>
        <begin position="471"/>
        <end position="474"/>
    </location>
</feature>
<feature type="compositionally biased region" description="Low complexity" evidence="1">
    <location>
        <begin position="362"/>
        <end position="375"/>
    </location>
</feature>
<feature type="compositionally biased region" description="Polar residues" evidence="1">
    <location>
        <begin position="443"/>
        <end position="457"/>
    </location>
</feature>
<feature type="binding site" evidence="94 95">
    <location>
        <position position="38"/>
    </location>
    <ligand>
        <name>ATP</name>
        <dbReference type="ChEBI" id="CHEBI:30616"/>
    </ligand>
</feature>
<feature type="binding site" evidence="94 95">
    <location>
        <position position="63"/>
    </location>
    <ligand>
        <name>ATP</name>
        <dbReference type="ChEBI" id="CHEBI:30616"/>
    </ligand>
</feature>
<feature type="binding site" evidence="94 95">
    <location>
        <begin position="82"/>
        <end position="84"/>
    </location>
    <ligand>
        <name>ATP</name>
        <dbReference type="ChEBI" id="CHEBI:30616"/>
    </ligand>
</feature>
<feature type="binding site" evidence="94 95">
    <location>
        <begin position="100"/>
        <end position="104"/>
    </location>
    <ligand>
        <name>ATP</name>
        <dbReference type="ChEBI" id="CHEBI:30616"/>
    </ligand>
</feature>
<feature type="modified residue" description="N-acetylserine" evidence="100">
    <location>
        <position position="2"/>
    </location>
</feature>
<feature type="modified residue" description="N6-acetyllysine" evidence="63">
    <location>
        <position position="33"/>
    </location>
</feature>
<feature type="modified residue" description="N6-acetyllysine" evidence="63">
    <location>
        <position position="241"/>
    </location>
</feature>
<feature type="modified residue" description="N6-acetyllysine" evidence="63">
    <location>
        <position position="361"/>
    </location>
</feature>
<feature type="modified residue" description="N6-acetyllysine" evidence="63">
    <location>
        <position position="377"/>
    </location>
</feature>
<feature type="modified residue" description="Phosphoserine" evidence="97 98 99 101 102">
    <location>
        <position position="477"/>
    </location>
</feature>
<feature type="splice variant" id="VSP_045201" description="In isoform 2." evidence="92">
    <location>
        <begin position="1"/>
        <end position="241"/>
    </location>
</feature>
<feature type="splice variant" id="VSP_047023" description="In isoform 3." evidence="92">
    <original>MSFVAGVIRRLDETVVNRIAAGEVIQRPANAIKEMIENCLDAKSTSIQVIVKEGGLKLIQIQDNGTGIRKEDLDIVCERFTTSKLQSFEDLASISTYGFRG</original>
    <variation>MAF</variation>
    <location>
        <begin position="1"/>
        <end position="101"/>
    </location>
</feature>
<feature type="sequence variant" id="VAR_022663" description="In LYNCH2; dbSNP:rs367654552." evidence="39">
    <original>R</original>
    <variation>C</variation>
    <location>
        <position position="18"/>
    </location>
</feature>
<feature type="sequence variant" id="VAR_043383" description="In LYNCH2; dbSNP:rs63750648." evidence="32">
    <original>I</original>
    <variation>F</variation>
    <location>
        <position position="19"/>
    </location>
</feature>
<feature type="sequence variant" id="VAR_043384" description="In LYNCH2; dbSNP:rs63750706." evidence="41">
    <original>A</original>
    <variation>V</variation>
    <location>
        <position position="21"/>
    </location>
</feature>
<feature type="sequence variant" id="VAR_038023" description="In dbSNP:rs41295280." evidence="53">
    <original>G</original>
    <variation>A</variation>
    <location>
        <position position="22"/>
    </location>
</feature>
<feature type="sequence variant" id="VAR_043385" description="In LYNCH2; dbSNP:rs63749838." evidence="5">
    <original>I</original>
    <variation>F</variation>
    <location>
        <position position="25"/>
    </location>
</feature>
<feature type="sequence variant" id="VAR_004433" description="In LYNCH2; loss of protein expression; normal interaction with PMS2 and EXO1; decreased mismatch repair activity; no effect on nuclear localization; dbSNP:rs63750792." evidence="3 32 47 48 58 59 81">
    <original>P</original>
    <variation>L</variation>
    <location>
        <position position="28"/>
    </location>
</feature>
<feature type="sequence variant" id="VAR_043386" description="In LYNCH2; uncertain significance; acts functionally like the wild-type protein; dbSNP:rs63750656." evidence="37 47 58">
    <original>A</original>
    <variation>S</variation>
    <location>
        <position position="29"/>
    </location>
</feature>
<feature type="sequence variant" id="VAR_076338" description="In LYNCH2; decreased mismatch repair activity; requires 2 nucleotide substitutions; dbSNP:rs63749994." evidence="56">
    <original>A</original>
    <variation>C</variation>
    <location>
        <position position="31"/>
    </location>
</feature>
<feature type="sequence variant" id="VAR_014876" description="In dbSNP:rs2020872." evidence="91">
    <original>I</original>
    <variation>V</variation>
    <location>
        <position position="32"/>
    </location>
</feature>
<feature type="sequence variant" id="VAR_043387" description="In LYNCH2; uncertain significance; dbSNP:rs63749906." evidence="48">
    <original>M</original>
    <variation>K</variation>
    <location>
        <position position="35"/>
    </location>
</feature>
<feature type="sequence variant" id="VAR_043388" description="In MMRCS1; requires 2 nucleotide substitutions; dbSNP:rs121912965." evidence="33 51">
    <original>M</original>
    <variation>N</variation>
    <location>
        <position position="35"/>
    </location>
</feature>
<feature type="sequence variant" id="VAR_004434" description="In LYNCH2; dbSNP:rs63749906.">
    <original>M</original>
    <variation>R</variation>
    <location>
        <position position="35"/>
    </location>
</feature>
<feature type="sequence variant" id="VAR_004435" description="Found in an endometrial cancer sample; somatic mutation.">
    <original>E</original>
    <variation>ELNH</variation>
    <location>
        <position position="37"/>
    </location>
</feature>
<feature type="sequence variant" id="VAR_076339" description="In LYNCH2; decreased mismatch repair activity; loss of nuclear localization; dbSNP:rs63751012." evidence="56 59">
    <original>E</original>
    <variation>K</variation>
    <location>
        <position position="37"/>
    </location>
</feature>
<feature type="sequence variant" id="VAR_043389" description="In LYNCH2; decreased mismatch repair activity; no effect on nuclear localization; dbSNP:rs63750580." evidence="33 56 59">
    <original>N</original>
    <variation>H</variation>
    <location>
        <position position="38"/>
    </location>
</feature>
<feature type="sequence variant" id="VAR_076340" description="In LYNCH2; decreased mismatch repair activity; no effect on nuclear localization; dbSNP:rs267607706." evidence="56 59">
    <original>N</original>
    <variation>K</variation>
    <location>
        <position position="38"/>
    </location>
</feature>
<feature type="sequence variant" id="VAR_043390" description="In LYNCH2; dbSNP:rs63751094." evidence="46">
    <original>D</original>
    <variation>G</variation>
    <location>
        <position position="41"/>
    </location>
</feature>
<feature type="sequence variant" id="VAR_054522" description="In LYNCH2; no effect on MLH1 splicing; dbSNP:rs267607713." evidence="55">
    <original>D</original>
    <variation>H</variation>
    <location>
        <position position="41"/>
    </location>
</feature>
<feature type="sequence variant" id="VAR_004436" description="In LYNCH2; no effect on MLH1 splicing; loss of mismatch repair activity; dbSNP:rs63751109." evidence="56 59 83">
    <original>S</original>
    <variation>F</variation>
    <location>
        <position position="44"/>
    </location>
</feature>
<feature type="sequence variant" id="VAR_043391" description="In LYNCH2; decreased mismatch repair activity; loss of protein expression; loss of nuclear localization." evidence="58">
    <original>TSI</original>
    <variation>CF</variation>
    <location>
        <begin position="45"/>
        <end position="47"/>
    </location>
</feature>
<feature type="sequence variant" id="VAR_012902" description="In CRC; sporadic; somatic mutation; uncertain significance; dbSNP:rs63751267." evidence="78">
    <original>G</original>
    <variation>E</variation>
    <location>
        <position position="54"/>
    </location>
</feature>
<feature type="sequence variant" id="VAR_004437" description="In LYNCH2; decreased mismatch repair activity; dbSNP:rs63751428." evidence="82">
    <original>Q</original>
    <variation>K</variation>
    <location>
        <position position="62"/>
    </location>
</feature>
<feature type="sequence variant" id="VAR_043392" description="In LYNCH2; decreased mismatch repair activity; loss of protein expression; loss of nuclear localization; dbSNP:rs587778955." evidence="47 58">
    <original>D</original>
    <variation>E</variation>
    <location>
        <position position="63"/>
    </location>
</feature>
<feature type="sequence variant" id="VAR_004438" description="In LYNCH2; dbSNP:rs63750952." evidence="82">
    <original>N</original>
    <variation>S</variation>
    <location>
        <position position="64"/>
    </location>
</feature>
<feature type="sequence variant" id="VAR_038024" description="In CRC; dbSNP:rs63749939." evidence="53">
    <original>G</original>
    <variation>E</variation>
    <location>
        <position position="67"/>
    </location>
</feature>
<feature type="sequence variant" id="VAR_004439" description="In LYNCH2; no effect on MLH1 splicing; decreased mismatch repair activity; loss of protein expression; loss of nuclear localization; dbSNP:rs63750206." evidence="4 37 41 47 48 55 56 58 59 77 89">
    <original>G</original>
    <variation>R</variation>
    <location>
        <position position="67"/>
    </location>
</feature>
<feature type="sequence variant" id="VAR_012903" description="In LYNCH2; dbSNP:rs63750206." evidence="7 90">
    <original>G</original>
    <variation>W</variation>
    <location>
        <position position="67"/>
    </location>
</feature>
<feature type="sequence variant" id="VAR_004440" description="In LYNCH2; decreased mismatch repair activity; dbSNP:rs63750281." evidence="41">
    <original>I</original>
    <variation>N</variation>
    <location>
        <position position="68"/>
    </location>
</feature>
<feature type="sequence variant" id="VAR_004441" description="In LYNCH2; decreased mismatch repair activity; dbSNP:rs63751661." evidence="10">
    <original>R</original>
    <variation>K</variation>
    <location>
        <position position="69"/>
    </location>
</feature>
<feature type="sequence variant" id="VAR_043393" description="In LYNCH2; decreased mismatch repair activity; loss of protein expression." evidence="47 58">
    <location>
        <position position="71"/>
    </location>
</feature>
<feature type="sequence variant" id="VAR_004442" description="In LYNCH2; decreased mismatch repair activity; loss of nuclear localization; normal interaction with PMS2; dbSNP:rs63749859." evidence="11 25 47 55 58">
    <original>C</original>
    <variation>R</variation>
    <location>
        <position position="77"/>
    </location>
</feature>
<feature type="sequence variant" id="VAR_012904" description="In CRC; sporadic; early onset; dbSNP:rs63750437." evidence="75">
    <original>C</original>
    <variation>Y</variation>
    <location>
        <position position="77"/>
    </location>
</feature>
<feature type="sequence variant" id="VAR_012905" description="In LYNCH2; decreased mismatch repair activity; dbSNP:rs63749990." evidence="21 47 58">
    <original>F</original>
    <variation>V</variation>
    <location>
        <position position="80"/>
    </location>
</feature>
<feature type="sequence variant" id="VAR_012906" description="In LYNCH2; decreased mismatch repair activity; dbSNP:rs63750641." evidence="3 47 58">
    <original>K</original>
    <variation>E</variation>
    <location>
        <position position="84"/>
    </location>
</feature>
<feature type="sequence variant" id="VAR_004443" description="Normal interaction with PMS2; no decrease in mismatch repair activity; no effect on nuclear localization; dbSNP:rs41295282." evidence="12 25 47 53 56 58 59">
    <original>S</original>
    <variation>G</variation>
    <location>
        <position position="93"/>
    </location>
</feature>
<feature type="sequence variant" id="VAR_054523" description="Risk factor for LYNCH2; no effect on MLH1 splicing; dbSNP:rs267607725." evidence="55">
    <original>G</original>
    <variation>S</variation>
    <location>
        <position position="98"/>
    </location>
</feature>
<feature type="sequence variant" id="VAR_022664" description="In LYNCH2; no effect on MLH1 splicing; dbSNP:rs267607727." evidence="39 55">
    <original>G</original>
    <variation>D</variation>
    <location>
        <position position="101"/>
    </location>
</feature>
<feature type="sequence variant" id="VAR_054524" description="In LYNCH2; no effect on MLH1 splicing; dbSNP:rs267607726." evidence="55">
    <original>G</original>
    <variation>S</variation>
    <location>
        <position position="101"/>
    </location>
</feature>
<feature type="sequence variant" id="VAR_043394" description="In LYNCH2; dbSNP:rs63750453." evidence="52">
    <original>E</original>
    <variation>K</variation>
    <location>
        <position position="102"/>
    </location>
</feature>
<feature type="sequence variant" id="VAR_043395" description="In gastric cancer; uncertain significance; dbSNP:rs63750297." evidence="30">
    <original>S</original>
    <variation>R</variation>
    <location>
        <position position="106"/>
    </location>
</feature>
<feature type="sequence variant" id="VAR_004444" description="In LYNCH2; decreased mismatch repair activity; normal interaction with PMS2; loss of protein expression; loss of nuclear localization; dbSNP:rs63750507." evidence="25 47 58">
    <original>I</original>
    <variation>R</variation>
    <location>
        <position position="107"/>
    </location>
</feature>
<feature type="sequence variant" id="VAR_076341" description="In LYNCH2; decreased mismatch repair activity; no effect on nuclear localization; dbSNP:rs587779004." evidence="56 59">
    <original>H</original>
    <variation>P</variation>
    <location>
        <position position="109"/>
    </location>
</feature>
<feature type="sequence variant" id="VAR_043396" description="In gastric cancer; uncertain significance; dbSNP:rs63749803." evidence="30">
    <original>H</original>
    <variation>Q</variation>
    <location>
        <position position="109"/>
    </location>
</feature>
<feature type="sequence variant" id="VAR_076342" description="In LYNCH2; decreased mismatch repair activity; dbSNP:rs587779005." evidence="56 59">
    <original>A</original>
    <variation>P</variation>
    <location>
        <position position="111"/>
    </location>
</feature>
<feature type="sequence variant" id="VAR_012907" description="In LYNCH2; dbSNP:rs63750539." evidence="14 48">
    <original>A</original>
    <variation>V</variation>
    <location>
        <position position="111"/>
    </location>
</feature>
<feature type="sequence variant" id="VAR_054525" description="Risk factor for LYNCH2; no effect on MLH1 splicing; dbSNP:rs63750465." evidence="55">
    <original>T</original>
    <variation>K</variation>
    <location>
        <position position="116"/>
    </location>
</feature>
<feature type="sequence variant" id="VAR_079812" description="No effect on protein expression; dbSNP:rs63750465." evidence="61">
    <original>T</original>
    <variation>R</variation>
    <location>
        <position position="116"/>
    </location>
</feature>
<feature type="sequence variant" id="VAR_004445" description="In LYNCH2; decreased mismatch repair activity; no effect on MLH1 splicing; fails to interact with PMS2 and EXO1; loss of nuclear localization; dbSNP:rs63750781." evidence="7 20 24 31 32 33 48 55 56 59 67">
    <original>T</original>
    <variation>M</variation>
    <location>
        <position position="117"/>
    </location>
</feature>
<feature type="sequence variant" id="VAR_004446" description="In LYNCH2; decreased mismatch repair activity; dbSNP:rs63750781." evidence="4">
    <original>T</original>
    <variation>R</variation>
    <location>
        <position position="117"/>
    </location>
</feature>
<feature type="sequence variant" id="VAR_054526" description="Risk factor for LYNCH2; no effect on MLH1 splicing; dbSNP:rs200076893." evidence="55">
    <original>Y</original>
    <variation>N</variation>
    <location>
        <position position="126"/>
    </location>
</feature>
<feature type="sequence variant" id="VAR_012908" description="In LYNCH2; dbSNP:rs63750866." evidence="79">
    <original>A</original>
    <variation>P</variation>
    <location>
        <position position="128"/>
    </location>
</feature>
<feature type="sequence variant" id="VAR_022665" description="Decreased but not abolished ATPase activity; dbSNP:rs28930073." evidence="44">
    <original>D</original>
    <variation>H</variation>
    <location>
        <position position="132"/>
    </location>
</feature>
<feature type="sequence variant" id="VAR_043397" description="In LYNCH2; decreased mismatch repair activity; loss of protein expression; loss of nuclear localization; dbSNP:rs63750891." evidence="47 58">
    <original>L</original>
    <variation>R</variation>
    <location>
        <position position="155"/>
    </location>
</feature>
<feature type="sequence variant" id="VAR_012909" description="In LYNCH2; incomplete; dbSNP:rs63750211." evidence="7 84">
    <original>R</original>
    <variation>G</variation>
    <location>
        <position position="182"/>
    </location>
</feature>
<feature type="sequence variant" id="VAR_022666" description="In LYNCH2; dbSNP:rs587779021." evidence="39">
    <original>R</original>
    <variation>K</variation>
    <location>
        <position position="182"/>
    </location>
</feature>
<feature type="sequence variant" id="VAR_004447" description="In LYNCH2; decreased mismatch repair activity; loss of protein expression; loss of nuclear localization; no effect on MLH1 splicing; dbSNP:rs63750515." evidence="24 47 58">
    <original>V</original>
    <variation>G</variation>
    <location>
        <position position="185"/>
    </location>
</feature>
<feature type="sequence variant" id="VAR_043398" description="In LYNCH2; uncertain significance; dbSNP:rs63750012." evidence="37">
    <original>V</original>
    <variation>L</variation>
    <location>
        <position position="185"/>
    </location>
</feature>
<feature type="sequence variant" id="VAR_004448" description="In LYNCH2; dbSNP:rs63751021." evidence="11">
    <original>S</original>
    <variation>P</variation>
    <location>
        <position position="193"/>
    </location>
</feature>
<feature type="sequence variant" id="VAR_079813" description="No effect on protein expression; dbSNP:rs2308317." evidence="61">
    <original>V</original>
    <variation>L</variation>
    <location>
        <position position="213"/>
    </location>
</feature>
<feature type="sequence variant" id="VAR_012910" description="No effect on MLH1 splicing; dbSNP:rs2308317." evidence="13 26 47 55 58 91">
    <original>V</original>
    <variation>M</variation>
    <location>
        <position position="213"/>
    </location>
</feature>
<feature type="sequence variant" id="VAR_054527" description="Risk factor for LYNCH2; no effect on MLH1 splicing; dbSNP:rs267607775." evidence="55">
    <original>N</original>
    <variation>S</variation>
    <location>
        <position position="215"/>
    </location>
</feature>
<feature type="sequence variant" id="VAR_054528" description="Risk factor for LYNCH2; no effect on MLH1 splicing; dbSNP:rs267607776." evidence="55">
    <original>I</original>
    <variation>S</variation>
    <location>
        <position position="216"/>
    </location>
</feature>
<feature type="sequence variant" id="VAR_004449" description="In LYNCH2; uncertain significance; no decrease in mismatch repair activity; dbSNP:rs4986984." evidence="24 45 72 86">
    <original>R</original>
    <variation>C</variation>
    <location>
        <position position="217"/>
    </location>
</feature>
<feature type="sequence variant" id="VAR_020469" description="In dbSNP:rs4986984.">
    <original>R</original>
    <variation>G</variation>
    <location>
        <position position="217"/>
    </location>
</feature>
<feature type="sequence variant" id="VAR_004450" description="No decrease in mismatch repair activity; no effect on nuclear localization; dbSNP:rs1799977." evidence="4 14 23 24 29 31 32 47 56 58 59 75 77 78 79 89 91">
    <original>I</original>
    <variation>V</variation>
    <location>
        <position position="219"/>
    </location>
</feature>
<feature type="sequence variant" id="VAR_004452" description="In LYNCH2.">
    <location>
        <begin position="226"/>
        <end position="295"/>
    </location>
</feature>
<feature type="sequence variant" id="VAR_004451" description="In LYNCH2; dbSNP:rs63751711." evidence="67">
    <original>R</original>
    <variation>L</variation>
    <location>
        <position position="226"/>
    </location>
</feature>
<feature type="sequence variant" id="VAR_076343" description="In LYNCH2; loss of nuclear localization." evidence="59">
    <location>
        <position position="233"/>
    </location>
</feature>
<feature type="sequence variant" id="VAR_043399" description="In LYNCH2; uncertain significance; dbSNP:rs63750696." evidence="30">
    <original>E</original>
    <variation>G</variation>
    <location>
        <position position="234"/>
    </location>
</feature>
<feature type="sequence variant" id="VAR_012911" description="In LYNCH2; decreased mismatch repair activity; dbSNP:rs63750303." evidence="24 37 79">
    <original>G</original>
    <variation>D</variation>
    <location>
        <position position="244"/>
    </location>
</feature>
<feature type="sequence variant" id="VAR_012912" description="In CRC; sporadic; somatic mutation; uncertain significance; dbSNP:rs63750303." evidence="78">
    <original>G</original>
    <variation>V</variation>
    <location>
        <position position="244"/>
    </location>
</feature>
<feature type="sequence variant" id="VAR_043400" description="In LYNCH2; decreased mismatch repair activity; loss of protein expression; loss of nuclear localization; dbSNP:rs63750948." evidence="31 47 58">
    <original>S</original>
    <variation>P</variation>
    <location>
        <position position="247"/>
    </location>
</feature>
<feature type="sequence variant" id="VAR_054529" description="In LYNCH2; uncertain significance; no effect on MLH1 splicing; dbSNP:rs63750642." evidence="55">
    <original>L</original>
    <variation>F</variation>
    <location>
        <position position="260"/>
    </location>
</feature>
<feature type="sequence variant" id="VAR_043401" description="In CRC; dbSNP:rs63751283." evidence="16">
    <original>L</original>
    <variation>R</variation>
    <location>
        <position position="260"/>
    </location>
</feature>
<feature type="sequence variant" id="VAR_012913" description="In LYNCH2." evidence="89">
    <location>
        <position position="262"/>
    </location>
</feature>
<feature type="sequence variant" id="VAR_079814" description="No effect on protein expression; dbSNP:rs63751664." evidence="61">
    <original>H</original>
    <variation>L</variation>
    <location>
        <position position="264"/>
    </location>
</feature>
<feature type="sequence variant" id="VAR_043402" description="In LYNCH2; dbSNP:rs63751597." evidence="6">
    <original>H</original>
    <variation>Y</variation>
    <location>
        <position position="264"/>
    </location>
</feature>
<feature type="sequence variant" id="VAR_054530" description="In LYNCH2; results in partial MLH1 exon 10 skipping on ex vivo splicing assay; decreased mismatch repair activity; no effect on nuclear localization; dbSNP:rs63751194." evidence="55 56 59">
    <original>R</original>
    <variation>C</variation>
    <location>
        <position position="265"/>
    </location>
</feature>
<feature type="sequence variant" id="VAR_012914" description="Risk factor for LYNCH2; results in partial MLH1 exon 10 skipping on ex vivo splicing assay; decreased mismatch repair activity; dbSNP:rs63751448." evidence="8 24 55 74">
    <original>R</original>
    <variation>H</variation>
    <location>
        <position position="265"/>
    </location>
</feature>
<feature type="sequence variant" id="VAR_076344" description="In LYNCH2; decreased mismatch repair activity; dbSNP:rs63751194." evidence="56">
    <original>R</original>
    <variation>S</variation>
    <location>
        <position position="265"/>
    </location>
</feature>
<feature type="sequence variant" id="VAR_012915" description="In CRC; benign; dbSNP:rs63750650." evidence="87">
    <original>E</original>
    <variation>G</variation>
    <location>
        <position position="268"/>
    </location>
</feature>
<feature type="sequence variant" id="VAR_043403" description="In LYNCH2; likely benign; dbSNP:rs63750360." evidence="45">
    <original>A</original>
    <variation>G</variation>
    <location>
        <position position="282"/>
    </location>
</feature>
<feature type="sequence variant" id="VAR_043404" description="In LYNCH2; uncertain significance; dbSNP:rs63750517." evidence="32 48">
    <original>L</original>
    <variation>P</variation>
    <location>
        <position position="292"/>
    </location>
</feature>
<feature type="sequence variant" id="VAR_012916" description="In LYNCH2; uncertain significance; dbSNP:rs63750144." evidence="84">
    <original>S</original>
    <variation>T</variation>
    <location>
        <position position="295"/>
    </location>
</feature>
<feature type="sequence variant" id="VAR_043405" description="In LYNCH2; dbSNP:rs63750993." evidence="16">
    <original>D</original>
    <variation>V</variation>
    <location>
        <position position="304"/>
    </location>
</feature>
<feature type="sequence variant" id="VAR_038025" description="In dbSNP:rs267607808." evidence="53">
    <original>P</original>
    <variation>S</variation>
    <location>
        <position position="309"/>
    </location>
</feature>
<feature type="sequence variant" id="VAR_054531" description="Risk factor for LYNCH2; no effect on MLH1 splicing; dbSNP:rs267607811." evidence="55">
    <original>E</original>
    <variation>D</variation>
    <location>
        <position position="320"/>
    </location>
</feature>
<feature type="sequence variant" id="VAR_043406" description="In LYNCH2; uncertain significance; dbSNP:rs63750286." evidence="30">
    <original>S</original>
    <variation>I</variation>
    <location>
        <position position="321"/>
    </location>
</feature>
<feature type="sequence variant" id="VAR_043407" description="In CRC." evidence="38">
    <location>
        <begin position="325"/>
        <end position="327"/>
    </location>
</feature>
<feature type="sequence variant" id="VAR_012917" description="In dbSNP:rs63750268." evidence="78">
    <original>R</original>
    <variation>Q</variation>
    <location>
        <position position="325"/>
    </location>
</feature>
<feature type="sequence variant" id="VAR_004453" description="In LYNCH2; benign; no decrease in mismatch repair activity; dbSNP:rs63751049." evidence="8 24 55">
    <original>V</original>
    <variation>A</variation>
    <location>
        <position position="326"/>
    </location>
</feature>
<feature type="sequence variant" id="VAR_012918" description="In LYNCH2; loss of protein expression; loss of nuclear localization; dbSNP:rs63750710." evidence="3 21 47 58 80">
    <original>H</original>
    <variation>P</variation>
    <location>
        <position position="329"/>
    </location>
</feature>
<feature type="sequence variant" id="VAR_043408" description="In LYNCH2; results in weak MLH1 exon 11 skipping on ex vivo splicing assay; decreased mismatch repair activity; loss of protein expression; loss of nuclear localization; dbSNP:rs63751197." evidence="47 55 58">
    <location>
        <position position="330"/>
    </location>
</feature>
<feature type="sequence variant" id="VAR_043409" description="In LYNCH2; dbSNP:rs63751467." evidence="28">
    <original>N</original>
    <variation>S</variation>
    <location>
        <position position="338"/>
    </location>
</feature>
<feature type="sequence variant" id="VAR_022667" description="In LYNCH2; dbSNP:rs143009528." evidence="39">
    <original>Y</original>
    <variation>C</variation>
    <location>
        <position position="379"/>
    </location>
</feature>
<feature type="sequence variant" id="VAR_004454" description="Probable risk factor for HNPCC in some populations; dbSNP:rs63750447." evidence="14 70 85">
    <original>V</original>
    <variation>D</variation>
    <location>
        <position position="384"/>
    </location>
</feature>
<feature type="sequence variant" id="VAR_043410" description="In LYNCH2; uncertain significance; dbSNP:rs63750760." evidence="26">
    <original>R</original>
    <variation>C</variation>
    <location>
        <position position="385"/>
    </location>
</feature>
<feature type="sequence variant" id="VAR_043411" description="In LYNCH2; uncertain significance; dbSNP:rs63750430." evidence="8">
    <original>R</original>
    <variation>P</variation>
    <location>
        <position position="385"/>
    </location>
</feature>
<feature type="sequence variant" id="VAR_076345" description="In LYNCH2; uncertain significance; no effect on nuclear localization; normal interaction with PMS2 and EXO1; dbSNP:rs61751644." evidence="59">
    <original>R</original>
    <variation>W</variation>
    <location>
        <position position="389"/>
    </location>
</feature>
<feature type="sequence variant" id="VAR_076346" description="No decrease in mismatch repair activity; no effect on nuclear localization; dbSNP:rs587778897." evidence="56 59">
    <original>P</original>
    <variation>S</variation>
    <location>
        <position position="403"/>
    </location>
</feature>
<feature type="sequence variant" id="VAR_012919" description="No decrease in mismatch repair activity; no effect on nuclear localization; dbSNP:rs41294980." evidence="8 53 56 59 78">
    <original>S</original>
    <variation>N</variation>
    <location>
        <position position="406"/>
    </location>
</feature>
<feature type="sequence variant" id="VAR_079815" description="No effect on protein expression; dbSNP:rs370687064." evidence="61">
    <original>R</original>
    <variation>T</variation>
    <location>
        <position position="423"/>
    </location>
</feature>
<feature type="sequence variant" id="VAR_012920" description="In LYNCH2; benign; dbSNP:rs63750365." evidence="48 83">
    <original>A</original>
    <variation>T</variation>
    <location>
        <position position="441"/>
    </location>
</feature>
<feature type="sequence variant" id="VAR_043412" description="In LYNCH2; uncertain significance; no decrease in mismatch repair activity; no effect on nuclear localization; dbSNP:rs34213726." evidence="47 56 58 59">
    <original>K</original>
    <variation>Q</variation>
    <location>
        <position position="443"/>
    </location>
</feature>
<feature type="sequence variant" id="VAR_076347" description="In LYNCH2; uncertain significance; dbSNP:rs202038499." evidence="58">
    <original>E</original>
    <variation>A</variation>
    <location>
        <position position="460"/>
    </location>
</feature>
<feature type="sequence variant" id="VAR_043413" description="In CRC; uncertain significance; dbSNP:rs63750498." evidence="30">
    <original>R</original>
    <variation>I</variation>
    <location>
        <position position="472"/>
    </location>
</feature>
<feature type="sequence variant" id="VAR_043414" description="In LYNCH2; uncertain significance; dbSNP:rs63751083." evidence="52 55">
    <original>R</original>
    <variation>Q</variation>
    <location>
        <position position="474"/>
    </location>
</feature>
<feature type="sequence variant" id="VAR_054532" description="Risk factor for LYNCH2; no effect on MLH1 splicing; dbSNP:rs147939838." evidence="55">
    <original>R</original>
    <variation>W</variation>
    <location>
        <position position="474"/>
    </location>
</feature>
<feature type="sequence variant" id="VAR_043415" description="In LYNCH2; dbSNP:rs63750956." evidence="4">
    <original>D</original>
    <variation>E</variation>
    <location>
        <position position="485"/>
    </location>
</feature>
<feature type="sequence variant" id="VAR_043416" description="In LYNCH2; uncertain significance; dbSNP:rs63750314." evidence="30">
    <original>D</original>
    <variation>H</variation>
    <location>
        <position position="485"/>
    </location>
</feature>
<feature type="sequence variant" id="VAR_004455" description="In LYNCH2; also found in sporadic colorectal cancer; dbSNP:rs63751145." evidence="73">
    <original>A</original>
    <variation>T</variation>
    <location>
        <position position="492"/>
    </location>
</feature>
<feature type="sequence variant" id="VAR_004456" description="In LYNCH2; dbSNP:rs63749909." evidence="69">
    <original>V</original>
    <variation>A</variation>
    <location>
        <position position="506"/>
    </location>
</feature>
<feature type="sequence variant" id="VAR_054533" description="Risk factor for LYNCH2; no effect on MLH1 splicing; dbSNP:rs267607843." evidence="55">
    <original>A</original>
    <variation>D</variation>
    <location>
        <position position="539"/>
    </location>
</feature>
<feature type="sequence variant" id="VAR_004457" description="In LYNCH2; type II; decreased mismatch repair activity; dbSNP:rs63750511." evidence="45 66 72">
    <original>Q</original>
    <variation>L</variation>
    <location>
        <position position="542"/>
    </location>
</feature>
<feature type="sequence variant" id="VAR_043417" description="In LYNCH2; dbSNP:rs63750511." evidence="45">
    <original>Q</original>
    <variation>P</variation>
    <location>
        <position position="542"/>
    </location>
</feature>
<feature type="sequence variant" id="VAR_012921" description="In LYNCH2; no effect on MLH1 splicing; dbSNP:rs63750289." evidence="45 55 72">
    <original>L</original>
    <variation>P</variation>
    <location>
        <position position="549"/>
    </location>
</feature>
<feature type="sequence variant" id="VAR_043418" description="In LYNCH2; decreased mismatch repair activity; defective in interaction with PMS2 and EXO1; loss of protein expression; may lose nuclear localization; dbSNP:rs63750193." evidence="47 56 58 59">
    <original>L</original>
    <variation>P</variation>
    <location>
        <position position="550"/>
    </location>
</feature>
<feature type="sequence variant" id="VAR_012922" description="In LYNCH2; no effect on MLH1 splicing; dbSNP:rs63750271." evidence="55 84 89">
    <original>N</original>
    <variation>T</variation>
    <location>
        <position position="551"/>
    </location>
</feature>
<feature type="sequence variant" id="VAR_022668" description="In LYNCH2; uncertain significance; dbSNP:rs63750059." evidence="39">
    <original>L</original>
    <variation>R</variation>
    <location>
        <position position="559"/>
    </location>
</feature>
<feature type="sequence variant" id="VAR_012923" description="In LYNCH2; dbSNP:rs63750062." evidence="89">
    <original>I</original>
    <variation>F</variation>
    <location>
        <position position="565"/>
    </location>
</feature>
<feature type="sequence variant" id="VAR_004458" description="In LYNCH2; type I; abrogates interaction with EXO1; loss of protein expression; dbSNP:rs63751608." evidence="19 45 64 66 72">
    <original>L</original>
    <variation>P</variation>
    <location>
        <position position="574"/>
    </location>
</feature>
<feature type="sequence variant" id="VAR_076348" description="In LYNCH2; decreased mismatch repair activity; defective in interaction with PMS2." evidence="58">
    <location>
        <begin position="578"/>
        <end position="632"/>
    </location>
</feature>
<feature type="sequence variant" id="VAR_004459" description="In LYNCH2 and CRC; benign; no decrease in mismatch repair activity; no effect on nuclear localization; dbSNP:rs63751612." evidence="9 56 59">
    <original>E</original>
    <variation>G</variation>
    <location>
        <position position="578"/>
    </location>
</feature>
<feature type="sequence variant" id="VAR_076349" description="In LYNCH2; decreased mismatch repair activity; no effect on nuclear localization; dbSNP:rs63751713." evidence="56 59">
    <original>L</original>
    <variation>F</variation>
    <location>
        <position position="582"/>
    </location>
</feature>
<feature type="sequence variant" id="VAR_004460" description="In LYNCH2; type II; dbSNP:rs63751713." evidence="66">
    <original>L</original>
    <variation>V</variation>
    <location>
        <position position="582"/>
    </location>
</feature>
<feature type="sequence variant" id="VAR_054534" description="Risk factor for LYNCH2; no effect on MLH1 splicing; dbSNP:rs267607865." evidence="55">
    <original>L</original>
    <variation>R</variation>
    <location>
        <position position="585"/>
    </location>
</feature>
<feature type="sequence variant" id="VAR_015689" description="In LYNCH2; dbSNP:rs63751176." evidence="35">
    <original>A</original>
    <variation>P</variation>
    <location>
        <position position="586"/>
    </location>
</feature>
<feature type="sequence variant" id="VAR_012924" description="In LYNCH2; dbSNP:rs63750575." evidence="14">
    <original>L</original>
    <variation>P</variation>
    <location>
        <position position="588"/>
    </location>
</feature>
<feature type="sequence variant" id="VAR_043419" description="In LYNCH2; decreased mismatch repair activity; loss of interaction with PMS2 and EXO1; loss of protein expression; may lose nuclear localization; dbSNP:rs63750016." evidence="47 56 58 59 64">
    <original>A</original>
    <variation>D</variation>
    <location>
        <position position="589"/>
    </location>
</feature>
<feature type="sequence variant" id="VAR_043420" description="In LYNCH2.">
    <location>
        <position position="596"/>
    </location>
</feature>
<feature type="sequence variant" id="VAR_043421" description="In CRC; uncertain significance; dbSNP:rs63750718." evidence="36">
    <original>D</original>
    <variation>G</variation>
    <location>
        <position position="601"/>
    </location>
</feature>
<feature type="sequence variant" id="VAR_012925" description="In LYNCH2; likely benign; no effect on MLH1 splicing; dbSNP:rs63750876." evidence="21 28 55">
    <original>P</original>
    <variation>R</variation>
    <location>
        <position position="603"/>
    </location>
</feature>
<feature type="sequence variant" id="VAR_012926" description="In LYNCH2; likely benign; no effect on MLH1 splicing; dbSNP:rs41295284." evidence="13 18 26 53 55">
    <original>L</original>
    <variation>H</variation>
    <location>
        <position position="607"/>
    </location>
</feature>
<feature type="sequence variant" id="VAR_043422" description="In LYNCH2; loss of protein expression; loss of nuclear localization." evidence="47 58">
    <location>
        <position position="612"/>
    </location>
</feature>
<feature type="sequence variant" id="VAR_004461" description="In LYNCH2 and MMRCS1; abrogates interaction with EXO1; loss of protein expression; loss of nuclear localization; no effect on MLH1 splicing." evidence="7 19 39 41 47 58 65 68 73 74 82">
    <location>
        <position position="616"/>
    </location>
</feature>
<feature type="sequence variant" id="VAR_004462" description="In LYNCH2; benign; interacts weakly with PMS2; no decrease in mismatch repair activity; no effect on nuclear localization; requires 2 nucleotide substitutions; dbSNP:rs35502531." evidence="9 13 21 27 31 33 47 53 56 58 59 82">
    <original>K</original>
    <variation>A</variation>
    <location>
        <position position="618"/>
    </location>
</feature>
<feature type="sequence variant" id="VAR_043424" description="In CRC; likely benign; dbSNP:rs63750449." evidence="38">
    <original>K</original>
    <variation>R</variation>
    <location>
        <position position="618"/>
    </location>
</feature>
<feature type="sequence variant" id="VAR_004463" description="In LYNCH2; benign; type II; loss of nuclear localization; dbSNP:rs63750449." evidence="8 26 28 47 58 66 73">
    <original>K</original>
    <variation>T</variation>
    <location>
        <position position="618"/>
    </location>
</feature>
<feature type="sequence variant" id="VAR_043423" description="In LYNCH2; dbSNP:rs63751247." evidence="48">
    <location>
        <position position="618"/>
    </location>
</feature>
<feature type="sequence variant" id="VAR_054535" description="In LYNCH2; no effect on MLH1 splicing; dbSNP:rs267607866." evidence="55">
    <original>A</original>
    <variation>P</variation>
    <location>
        <position position="619"/>
    </location>
</feature>
<feature type="sequence variant" id="VAR_012927" description="In LYNCH2; dbSNP:rs63750693." evidence="22">
    <original>L</original>
    <variation>H</variation>
    <location>
        <position position="622"/>
    </location>
</feature>
<feature type="sequence variant" id="VAR_043425" description="In LYNCH2; uncertain significance; dbSNP:rs587778951." evidence="48">
    <original>A</original>
    <variation>P</variation>
    <location>
        <position position="623"/>
    </location>
</feature>
<feature type="sequence variant" id="VAR_004464" description="In LYNCH2." evidence="76">
    <original>FS</original>
    <variation>ST</variation>
    <location>
        <begin position="626"/>
        <end position="627"/>
    </location>
</feature>
<feature type="sequence variant" id="VAR_043426" description="In LYNCH2; uncertain significance; dbSNP:rs63750240." evidence="30">
    <original>D</original>
    <variation>A</variation>
    <location>
        <position position="631"/>
    </location>
</feature>
<feature type="sequence variant" id="VAR_076350" description="In LYNCH2; decreased mismatch repair activity; defective in interaction with PMS2; loss of protein expression; loss of nuclear localization." evidence="58">
    <location>
        <begin position="633"/>
        <end position="663"/>
    </location>
</feature>
<feature type="sequence variant" id="VAR_043427" description="In gastric cancer; uncertain significance; dbSNP:rs63751047." evidence="30">
    <original>N</original>
    <variation>K</variation>
    <location>
        <position position="635"/>
    </location>
</feature>
<feature type="sequence variant" id="VAR_043428" description="In LYNCH2; dbSNP:rs63750825." evidence="45">
    <original>L</original>
    <variation>P</variation>
    <location>
        <position position="636"/>
    </location>
</feature>
<feature type="sequence variant" id="VAR_054536" description="Risk factor for LYNCH2; no effect on MLH1 splicing; dbSNP:rs267607875." evidence="55">
    <original>P</original>
    <variation>L</variation>
    <location>
        <position position="640"/>
    </location>
</feature>
<feature type="sequence variant" id="VAR_043429" description="In LYNCH2; no effect on MLH1 splicing; dbSNP:rs63749792." evidence="45 55">
    <original>P</original>
    <variation>S</variation>
    <location>
        <position position="640"/>
    </location>
</feature>
<feature type="sequence variant" id="VAR_043430" description="In LYNCH2; defective in interaction with PMS2 and EXO1; no decrease in mismatch repair activity; dbSNP:rs35045067." evidence="27 47 56 58 59">
    <original>Y</original>
    <variation>C</variation>
    <location>
        <position position="646"/>
    </location>
</feature>
<feature type="sequence variant" id="VAR_012928" description="In LYNCH2; defective in interaction with PMS2 and EXO1; may lose nuclear localization; loss of protein expression; no decrease in mismatch repair activity; dbSNP:rs63750610." evidence="21 47 56 58 59">
    <original>P</original>
    <variation>L</variation>
    <location>
        <position position="648"/>
    </location>
</feature>
<feature type="sequence variant" id="VAR_022669" description="In LYNCH2; the protein is unstable; loss of nuclear localization; loss of protein expression; no decrease in mismatch repair activity; dbSNP:rs63750899." evidence="26 43 47 58">
    <original>P</original>
    <variation>S</variation>
    <location>
        <position position="648"/>
    </location>
</feature>
<feature type="sequence variant" id="VAR_043431" description="In LYNCH2; decreased mismatch repair activity; defective in interaction with PMS2 and EXO1; loss of protein expression; may lose nuclear localization; dbSNP:rs63750726." evidence="47 56 58 59">
    <original>P</original>
    <variation>L</variation>
    <location>
        <position position="654"/>
    </location>
</feature>
<feature type="sequence variant" id="VAR_043432" description="In LYNCH2; likely benign; also found in an endometrial cancer sample; no effect on MLH1 splicing; dbSNP:rs55907433." evidence="29 55">
    <original>I</original>
    <variation>V</variation>
    <location>
        <position position="655"/>
    </location>
</feature>
<feature type="sequence variant" id="VAR_054537" description="In LYNCH2; no effect on MLH1 splicing; dbSNP:rs267607876." evidence="55">
    <original>F</original>
    <variation>S</variation>
    <location>
        <position position="656"/>
    </location>
</feature>
<feature type="sequence variant" id="VAR_043433" description="In LYNCH2; uncertain significance." evidence="48">
    <location>
        <position position="657"/>
    </location>
</feature>
<feature type="sequence variant" id="VAR_012929" description="In LYNCH2; dbSNP:rs63749900." evidence="13 19">
    <original>R</original>
    <variation>L</variation>
    <location>
        <position position="659"/>
    </location>
</feature>
<feature type="sequence variant" id="VAR_004465" description="In LYNCH2; interacts only very weakly with PMS2; abrogates interaction with EXO1; decreased mismatch repair activity; may lose nuclear localization; dbSNP:rs63749900." evidence="25 47 56 58 59 82">
    <original>R</original>
    <variation>P</variation>
    <location>
        <position position="659"/>
    </location>
</feature>
<feature type="sequence variant" id="VAR_043434" description="In LYNCH2; uncertain significance; dbSNP:rs63749900." evidence="47 58">
    <original>R</original>
    <variation>Q</variation>
    <location>
        <position position="659"/>
    </location>
</feature>
<feature type="sequence variant" id="VAR_012930" description="In LYNCH2; dbSNP:rs587778964." evidence="21 23">
    <original>T</original>
    <variation>P</variation>
    <location>
        <position position="662"/>
    </location>
</feature>
<feature type="sequence variant" id="VAR_054538" description="In LYNCH2; uncertain significance; no effect on MLH1 splicing; dbSNP:rs267607887." evidence="55">
    <original>W</original>
    <variation>R</variation>
    <location>
        <position position="666"/>
    </location>
</feature>
<feature type="sequence variant" id="VAR_004466" description="In LYNCH2 and CRC; abrogates interaction with EXO1; no decrease in mismatch repair activity; dbSNP:rs63750217." evidence="19 32 47 48 53 55 58">
    <original>A</original>
    <variation>T</variation>
    <location>
        <position position="681"/>
    </location>
</feature>
<feature type="sequence variant" id="VAR_012931" description="In LYNCH2; dbSNP:rs63751275." evidence="22 32 48 58">
    <original>R</original>
    <variation>W</variation>
    <location>
        <position position="687"/>
    </location>
</feature>
<feature type="sequence variant" id="VAR_012932" description="In LYNCH2; benign; dbSNP:rs63750702." evidence="21 53 55">
    <original>Q</original>
    <variation>R</variation>
    <location>
        <position position="689"/>
    </location>
</feature>
<feature type="sequence variant" id="VAR_012933" description="No decrease in mismatch repair activity; no effect on nuclear localization; dbSNP:rs35831931." evidence="8 21 31 47 53 56 58 59 89">
    <original>V</original>
    <variation>M</variation>
    <location>
        <position position="716"/>
    </location>
</feature>
<feature type="sequence variant" id="VAR_004467" description="In LYNCH2; benign; dbSNP:rs2020873." evidence="5 28 53">
    <original>H</original>
    <variation>Y</variation>
    <location>
        <position position="718"/>
    </location>
</feature>
<feature type="sequence variant" id="VAR_043435" description="In LYNCH2.">
    <original>I</original>
    <variation>INVFHI</variation>
    <location>
        <position position="719"/>
    </location>
</feature>
<feature type="sequence variant" id="VAR_043436" description="In LYNCH2; dbSNP:rs63749875." evidence="45">
    <original>L</original>
    <variation>M</variation>
    <location>
        <position position="724"/>
    </location>
</feature>
<feature type="sequence variant" id="VAR_079816" description="Reduces by 60% protein expression; dbSNP:rs566928243." evidence="61">
    <original>R</original>
    <variation>H</variation>
    <location>
        <position position="725"/>
    </location>
</feature>
<feature type="sequence variant" id="VAR_004468" description="In dbSNP:rs1800149.">
    <original>L</original>
    <variation>V</variation>
    <location>
        <position position="729"/>
    </location>
</feature>
<feature type="sequence variant" id="VAR_043437" description="In CRC; dbSNP:rs267607894." evidence="38">
    <original>L</original>
    <variation>P</variation>
    <location>
        <position position="749"/>
    </location>
</feature>
<feature type="sequence variant" id="VAR_012934" description="In LYNCH2; likely benign; dbSNP:rs140195825." evidence="17 48 53">
    <original>K</original>
    <variation>R</variation>
    <location>
        <position position="751"/>
    </location>
</feature>
<feature type="sequence variant" id="VAR_012935" description="In HNPCC; incomplete; dbSNP:rs267607900." evidence="7">
    <original>R</original>
    <variation>W</variation>
    <location>
        <position position="755"/>
    </location>
</feature>
<feature type="mutagenesis site" description="Abolishes acetylation; when associated with Q-241, Q-361 and Q-377." evidence="63">
    <original>K</original>
    <variation>Q</variation>
    <location>
        <position position="33"/>
    </location>
</feature>
<feature type="mutagenesis site" description="Abolishes acetylation and binding affinity for MSH6 and MSH2; when associated with R-241, R-361 and R-377." evidence="63">
    <original>K</original>
    <variation>R</variation>
    <location>
        <position position="33"/>
    </location>
</feature>
<feature type="mutagenesis site" description="Abolishes acetylation; when associated with Q-33, Q-361 and Q-377." evidence="63">
    <original>K</original>
    <variation>Q</variation>
    <location>
        <position position="241"/>
    </location>
</feature>
<feature type="mutagenesis site" description="Abolishes acetylation and binding affinity for MSH6 and MSH2; when associated with R-33, R-361 and R-377." evidence="63">
    <original>K</original>
    <variation>R</variation>
    <location>
        <position position="241"/>
    </location>
</feature>
<feature type="mutagenesis site" description="Abolishes acetylation; when associated with Q-33, Q-241 and Q-377." evidence="63">
    <original>K</original>
    <variation>Q</variation>
    <location>
        <position position="361"/>
    </location>
</feature>
<feature type="mutagenesis site" description="Abolishes acetylation and binding affinity for MSH6 and MSH2; when associated with R-33, R-241 and R-377." evidence="63">
    <original>K</original>
    <variation>R</variation>
    <location>
        <position position="361"/>
    </location>
</feature>
<feature type="mutagenesis site" description="Abolishes acetylation; when associated with Q-33, Q-241 and Q-361." evidence="63">
    <original>K</original>
    <variation>Q</variation>
    <location>
        <position position="377"/>
    </location>
</feature>
<feature type="mutagenesis site" description="Abolishes acetylation and binding affinity for MSH6 and MSH2; when associated with R-33, R-241 and R-361." evidence="63">
    <original>K</original>
    <variation>R</variation>
    <location>
        <position position="377"/>
    </location>
</feature>
<feature type="mutagenesis site" description="Affects binding to importins alpha, including KPNA2, hence may affect import to the nucleus." evidence="62">
    <original>K</original>
    <variation>N</variation>
    <location>
        <position position="471"/>
    </location>
</feature>
<feature type="mutagenesis site" description="Affects binding to importins alpha, including KPNA2, hence may affect import to the nucleus." evidence="62">
    <original>R</original>
    <variation>N</variation>
    <location>
        <position position="472"/>
    </location>
</feature>
<feature type="sequence conflict" description="In Ref. 6; BAG60773." evidence="93" ref="6">
    <original>L</original>
    <variation>H</variation>
    <location>
        <position position="352"/>
    </location>
</feature>
<feature type="sequence conflict" description="In Ref. 4; AAA85687." evidence="93" ref="4">
    <location>
        <begin position="708"/>
        <end position="711"/>
    </location>
</feature>
<feature type="helix" evidence="104">
    <location>
        <begin position="13"/>
        <end position="25"/>
    </location>
</feature>
<feature type="helix" evidence="104">
    <location>
        <begin position="28"/>
        <end position="41"/>
    </location>
</feature>
<feature type="strand" evidence="104">
    <location>
        <begin position="45"/>
        <end position="52"/>
    </location>
</feature>
<feature type="turn" evidence="104">
    <location>
        <begin position="53"/>
        <end position="56"/>
    </location>
</feature>
<feature type="strand" evidence="104">
    <location>
        <begin position="57"/>
        <end position="63"/>
    </location>
</feature>
<feature type="helix" evidence="104">
    <location>
        <begin position="70"/>
        <end position="72"/>
    </location>
</feature>
<feature type="turn" evidence="104">
    <location>
        <begin position="73"/>
        <end position="77"/>
    </location>
</feature>
<feature type="helix" evidence="104">
    <location>
        <begin position="103"/>
        <end position="109"/>
    </location>
</feature>
<feature type="strand" evidence="104">
    <location>
        <begin position="110"/>
        <end position="118"/>
    </location>
</feature>
<feature type="strand" evidence="104">
    <location>
        <begin position="122"/>
        <end position="131"/>
    </location>
</feature>
<feature type="strand" evidence="104">
    <location>
        <begin position="134"/>
        <end position="137"/>
    </location>
</feature>
<feature type="strand" evidence="104">
    <location>
        <begin position="140"/>
        <end position="142"/>
    </location>
</feature>
<feature type="strand" evidence="104">
    <location>
        <begin position="146"/>
        <end position="154"/>
    </location>
</feature>
<feature type="turn" evidence="104">
    <location>
        <begin position="155"/>
        <end position="158"/>
    </location>
</feature>
<feature type="helix" evidence="104">
    <location>
        <begin position="160"/>
        <end position="165"/>
    </location>
</feature>
<feature type="helix" evidence="104">
    <location>
        <begin position="169"/>
        <end position="186"/>
    </location>
</feature>
<feature type="turn" evidence="104">
    <location>
        <begin position="187"/>
        <end position="189"/>
    </location>
</feature>
<feature type="strand" evidence="104">
    <location>
        <begin position="190"/>
        <end position="196"/>
    </location>
</feature>
<feature type="strand" evidence="104">
    <location>
        <begin position="203"/>
        <end position="205"/>
    </location>
</feature>
<feature type="helix" evidence="104">
    <location>
        <begin position="212"/>
        <end position="220"/>
    </location>
</feature>
<feature type="helix" evidence="104">
    <location>
        <begin position="222"/>
        <end position="225"/>
    </location>
</feature>
<feature type="strand" evidence="104">
    <location>
        <begin position="228"/>
        <end position="235"/>
    </location>
</feature>
<feature type="turn" evidence="104">
    <location>
        <begin position="236"/>
        <end position="239"/>
    </location>
</feature>
<feature type="strand" evidence="104">
    <location>
        <begin position="240"/>
        <end position="247"/>
    </location>
</feature>
<feature type="strand" evidence="104">
    <location>
        <begin position="253"/>
        <end position="255"/>
    </location>
</feature>
<feature type="strand" evidence="104">
    <location>
        <begin position="257"/>
        <end position="262"/>
    </location>
</feature>
<feature type="helix" evidence="104">
    <location>
        <begin position="270"/>
        <end position="281"/>
    </location>
</feature>
<feature type="strand" evidence="104">
    <location>
        <begin position="291"/>
        <end position="298"/>
    </location>
</feature>
<feature type="helix" evidence="104">
    <location>
        <begin position="322"/>
        <end position="335"/>
    </location>
</feature>
<feature type="helix" evidence="103">
    <location>
        <begin position="504"/>
        <end position="516"/>
    </location>
</feature>
<feature type="helix" evidence="103">
    <location>
        <begin position="519"/>
        <end position="526"/>
    </location>
</feature>
<feature type="strand" evidence="103">
    <location>
        <begin position="529"/>
        <end position="543"/>
    </location>
</feature>
<feature type="strand" evidence="103">
    <location>
        <begin position="546"/>
        <end position="551"/>
    </location>
</feature>
<feature type="helix" evidence="103">
    <location>
        <begin position="552"/>
        <end position="566"/>
    </location>
</feature>
<feature type="strand" evidence="103">
    <location>
        <begin position="572"/>
        <end position="581"/>
    </location>
</feature>
<feature type="helix" evidence="103">
    <location>
        <begin position="582"/>
        <end position="590"/>
    </location>
</feature>
<feature type="helix" evidence="103">
    <location>
        <begin position="593"/>
        <end position="595"/>
    </location>
</feature>
<feature type="helix" evidence="103">
    <location>
        <begin position="604"/>
        <end position="626"/>
    </location>
</feature>
<feature type="strand" evidence="103">
    <location>
        <begin position="634"/>
        <end position="641"/>
    </location>
</feature>
<feature type="helix" evidence="103">
    <location>
        <begin position="650"/>
        <end position="652"/>
    </location>
</feature>
<feature type="helix" evidence="103">
    <location>
        <begin position="653"/>
        <end position="662"/>
    </location>
</feature>
<feature type="helix" evidence="103">
    <location>
        <begin position="669"/>
        <end position="684"/>
    </location>
</feature>
<feature type="helix" evidence="103">
    <location>
        <begin position="688"/>
        <end position="690"/>
    </location>
</feature>
<feature type="helix" evidence="103">
    <location>
        <begin position="712"/>
        <end position="718"/>
    </location>
</feature>
<feature type="helix" evidence="103">
    <location>
        <begin position="720"/>
        <end position="724"/>
    </location>
</feature>
<feature type="helix" evidence="103">
    <location>
        <begin position="732"/>
        <end position="735"/>
    </location>
</feature>
<feature type="strand" evidence="103">
    <location>
        <begin position="737"/>
        <end position="745"/>
    </location>
</feature>
<organism>
    <name type="scientific">Homo sapiens</name>
    <name type="common">Human</name>
    <dbReference type="NCBI Taxonomy" id="9606"/>
    <lineage>
        <taxon>Eukaryota</taxon>
        <taxon>Metazoa</taxon>
        <taxon>Chordata</taxon>
        <taxon>Craniata</taxon>
        <taxon>Vertebrata</taxon>
        <taxon>Euteleostomi</taxon>
        <taxon>Mammalia</taxon>
        <taxon>Eutheria</taxon>
        <taxon>Euarchontoglires</taxon>
        <taxon>Primates</taxon>
        <taxon>Haplorrhini</taxon>
        <taxon>Catarrhini</taxon>
        <taxon>Hominidae</taxon>
        <taxon>Homo</taxon>
    </lineage>
</organism>
<sequence>MSFVAGVIRRLDETVVNRIAAGEVIQRPANAIKEMIENCLDAKSTSIQVIVKEGGLKLIQIQDNGTGIRKEDLDIVCERFTTSKLQSFEDLASISTYGFRGEALASISHVAHVTITTKTADGKCAYRASYSDGKLKAPPKPCAGNQGTQITVEDLFYNIATRRKALKNPSEEYGKILEVVGRYSVHNAGISFSVKKQGETVADVRTLPNASTVDNIRSIFGNAVSRELIEIGCEDKTLAFKMNGYISNANYSVKKCIFLLFINHRLVESTSLRKAIETVYAAYLPKNTHPFLYLSLEISPQNVDVNVHPTKHEVHFLHEESILERVQQHIESKLLGSNSSRMYFTQTLLPGLAGPSGEMVKSTTSLTSSSTSGSSDKVYAHQMVRTDSREQKLDAFLQPLSKPLSSQPQAIVTEDKTDISSGRARQQDEEMLELPAPAEVAAKNQSLEGDTTKGTSEMSEKRGPTSSNPRKRHREDSDVEMVEDDSRKEMTAACTPRRRIINLTSVLSLQEEINEQGHEVLREMLHNHSFVGCVNPQWALAQHQTKLYLLNTTKLSEELFYQILIYDFANFGVLRLSEPAPLFDLAMLALDSPESGWTEEDGPKEGLAEYIVEFLKKKAEMLADYFSLEIDEEGNLIGLPLLIDNYVPPLEGLPIFILRLATEVNWDEEKECFESLSKECAMFYSIRKQYISEESTLSGQQSEVPGSIPNSWKWTVEHIVYKALRSHILPPKHFTEDGNILQLANLPDLYKVFERC</sequence>
<reference key="1">
    <citation type="journal article" date="1994" name="Nature">
        <title>Mutation in the DNA mismatch repair gene homologue hMLH1 is associated with hereditary non-polyposis colon cancer.</title>
        <authorList>
            <person name="Bronner C.E."/>
            <person name="Baker S.M."/>
            <person name="Morrison P.T."/>
            <person name="Warren G."/>
            <person name="Smith L.G."/>
            <person name="Lescoe M.K."/>
            <person name="Kane M.F."/>
            <person name="Earibino C."/>
            <person name="Lipford J."/>
            <person name="Lindblom A."/>
            <person name="Tannergaard P."/>
            <person name="Bollag R.J."/>
            <person name="Godwin A.R."/>
            <person name="Ward D.C."/>
            <person name="Nordenskjoeld M."/>
            <person name="Fishel R."/>
            <person name="Kolodner R.D."/>
            <person name="Liskay R.M."/>
        </authorList>
    </citation>
    <scope>NUCLEOTIDE SEQUENCE [MRNA] (ISOFORM 1)</scope>
</reference>
<reference key="2">
    <citation type="journal article" date="1994" name="Science">
        <title>Mutation of a mutL homolog in hereditary colon cancer.</title>
        <authorList>
            <person name="Papadopoulos N."/>
            <person name="Nicolaides N.C."/>
            <person name="Wei Y.-F."/>
            <person name="Ruben S.M."/>
            <person name="Carter K.C."/>
            <person name="Rosen C.A."/>
            <person name="Haseltine W.A."/>
            <person name="Fleischmann R.D."/>
            <person name="Fraser C.M."/>
            <person name="Adams M.D."/>
            <person name="Venter J.C."/>
            <person name="Hamilton S.R."/>
            <person name="Petersen G.M."/>
            <person name="Watson P."/>
            <person name="Lynch H.T."/>
            <person name="Peltomaeki P."/>
            <person name="Mecklin J.-P."/>
            <person name="de la Chapelle A."/>
            <person name="Kinzler K.W."/>
            <person name="Vogelstein B."/>
        </authorList>
    </citation>
    <scope>NUCLEOTIDE SEQUENCE [MRNA] (ISOFORM 1)</scope>
    <source>
        <tissue>Gall bladder</tissue>
    </source>
</reference>
<reference key="3">
    <citation type="journal article" date="1995" name="Cancer Res.">
        <title>Structure of the human MLH1 locus and analysis of a large hereditary nonpolyposis colorectal carcinoma kindred for mlh1 mutations.</title>
        <authorList>
            <person name="Kolodner R.D."/>
            <person name="Hall N.R."/>
            <person name="Lipford J.R."/>
            <person name="Kane M.F."/>
            <person name="Morrison P."/>
            <person name="Finan P.J."/>
            <person name="Burn J."/>
            <person name="Chapman P."/>
            <person name="Earabino C."/>
            <person name="Merchant E."/>
            <person name="Bishop D.T."/>
        </authorList>
    </citation>
    <scope>NUCLEOTIDE SEQUENCE [GENOMIC DNA]</scope>
</reference>
<reference key="4">
    <citation type="journal article" date="1995" name="Hum. Mol. Genet.">
        <title>Genomic structure of human mismatch repair gene, hMLH1, and its mutation analysis in patients with hereditary non-polyposis colorectal cancer (HNPCC).</title>
        <authorList>
            <person name="Han H.-J."/>
            <person name="Maruyama M."/>
            <person name="Baba S."/>
            <person name="Park J.-G."/>
            <person name="Nakamura Y."/>
        </authorList>
    </citation>
    <scope>NUCLEOTIDE SEQUENCE [GENOMIC DNA]</scope>
    <scope>VARIANTS LYNCH2 LEU-542; PRO-574; VAL-582 AND THR-618</scope>
</reference>
<reference key="5">
    <citation type="submission" date="2003-01" db="EMBL/GenBank/DDBJ databases">
        <authorList>
            <consortium name="NIEHS SNPs program"/>
        </authorList>
    </citation>
    <scope>NUCLEOTIDE SEQUENCE [GENOMIC DNA]</scope>
    <scope>VARIANTS VAL-32; MET-213 AND VAL-219</scope>
</reference>
<reference key="6">
    <citation type="journal article" date="2004" name="Nat. Genet.">
        <title>Complete sequencing and characterization of 21,243 full-length human cDNAs.</title>
        <authorList>
            <person name="Ota T."/>
            <person name="Suzuki Y."/>
            <person name="Nishikawa T."/>
            <person name="Otsuki T."/>
            <person name="Sugiyama T."/>
            <person name="Irie R."/>
            <person name="Wakamatsu A."/>
            <person name="Hayashi K."/>
            <person name="Sato H."/>
            <person name="Nagai K."/>
            <person name="Kimura K."/>
            <person name="Makita H."/>
            <person name="Sekine M."/>
            <person name="Obayashi M."/>
            <person name="Nishi T."/>
            <person name="Shibahara T."/>
            <person name="Tanaka T."/>
            <person name="Ishii S."/>
            <person name="Yamamoto J."/>
            <person name="Saito K."/>
            <person name="Kawai Y."/>
            <person name="Isono Y."/>
            <person name="Nakamura Y."/>
            <person name="Nagahari K."/>
            <person name="Murakami K."/>
            <person name="Yasuda T."/>
            <person name="Iwayanagi T."/>
            <person name="Wagatsuma M."/>
            <person name="Shiratori A."/>
            <person name="Sudo H."/>
            <person name="Hosoiri T."/>
            <person name="Kaku Y."/>
            <person name="Kodaira H."/>
            <person name="Kondo H."/>
            <person name="Sugawara M."/>
            <person name="Takahashi M."/>
            <person name="Kanda K."/>
            <person name="Yokoi T."/>
            <person name="Furuya T."/>
            <person name="Kikkawa E."/>
            <person name="Omura Y."/>
            <person name="Abe K."/>
            <person name="Kamihara K."/>
            <person name="Katsuta N."/>
            <person name="Sato K."/>
            <person name="Tanikawa M."/>
            <person name="Yamazaki M."/>
            <person name="Ninomiya K."/>
            <person name="Ishibashi T."/>
            <person name="Yamashita H."/>
            <person name="Murakawa K."/>
            <person name="Fujimori K."/>
            <person name="Tanai H."/>
            <person name="Kimata M."/>
            <person name="Watanabe M."/>
            <person name="Hiraoka S."/>
            <person name="Chiba Y."/>
            <person name="Ishida S."/>
            <person name="Ono Y."/>
            <person name="Takiguchi S."/>
            <person name="Watanabe S."/>
            <person name="Yosida M."/>
            <person name="Hotuta T."/>
            <person name="Kusano J."/>
            <person name="Kanehori K."/>
            <person name="Takahashi-Fujii A."/>
            <person name="Hara H."/>
            <person name="Tanase T.-O."/>
            <person name="Nomura Y."/>
            <person name="Togiya S."/>
            <person name="Komai F."/>
            <person name="Hara R."/>
            <person name="Takeuchi K."/>
            <person name="Arita M."/>
            <person name="Imose N."/>
            <person name="Musashino K."/>
            <person name="Yuuki H."/>
            <person name="Oshima A."/>
            <person name="Sasaki N."/>
            <person name="Aotsuka S."/>
            <person name="Yoshikawa Y."/>
            <person name="Matsunawa H."/>
            <person name="Ichihara T."/>
            <person name="Shiohata N."/>
            <person name="Sano S."/>
            <person name="Moriya S."/>
            <person name="Momiyama H."/>
            <person name="Satoh N."/>
            <person name="Takami S."/>
            <person name="Terashima Y."/>
            <person name="Suzuki O."/>
            <person name="Nakagawa S."/>
            <person name="Senoh A."/>
            <person name="Mizoguchi H."/>
            <person name="Goto Y."/>
            <person name="Shimizu F."/>
            <person name="Wakebe H."/>
            <person name="Hishigaki H."/>
            <person name="Watanabe T."/>
            <person name="Sugiyama A."/>
            <person name="Takemoto M."/>
            <person name="Kawakami B."/>
            <person name="Yamazaki M."/>
            <person name="Watanabe K."/>
            <person name="Kumagai A."/>
            <person name="Itakura S."/>
            <person name="Fukuzumi Y."/>
            <person name="Fujimori Y."/>
            <person name="Komiyama M."/>
            <person name="Tashiro H."/>
            <person name="Tanigami A."/>
            <person name="Fujiwara T."/>
            <person name="Ono T."/>
            <person name="Yamada K."/>
            <person name="Fujii Y."/>
            <person name="Ozaki K."/>
            <person name="Hirao M."/>
            <person name="Ohmori Y."/>
            <person name="Kawabata A."/>
            <person name="Hikiji T."/>
            <person name="Kobatake N."/>
            <person name="Inagaki H."/>
            <person name="Ikema Y."/>
            <person name="Okamoto S."/>
            <person name="Okitani R."/>
            <person name="Kawakami T."/>
            <person name="Noguchi S."/>
            <person name="Itoh T."/>
            <person name="Shigeta K."/>
            <person name="Senba T."/>
            <person name="Matsumura K."/>
            <person name="Nakajima Y."/>
            <person name="Mizuno T."/>
            <person name="Morinaga M."/>
            <person name="Sasaki M."/>
            <person name="Togashi T."/>
            <person name="Oyama M."/>
            <person name="Hata H."/>
            <person name="Watanabe M."/>
            <person name="Komatsu T."/>
            <person name="Mizushima-Sugano J."/>
            <person name="Satoh T."/>
            <person name="Shirai Y."/>
            <person name="Takahashi Y."/>
            <person name="Nakagawa K."/>
            <person name="Okumura K."/>
            <person name="Nagase T."/>
            <person name="Nomura N."/>
            <person name="Kikuchi H."/>
            <person name="Masuho Y."/>
            <person name="Yamashita R."/>
            <person name="Nakai K."/>
            <person name="Yada T."/>
            <person name="Nakamura Y."/>
            <person name="Ohara O."/>
            <person name="Isogai T."/>
            <person name="Sugano S."/>
        </authorList>
    </citation>
    <scope>NUCLEOTIDE SEQUENCE [LARGE SCALE MRNA] (ISOFORMS 2 AND 3)</scope>
    <source>
        <tissue>Brain</tissue>
        <tissue>Corpus callosum</tissue>
        <tissue>Kidney</tissue>
        <tissue>Substantia nigra</tissue>
    </source>
</reference>
<reference key="7">
    <citation type="journal article" date="2006" name="Nature">
        <title>The DNA sequence, annotation and analysis of human chromosome 3.</title>
        <authorList>
            <person name="Muzny D.M."/>
            <person name="Scherer S.E."/>
            <person name="Kaul R."/>
            <person name="Wang J."/>
            <person name="Yu J."/>
            <person name="Sudbrak R."/>
            <person name="Buhay C.J."/>
            <person name="Chen R."/>
            <person name="Cree A."/>
            <person name="Ding Y."/>
            <person name="Dugan-Rocha S."/>
            <person name="Gill R."/>
            <person name="Gunaratne P."/>
            <person name="Harris R.A."/>
            <person name="Hawes A.C."/>
            <person name="Hernandez J."/>
            <person name="Hodgson A.V."/>
            <person name="Hume J."/>
            <person name="Jackson A."/>
            <person name="Khan Z.M."/>
            <person name="Kovar-Smith C."/>
            <person name="Lewis L.R."/>
            <person name="Lozado R.J."/>
            <person name="Metzker M.L."/>
            <person name="Milosavljevic A."/>
            <person name="Miner G.R."/>
            <person name="Morgan M.B."/>
            <person name="Nazareth L.V."/>
            <person name="Scott G."/>
            <person name="Sodergren E."/>
            <person name="Song X.-Z."/>
            <person name="Steffen D."/>
            <person name="Wei S."/>
            <person name="Wheeler D.A."/>
            <person name="Wright M.W."/>
            <person name="Worley K.C."/>
            <person name="Yuan Y."/>
            <person name="Zhang Z."/>
            <person name="Adams C.Q."/>
            <person name="Ansari-Lari M.A."/>
            <person name="Ayele M."/>
            <person name="Brown M.J."/>
            <person name="Chen G."/>
            <person name="Chen Z."/>
            <person name="Clendenning J."/>
            <person name="Clerc-Blankenburg K.P."/>
            <person name="Chen R."/>
            <person name="Chen Z."/>
            <person name="Davis C."/>
            <person name="Delgado O."/>
            <person name="Dinh H.H."/>
            <person name="Dong W."/>
            <person name="Draper H."/>
            <person name="Ernst S."/>
            <person name="Fu G."/>
            <person name="Gonzalez-Garay M.L."/>
            <person name="Garcia D.K."/>
            <person name="Gillett W."/>
            <person name="Gu J."/>
            <person name="Hao B."/>
            <person name="Haugen E."/>
            <person name="Havlak P."/>
            <person name="He X."/>
            <person name="Hennig S."/>
            <person name="Hu S."/>
            <person name="Huang W."/>
            <person name="Jackson L.R."/>
            <person name="Jacob L.S."/>
            <person name="Kelly S.H."/>
            <person name="Kube M."/>
            <person name="Levy R."/>
            <person name="Li Z."/>
            <person name="Liu B."/>
            <person name="Liu J."/>
            <person name="Liu W."/>
            <person name="Lu J."/>
            <person name="Maheshwari M."/>
            <person name="Nguyen B.-V."/>
            <person name="Okwuonu G.O."/>
            <person name="Palmeiri A."/>
            <person name="Pasternak S."/>
            <person name="Perez L.M."/>
            <person name="Phelps K.A."/>
            <person name="Plopper F.J."/>
            <person name="Qiang B."/>
            <person name="Raymond C."/>
            <person name="Rodriguez R."/>
            <person name="Saenphimmachak C."/>
            <person name="Santibanez J."/>
            <person name="Shen H."/>
            <person name="Shen Y."/>
            <person name="Subramanian S."/>
            <person name="Tabor P.E."/>
            <person name="Verduzco D."/>
            <person name="Waldron L."/>
            <person name="Wang J."/>
            <person name="Wang J."/>
            <person name="Wang Q."/>
            <person name="Williams G.A."/>
            <person name="Wong G.K.-S."/>
            <person name="Yao Z."/>
            <person name="Zhang J."/>
            <person name="Zhang X."/>
            <person name="Zhao G."/>
            <person name="Zhou J."/>
            <person name="Zhou Y."/>
            <person name="Nelson D."/>
            <person name="Lehrach H."/>
            <person name="Reinhardt R."/>
            <person name="Naylor S.L."/>
            <person name="Yang H."/>
            <person name="Olson M."/>
            <person name="Weinstock G."/>
            <person name="Gibbs R.A."/>
        </authorList>
    </citation>
    <scope>NUCLEOTIDE SEQUENCE [LARGE SCALE GENOMIC DNA]</scope>
</reference>
<reference key="8">
    <citation type="submission" date="2005-07" db="EMBL/GenBank/DDBJ databases">
        <authorList>
            <person name="Mural R.J."/>
            <person name="Istrail S."/>
            <person name="Sutton G.G."/>
            <person name="Florea L."/>
            <person name="Halpern A.L."/>
            <person name="Mobarry C.M."/>
            <person name="Lippert R."/>
            <person name="Walenz B."/>
            <person name="Shatkay H."/>
            <person name="Dew I."/>
            <person name="Miller J.R."/>
            <person name="Flanigan M.J."/>
            <person name="Edwards N.J."/>
            <person name="Bolanos R."/>
            <person name="Fasulo D."/>
            <person name="Halldorsson B.V."/>
            <person name="Hannenhalli S."/>
            <person name="Turner R."/>
            <person name="Yooseph S."/>
            <person name="Lu F."/>
            <person name="Nusskern D.R."/>
            <person name="Shue B.C."/>
            <person name="Zheng X.H."/>
            <person name="Zhong F."/>
            <person name="Delcher A.L."/>
            <person name="Huson D.H."/>
            <person name="Kravitz S.A."/>
            <person name="Mouchard L."/>
            <person name="Reinert K."/>
            <person name="Remington K.A."/>
            <person name="Clark A.G."/>
            <person name="Waterman M.S."/>
            <person name="Eichler E.E."/>
            <person name="Adams M.D."/>
            <person name="Hunkapiller M.W."/>
            <person name="Myers E.W."/>
            <person name="Venter J.C."/>
        </authorList>
    </citation>
    <scope>NUCLEOTIDE SEQUENCE [LARGE SCALE GENOMIC DNA]</scope>
</reference>
<reference key="9">
    <citation type="journal article" date="2004" name="Genome Res.">
        <title>The status, quality, and expansion of the NIH full-length cDNA project: the Mammalian Gene Collection (MGC).</title>
        <authorList>
            <consortium name="The MGC Project Team"/>
        </authorList>
    </citation>
    <scope>NUCLEOTIDE SEQUENCE [LARGE SCALE MRNA] (ISOFORM 1)</scope>
    <source>
        <tissue>Placenta</tissue>
    </source>
</reference>
<reference key="10">
    <citation type="journal article" date="2000" name="Genes Dev.">
        <title>BASC, a super complex of BRCA1-associated proteins involved in the recognition and repair of aberrant DNA structures.</title>
        <authorList>
            <person name="Wang Y."/>
            <person name="Cortez D."/>
            <person name="Yazdi P."/>
            <person name="Neff N."/>
            <person name="Elledge S.J."/>
            <person name="Qin J."/>
        </authorList>
    </citation>
    <scope>IDENTIFICATION OF MLH1 AS MEMBER OF BASC</scope>
</reference>
<reference key="11">
    <citation type="journal article" date="1999" name="Proc. Natl. Acad. Sci. U.S.A.">
        <title>MED1, a novel human methyl-CpG-binding endonuclease, interacts with DNA mismatch repair protein MLH1.</title>
        <authorList>
            <person name="Bellacosa A."/>
            <person name="Cicchillitti L."/>
            <person name="Schepis F."/>
            <person name="Riccio A."/>
            <person name="Yeung A.T."/>
            <person name="Matsumoto Y."/>
            <person name="Golemis E.A."/>
            <person name="Genuardi M."/>
            <person name="Neri G."/>
        </authorList>
    </citation>
    <scope>INTERACTION WITH MBD4</scope>
</reference>
<reference key="12">
    <citation type="journal article" date="2001" name="J. Biol. Chem.">
        <title>The interaction of DNA mismatch repair proteins with human exonuclease I.</title>
        <authorList>
            <person name="Schmutte C."/>
            <person name="Sadoff M.M."/>
            <person name="Shim K.-S."/>
            <person name="Acharya S."/>
            <person name="Fishel R."/>
        </authorList>
    </citation>
    <scope>INTERACTION WITH EXO1 AND PMS2</scope>
    <scope>CHARACTERIZATION OF VARIANTS LYNCH2 PRO-574; LYS-616 DEL; LEU-659 AND THR-681</scope>
    <scope>CHARACTERIZATION OF VARIANT MMRCS1 LYS-616 DEL</scope>
</reference>
<reference key="13">
    <citation type="journal article" date="2001" name="Oncogene">
        <title>HNPCC mutations in the human DNA mismatch repair gene hMLH1 influence assembly of hMutLalpha and hMLH1-hEXO1 complexes.</title>
        <authorList>
            <person name="Jaeger A.C."/>
            <person name="Rasmussen M."/>
            <person name="Bisgaard H.C."/>
            <person name="Singh K.K."/>
            <person name="Nielsen F.C."/>
            <person name="Rasmussen L.J."/>
        </authorList>
    </citation>
    <scope>INTERACTION WITH EXO1</scope>
    <scope>SUBCELLULAR LOCATION</scope>
    <scope>CHARACTERIZATION OF VARIANT MET-117</scope>
</reference>
<reference key="14">
    <citation type="journal article" date="2002" name="Cancer Res.">
        <title>Functional alterations of human exonuclease 1 mutants identified in atypical hereditary nonpolyposis colorectal cancer syndrome.</title>
        <authorList>
            <person name="Sun X."/>
            <person name="Zheng L."/>
            <person name="Shen B."/>
        </authorList>
    </citation>
    <scope>INTERACTION WITH EXO1</scope>
</reference>
<reference key="15">
    <citation type="journal article" date="2004" name="Oncogene">
        <title>Characterization of human exonuclease 1 in complex with mismatch repair proteins, subcellular localization and association with PCNA.</title>
        <authorList>
            <person name="Nielsen F.C."/>
            <person name="Jaeger A.C."/>
            <person name="Luetzen A."/>
            <person name="Bundgaard J.R."/>
            <person name="Rasmussen L.J."/>
        </authorList>
    </citation>
    <scope>INTERACTION WITH EXO1</scope>
    <scope>SUBCELLULAR LOCATION</scope>
</reference>
<reference key="16">
    <citation type="journal article" date="1996" name="Am. J. Hum. Genet.">
        <title>The genetic basis of Muir-Torre syndrome includes the hMLH1 locus.</title>
        <authorList>
            <person name="Bapat B."/>
            <person name="Xia L."/>
            <person name="Madlensky L."/>
            <person name="Mitri A."/>
            <person name="Tonin P."/>
            <person name="Narod S.A."/>
            <person name="Gallinger S."/>
        </authorList>
    </citation>
    <scope>INVOLVEMENT IN MRTES</scope>
</reference>
<reference key="17">
    <citation type="journal article" date="2006" name="Cell">
        <title>Endonucleolytic function of MutLalpha in human mismatch repair.</title>
        <authorList>
            <person name="Kadyrov F.A."/>
            <person name="Dzantiev L."/>
            <person name="Constantin N."/>
            <person name="Modrich P."/>
        </authorList>
    </citation>
    <scope>FUNCTION</scope>
</reference>
<reference key="18">
    <citation type="journal article" date="2008" name="Mol. Cell">
        <title>Direct visualization of asymmetric adenine nucleotide-induced conformational changes in MutL alpha.</title>
        <authorList>
            <person name="Sacho E.J."/>
            <person name="Kadyrov F.A."/>
            <person name="Modrich P."/>
            <person name="Kunkel T.A."/>
            <person name="Erie D.A."/>
        </authorList>
    </citation>
    <scope>FUNCTION</scope>
</reference>
<reference key="19">
    <citation type="journal article" date="2005" name="J. Biol. Chem.">
        <title>Human mismatch repair: reconstitution of a nick-directed bidirectional reaction.</title>
        <authorList>
            <person name="Constantin N."/>
            <person name="Dzantiev L."/>
            <person name="Kadyrov F.A."/>
            <person name="Modrich P."/>
        </authorList>
    </citation>
    <scope>REVIEW</scope>
</reference>
<reference key="20">
    <citation type="journal article" date="2006" name="Cell">
        <title>MutLalpha: at the cutting edge of mismatch repair.</title>
        <authorList>
            <person name="Jiricny J."/>
        </authorList>
    </citation>
    <scope>REVIEW</scope>
</reference>
<reference key="21">
    <citation type="journal article" date="2008" name="Cell Res.">
        <title>Mechanisms and functions of DNA mismatch repair.</title>
        <authorList>
            <person name="Li G.M."/>
        </authorList>
    </citation>
    <scope>REVIEW</scope>
</reference>
<reference key="22">
    <citation type="journal article" date="2008" name="Proc. Natl. Acad. Sci. U.S.A.">
        <title>A quantitative atlas of mitotic phosphorylation.</title>
        <authorList>
            <person name="Dephoure N."/>
            <person name="Zhou C."/>
            <person name="Villen J."/>
            <person name="Beausoleil S.A."/>
            <person name="Bakalarski C.E."/>
            <person name="Elledge S.J."/>
            <person name="Gygi S.P."/>
        </authorList>
    </citation>
    <scope>PHOSPHORYLATION [LARGE SCALE ANALYSIS] AT SER-477</scope>
    <scope>IDENTIFICATION BY MASS SPECTROMETRY [LARGE SCALE ANALYSIS]</scope>
    <source>
        <tissue>Cervix carcinoma</tissue>
    </source>
</reference>
<reference key="23">
    <citation type="journal article" date="2009" name="Sci. Signal.">
        <title>Quantitative phosphoproteomic analysis of T cell receptor signaling reveals system-wide modulation of protein-protein interactions.</title>
        <authorList>
            <person name="Mayya V."/>
            <person name="Lundgren D.H."/>
            <person name="Hwang S.-I."/>
            <person name="Rezaul K."/>
            <person name="Wu L."/>
            <person name="Eng J.K."/>
            <person name="Rodionov V."/>
            <person name="Han D.K."/>
        </authorList>
    </citation>
    <scope>PHOSPHORYLATION [LARGE SCALE ANALYSIS] AT SER-477</scope>
    <scope>IDENTIFICATION BY MASS SPECTROMETRY [LARGE SCALE ANALYSIS]</scope>
    <source>
        <tissue>Leukemic T-cell</tissue>
    </source>
</reference>
<reference key="24">
    <citation type="journal article" date="2010" name="Mol. Cell">
        <title>A genetic screen identifies FAN1, a Fanconi anemia-associated nuclease necessary for DNA interstrand crosslink repair.</title>
        <authorList>
            <person name="Smogorzewska A."/>
            <person name="Desetty R."/>
            <person name="Saito T.T."/>
            <person name="Schlabach M."/>
            <person name="Lach F.P."/>
            <person name="Sowa M.E."/>
            <person name="Clark A.B."/>
            <person name="Kunkel T.A."/>
            <person name="Harper J.W."/>
            <person name="Colaiacovo M.P."/>
            <person name="Elledge S.J."/>
        </authorList>
    </citation>
    <scope>INTERACTION WITH MTMR15</scope>
</reference>
<reference key="25">
    <citation type="journal article" date="2011" name="BMC Syst. Biol.">
        <title>Initial characterization of the human central proteome.</title>
        <authorList>
            <person name="Burkard T.R."/>
            <person name="Planyavsky M."/>
            <person name="Kaupe I."/>
            <person name="Breitwieser F.P."/>
            <person name="Buerckstuemmer T."/>
            <person name="Bennett K.L."/>
            <person name="Superti-Furga G."/>
            <person name="Colinge J."/>
        </authorList>
    </citation>
    <scope>IDENTIFICATION BY MASS SPECTROMETRY [LARGE SCALE ANALYSIS]</scope>
</reference>
<reference key="26">
    <citation type="journal article" date="2011" name="Sci. Signal.">
        <title>System-wide temporal characterization of the proteome and phosphoproteome of human embryonic stem cell differentiation.</title>
        <authorList>
            <person name="Rigbolt K.T."/>
            <person name="Prokhorova T.A."/>
            <person name="Akimov V."/>
            <person name="Henningsen J."/>
            <person name="Johansen P.T."/>
            <person name="Kratchmarova I."/>
            <person name="Kassem M."/>
            <person name="Mann M."/>
            <person name="Olsen J.V."/>
            <person name="Blagoev B."/>
        </authorList>
    </citation>
    <scope>PHOSPHORYLATION [LARGE SCALE ANALYSIS] AT SER-477</scope>
    <scope>IDENTIFICATION BY MASS SPECTROMETRY [LARGE SCALE ANALYSIS]</scope>
</reference>
<reference key="27">
    <citation type="journal article" date="2012" name="Mol. Cell. Proteomics">
        <title>Comparative large-scale characterisation of plant vs. mammal proteins reveals similar and idiosyncratic N-alpha acetylation features.</title>
        <authorList>
            <person name="Bienvenut W.V."/>
            <person name="Sumpton D."/>
            <person name="Martinez A."/>
            <person name="Lilla S."/>
            <person name="Espagne C."/>
            <person name="Meinnel T."/>
            <person name="Giglione C."/>
        </authorList>
    </citation>
    <scope>ACETYLATION [LARGE SCALE ANALYSIS] AT SER-2</scope>
    <scope>CLEAVAGE OF INITIATOR METHIONINE [LARGE SCALE ANALYSIS]</scope>
    <scope>IDENTIFICATION BY MASS SPECTROMETRY [LARGE SCALE ANALYSIS]</scope>
</reference>
<reference key="28">
    <citation type="journal article" date="2013" name="J. Proteome Res.">
        <title>Toward a comprehensive characterization of a human cancer cell phosphoproteome.</title>
        <authorList>
            <person name="Zhou H."/>
            <person name="Di Palma S."/>
            <person name="Preisinger C."/>
            <person name="Peng M."/>
            <person name="Polat A.N."/>
            <person name="Heck A.J."/>
            <person name="Mohammed S."/>
        </authorList>
    </citation>
    <scope>PHOSPHORYLATION [LARGE SCALE ANALYSIS] AT SER-477</scope>
    <scope>IDENTIFICATION BY MASS SPECTROMETRY [LARGE SCALE ANALYSIS]</scope>
    <source>
        <tissue>Cervix carcinoma</tissue>
        <tissue>Erythroleukemia</tissue>
    </source>
</reference>
<reference key="29">
    <citation type="journal article" date="2014" name="J. Proteomics">
        <title>An enzyme assisted RP-RPLC approach for in-depth analysis of human liver phosphoproteome.</title>
        <authorList>
            <person name="Bian Y."/>
            <person name="Song C."/>
            <person name="Cheng K."/>
            <person name="Dong M."/>
            <person name="Wang F."/>
            <person name="Huang J."/>
            <person name="Sun D."/>
            <person name="Wang L."/>
            <person name="Ye M."/>
            <person name="Zou H."/>
        </authorList>
    </citation>
    <scope>PHOSPHORYLATION [LARGE SCALE ANALYSIS] AT SER-477</scope>
    <scope>IDENTIFICATION BY MASS SPECTROMETRY [LARGE SCALE ANALYSIS]</scope>
    <source>
        <tissue>Liver</tissue>
    </source>
</reference>
<reference key="30">
    <citation type="journal article" date="2015" name="Mol. Cell">
        <title>MCM9 Is Required for Mammalian DNA Mismatch Repair.</title>
        <authorList>
            <person name="Traver S."/>
            <person name="Coulombe P."/>
            <person name="Peiffer I."/>
            <person name="Hutchins J.R."/>
            <person name="Kitzmann M."/>
            <person name="Latreille D."/>
            <person name="Mechali M."/>
        </authorList>
    </citation>
    <scope>IDENTIFICATION IN THE MMR COMPLEX</scope>
    <scope>INTERACTION WITH MCM9 AND MCM8</scope>
    <scope>SUBCELLULAR LOCATION</scope>
</reference>
<reference key="31">
    <citation type="journal article" date="2019" name="J. Biol. Chem.">
        <title>HDAC6 regulates DNA damage response via deacetylating MLH1.</title>
        <authorList>
            <person name="Zhang M."/>
            <person name="Hu C."/>
            <person name="Moses N."/>
            <person name="Haakenson J."/>
            <person name="Xiang S."/>
            <person name="Quan D."/>
            <person name="Fang B."/>
            <person name="Yang Z."/>
            <person name="Bai W."/>
            <person name="Bepler G."/>
            <person name="Li G.M."/>
            <person name="Zhang X.M."/>
        </authorList>
    </citation>
    <scope>SUBCELLULAR LOCATION</scope>
    <scope>ACETYLATION AT LYS-33; LYS-241; LYS-361 AND LYS-377</scope>
    <scope>DEACETYLATION BY HDAC6</scope>
    <scope>MUTAGENESIS OF LYS-33; LYS-241; LYS-361 AND LYS-377</scope>
</reference>
<reference key="32">
    <citation type="journal article" date="2024" name="J. Biol. Chem.">
        <title>The ubiquitin ligase UBR4 and the deubiquitylase USP5 modulate the stability of DNA mismatch repair protein MLH1.</title>
        <authorList>
            <person name="Mao C."/>
            <person name="Li S."/>
            <person name="Che J."/>
            <person name="Liu D."/>
            <person name="Mao X."/>
            <person name="Rao H."/>
        </authorList>
    </citation>
    <scope>FUNCTION</scope>
    <scope>UBIQUITINATION BY UBR4</scope>
    <scope>DEUBIQUITINATION BY USP5</scope>
    <scope>INTERACTION WITH PSM2</scope>
    <scope>CHARACTERIZATION OF VARIANT LEU-574 AND ALA-589</scope>
</reference>
<reference key="33">
    <citation type="submission" date="2011-03" db="PDB data bank">
        <title>Crystal structure of MutL protein homolog 1 isoform 1.</title>
        <authorList>
            <person name="Dombrovsky L."/>
            <person name="Dong A."/>
            <person name="Wernimont A."/>
            <person name="Loppnau P."/>
            <person name="Bountra C."/>
            <person name="Weigelt J."/>
            <person name="Arrowsmith C.H."/>
            <person name="Edwards A.M."/>
            <person name="Min J."/>
            <person name="Wu H."/>
        </authorList>
    </citation>
    <scope>X-RAY CRYSTALLOGRAPHY (2.16 ANGSTROMS) OF 486-751</scope>
</reference>
<reference key="34">
    <citation type="journal article" date="2015" name="Acta Crystallogr. F">
        <title>Structure of the human MLH1 N-terminus: implications for predisposition to Lynch syndrome.</title>
        <authorList>
            <person name="Wu H."/>
            <person name="Zeng H."/>
            <person name="Lam R."/>
            <person name="Tempel W."/>
            <person name="Kerr I.D."/>
            <person name="Min J."/>
        </authorList>
    </citation>
    <scope>X-RAY CRYSTALLOGRAPHY (2.30 ANGSTROMS) OF 3-196 IN COMPLEX WITH ADP AND MAGNESIUM IONS</scope>
</reference>
<reference evidence="96" key="35">
    <citation type="journal article" date="2018" name="Biochimie">
        <title>DNA mismatch repair proteins MLH1 and PMS2 can be imported to the nucleus by a classical nuclear import pathway.</title>
        <authorList>
            <person name="de Barros A.C."/>
            <person name="Takeda A.A.S."/>
            <person name="Dreyer T.R."/>
            <person name="Velazquez-Campoy A."/>
            <person name="Kobe B."/>
            <person name="Fontes M.R.M."/>
        </authorList>
    </citation>
    <scope>X-RAY CRYSTALLOGRAPHY (2.17 ANGSTROMS) OF 467-476</scope>
    <scope>NUCLEAR LOCALIZATION SIGNAL</scope>
    <scope>MUTAGENESIS OF LYS-471 AND ARG-472</scope>
</reference>
<reference key="36">
    <citation type="journal article" date="2010" name="Hum. Mutat.">
        <title>A cell-free assay for the functional analysis of variants of the mismatch repair protein MLH1.</title>
        <authorList>
            <person name="Drost M."/>
            <person name="Zonneveld J.B."/>
            <person name="van Dijk L."/>
            <person name="Morreau H."/>
            <person name="Tops C.M."/>
            <person name="Vasen H.F."/>
            <person name="Wijnen J.T."/>
            <person name="de Wind N."/>
        </authorList>
    </citation>
    <scope>CHARACTERIZATION OF VARIANTS LYNCH2 CYS-31; LYS-37; HIS-38; LYS-38; PHE-44; ARG-67; PRO-109; PRO-111; MET-117; CYS-265; SER-265; GLN-443; PRO-550; GLY-578; PHE-582; ASP-589; ALA-618; CYS-646; LEU-648; LEU-654 AND PRO-659</scope>
    <scope>CHARACTERIZATION OF VARIANTS GLY-93; VAL-219; SER-403; ASN-406 AND MET-716</scope>
    <scope>FUNCTION</scope>
</reference>
<reference key="37">
    <citation type="journal article" date="2011" name="Hum. Mutat.">
        <title>Verification of the three-step model in assessing the pathogenicity of mismatch repair gene variants.</title>
        <authorList>
            <person name="Kansikas M."/>
            <person name="Kariola R."/>
            <person name="Nystroem M."/>
        </authorList>
    </citation>
    <scope>CHARACTERIZATION OF VARIANTS LYNCH2 LEU-28; SER-29; 45-THR--ILE-47 DELINS CYS-PHE; GLU-63; ARG-67; GLU-71 DEL; ARG-77; VAL-80; GLU-84; ARG-107; ARG-155; GLY-185; PRO-247; PRO-329; ILE-330 DEL; GLN-443; ALA-460; PRO-550; 578-GLU--GLU-632 DEL; ASP-589; VAL-612 DEL; LYS-616 DEL; ALA-618; THR-618; 633-GLU--GLU-663 DEL; CYS-646; LEU-648; SER-648; LEU-654; GLN-659; PRO-659; THR-681 AND TRP-687</scope>
    <scope>CHARACTERIZATION OF VARIANTS GLY-93; MET-213; VAL-219 AND MET-716</scope>
    <scope>SUBCELLULAR LOCATION</scope>
    <scope>FUNCTION</scope>
</reference>
<reference key="38">
    <citation type="journal article" date="1995" name="N. Engl. J. Med.">
        <title>The molecular basis of Turcot's syndrome.</title>
        <authorList>
            <person name="Hamilton S.R."/>
            <person name="Liu B."/>
            <person name="Parsons R.E."/>
            <person name="Papadopoulos N."/>
            <person name="Jen J."/>
            <person name="Powell S.M."/>
            <person name="Krush A.J."/>
            <person name="Berk T."/>
            <person name="Cohen Z."/>
            <person name="Tetu B."/>
            <person name="Burger P.C."/>
            <person name="Wood P.A."/>
            <person name="Taqi F."/>
            <person name="Booker S.V."/>
            <person name="Petersen G.M."/>
            <person name="Offerhaus G.J.A."/>
            <person name="Tersmette A.C."/>
            <person name="Giardiello F.M."/>
            <person name="Vogelstein B."/>
            <person name="Kinzler K.W."/>
        </authorList>
    </citation>
    <scope>VARIANT MMRCS1 LYS-616 DEL</scope>
</reference>
<reference key="39">
    <citation type="journal article" date="1996" name="Am. J. Hum. Genet.">
        <title>Majority of hMLH1 mutations responsible for hereditary nonpolyposis colorectal cancer cluster at the exonic region 15-16.</title>
        <authorList>
            <person name="Wijnen J."/>
            <person name="Khan P.M."/>
            <person name="Vasen H."/>
            <person name="Menko F."/>
            <person name="van der Klift H."/>
            <person name="van den Broek M."/>
            <person name="van Leeuwen-Cornelisse I."/>
            <person name="Nagengast F."/>
            <person name="Meijers-Heijboer E.J."/>
            <person name="Lindhout D."/>
            <person name="Griffioen G."/>
            <person name="Cats A."/>
            <person name="Kleibeuker J."/>
            <person name="Varesco L."/>
            <person name="Bertario L."/>
            <person name="Bisgaard M.-L."/>
            <person name="Mohr J."/>
            <person name="Kolodner R.D."/>
            <person name="Fodde R."/>
        </authorList>
    </citation>
    <scope>VARIANT LYNCH2 LYS-616 DEL</scope>
</reference>
<reference key="40">
    <citation type="journal article" date="1996" name="Hum. Genet.">
        <title>CpG dinucleotides in the hMSH2 and hMLH1 genes are hotspots for HNPCC mutations.</title>
        <authorList>
            <person name="Maliaka Y.K."/>
            <person name="Chudina A.P."/>
            <person name="Belev N.F."/>
            <person name="Alday P."/>
            <person name="Bochkov N.P."/>
            <person name="Buerstedde J.-M."/>
        </authorList>
    </citation>
    <scope>VARIANTS LYNCH2 MET-117 AND LEU-226</scope>
</reference>
<reference key="41">
    <citation type="journal article" date="1996" name="Hum. Mol. Genet.">
        <title>Microsatellite instability and mutation analysis of hMSH2 and hMLH1 in patients with sporadic, familial and hereditary colorectal cancer.</title>
        <authorList>
            <person name="Moslein G."/>
            <person name="Tester D.J."/>
            <person name="Lindor N.M."/>
            <person name="Honchel R."/>
            <person name="Cunningham J.M."/>
            <person name="French A.J."/>
            <person name="Halling K.C."/>
            <person name="Schwab M."/>
            <person name="Goretzki P."/>
            <person name="Thibodeau S.N."/>
        </authorList>
    </citation>
    <scope>VARIANTS LYNCH2 LYS-616 DEL AND THR-618</scope>
    <scope>VARIANT CRC THR-492</scope>
</reference>
<reference key="42">
    <citation type="journal article" date="1996" name="J. Natl. Cancer Inst.">
        <title>Germline mutations of hMLH1 and hMSH2 genes in Korean hereditary nonpolyposis colorectal cancer.</title>
        <authorList>
            <person name="Han H.-J."/>
            <person name="Yuan Y."/>
            <person name="Ku J.-L."/>
            <person name="Oh J.-H."/>
            <person name="Won Y.-J."/>
            <person name="Kang K.J."/>
            <person name="Kim K.Y."/>
            <person name="Kim S."/>
            <person name="Kim C.Y."/>
            <person name="Kim J.-P."/>
            <person name="Oh N.-G."/>
            <person name="Lee K.H."/>
            <person name="Choe K.J."/>
            <person name="Nakamura Y."/>
            <person name="Park J.-G."/>
        </authorList>
    </citation>
    <scope>VARIANTS LYNCH2 CYS-217; LEU-542; PRO-549 AND PRO-574</scope>
</reference>
<reference key="43">
    <citation type="journal article" date="1996" name="Jpn. J. Cancer Res.">
        <title>Mutational analysis of mismatch repair genes, hMLH1 and hMSH2, in sporadic endometrial carcinomas with microsatellite instability.</title>
        <authorList>
            <person name="Kobayashi K."/>
            <person name="Matsushima M."/>
            <person name="Koi S."/>
            <person name="Saito H."/>
            <person name="Sagae S."/>
            <person name="Kudo R."/>
            <person name="Nakamura Y."/>
        </authorList>
    </citation>
    <scope>VARIANTS LEU-ASN-HIS-37 INS AND ASP-384</scope>
</reference>
<reference key="44">
    <citation type="journal article" date="1996" name="Nat. Med.">
        <title>Analysis of mismatch repair genes in hereditary non-polyposis colorectal cancer patients.</title>
        <authorList>
            <person name="Liu B."/>
            <person name="Parsons R."/>
            <person name="Papadopoulos N."/>
            <person name="Nicolaides N.C."/>
            <person name="Lynch H.T."/>
            <person name="Watson P."/>
            <person name="Jass J.R."/>
            <person name="Dunlop M."/>
            <person name="Wyllie A."/>
            <person name="Peltomaeki P."/>
            <person name="de la Chapelle A."/>
            <person name="Hamilton S.R."/>
            <person name="Vogelstein B."/>
            <person name="Kinzler K.W."/>
        </authorList>
    </citation>
    <scope>VARIANT LYNCH2 ALA-506</scope>
</reference>
<reference key="45">
    <citation type="journal article" date="1997" name="Am. J. Hum. Genet.">
        <title>Hereditary nonpolyposis colorectal cancer families not complying with the Amsterdam criteria show extremely low frequency of mismatch-repair-gene mutations.</title>
        <authorList>
            <person name="Wijnen J."/>
            <person name="Khan P.M."/>
            <person name="Vasen H."/>
            <person name="van der Klift H."/>
            <person name="Mulder A."/>
            <person name="van Leeuwen-Cornelisse I."/>
            <person name="Bakker B."/>
            <person name="Losekoot M."/>
            <person name="Moeller P."/>
            <person name="Fodde R."/>
        </authorList>
    </citation>
    <scope>VARIANTS LYNCH2 LYS-62; SER-64; LYS-616 DEL; ALA-618 AND PRO-659</scope>
    <scope>CHARACTERIZATION OF VARIANT LYNCH2 LYS-62</scope>
    <scope>FUNCTION</scope>
</reference>
<reference key="46">
    <citation type="journal article" date="1997" name="Genes Chromosomes Cancer">
        <title>Characterization of MSH2 and MLH1 mutations in Italian families with hereditary nonpolyposis colorectal cancer.</title>
        <authorList>
            <person name="Viel A."/>
            <person name="Genuardi M."/>
            <person name="Capozzi E."/>
            <person name="Leonardi F."/>
            <person name="Bellacosa A."/>
            <person name="Paravatou-Petsotas M."/>
            <person name="Pomponi M.G."/>
            <person name="Fornasarig M."/>
            <person name="Percesepe A."/>
            <person name="Roncucci L."/>
            <person name="Tamassia M.G."/>
            <person name="Benatti P."/>
            <person name="Ponz de Leon M."/>
            <person name="Valenti A."/>
            <person name="Covino M."/>
            <person name="Anti M."/>
            <person name="Foletto M."/>
            <person name="Boiocchi M."/>
            <person name="Neri G."/>
        </authorList>
    </citation>
    <scope>VARIANT LYNCH2 LYS-616 DEL</scope>
    <scope>VARIANT HIS-265</scope>
</reference>
<reference key="47">
    <citation type="journal article" date="1997" name="Genes Chromosomes Cancer">
        <title>MSH2 and MLH1 mutations in sporadic replication error-positive colorectal carcinoma as assessed by two-dimensional DNA electrophoresis.</title>
        <authorList>
            <person name="Wu Y."/>
            <person name="Nystroem-Lahti M."/>
            <person name="Osinga J."/>
            <person name="Looman M.W.G."/>
            <person name="Peltomaeki P."/>
            <person name="Aaltonen L.A."/>
            <person name="de la Chapelle A."/>
            <person name="Hofstra R.M.W."/>
            <person name="Buys C.H.C.M."/>
        </authorList>
    </citation>
    <scope>VARIANTS CRC GLU-54 AND VAL-244</scope>
    <scope>VARIANTS VAL-219; GLN-325 AND ASN-406</scope>
</reference>
<reference key="48">
    <citation type="journal article" date="1997" name="Genes Chromosomes Cancer">
        <title>Mean age of tumor onset in hereditary nonpolyposis colorectal cancer (HNPCC) families correlates with the presence of mutations in DNA mismatch repair genes.</title>
        <authorList>
            <person name="Pensotti V."/>
            <person name="Radice P."/>
            <person name="Presciuttini S."/>
            <person name="Calistri D."/>
            <person name="Gazzoli I."/>
            <person name="Grimalt Perez A.P."/>
            <person name="Mondini P."/>
            <person name="Buonsanti G."/>
            <person name="Sala P."/>
            <person name="Rossetti C."/>
            <person name="Ranzani G.N."/>
            <person name="Bertario L."/>
            <person name="Pierotti M.A."/>
        </authorList>
    </citation>
    <scope>VARIANTS LYNCH2 PRO-128 AND ASP-244</scope>
    <scope>VARIANT VAL-219</scope>
</reference>
<reference key="49">
    <citation type="journal article" date="1997" name="Hum. Genet.">
        <title>Use of SSCP analysis to identify germline mutations in HNPCC families fulfilling the Amsterdam criteria.</title>
        <authorList>
            <person name="Beck N.E."/>
            <person name="Tomlinson I.P.M."/>
            <person name="Homfray T."/>
            <person name="Frayling I."/>
            <person name="Hodgson S.V."/>
            <person name="Harocopos C.J."/>
            <person name="Bodmer W.F."/>
        </authorList>
    </citation>
    <scope>VARIANT LYNCH2 626-PHE-SER-627 DELINS SER-THR</scope>
</reference>
<reference key="50">
    <citation type="journal article" date="1997" name="Hum. Genet.">
        <title>Hereditary nonpolyposis colorectal cancer: causative role of a germline missense mutation in the hMLH1 gene confirmed by the independent occurrence of the same somatic mutation in tumour tissue.</title>
        <authorList>
            <person name="Wang Y."/>
            <person name="Friedl W."/>
            <person name="Lamberti C."/>
            <person name="Ruelfs C."/>
            <person name="Kruse R."/>
            <person name="Propping P."/>
        </authorList>
    </citation>
    <scope>VARIANT LYNCH2 PRO-329</scope>
</reference>
<reference key="51">
    <citation type="journal article" date="1997" name="Hum. Mutat.">
        <title>Mutational analysis of the hMLH1 gene using an automated two-dimensional DNA typing system.</title>
        <authorList>
            <person name="Sasaki S."/>
            <person name="Tokino T."/>
            <person name="Miyatsu T."/>
            <person name="Muto T."/>
            <person name="Nakamura Y."/>
        </authorList>
    </citation>
    <scope>VARIANT LYNCH2 ARG-67</scope>
    <scope>VARIANT VAL-219</scope>
</reference>
<reference key="52">
    <citation type="journal article" date="1997" name="Hum. Mutat.">
        <title>Molecular basis of HNPCC: mutations of MMR genes.</title>
        <authorList>
            <person name="Papadopoulos N."/>
            <person name="Lindblom A."/>
        </authorList>
    </citation>
    <scope>REVIEW ON VARIANTS</scope>
</reference>
<reference key="53">
    <citation type="journal article" date="1997" name="Hum. Mutat.">
        <title>Hereditary nonpolyposis colorectal cancer (HNPCC): eight novel germline mutations in hMSH2 or hMLH1 genes.</title>
        <authorList>
            <person name="Wehner M."/>
            <person name="Buschhausen L."/>
            <person name="Lamberti C."/>
            <person name="Kruse R."/>
            <person name="Caspari R."/>
            <person name="Propping P."/>
            <person name="Friedl W."/>
        </authorList>
    </citation>
    <scope>VARIANT LYNCH2 LEU-28</scope>
</reference>
<reference key="54">
    <citation type="journal article" date="1997" name="Int. J. Cancer">
        <title>Germline hMSH2 and hMLH1 gene mutations in incomplete HNPCC families.</title>
        <authorList>
            <person name="Wang Q."/>
            <person name="Desseigne F."/>
            <person name="Lasset C."/>
            <person name="Saurin J.-C."/>
            <person name="Navarro C."/>
            <person name="Yagci T."/>
            <person name="Keser I."/>
            <person name="Bagci H."/>
            <person name="Luleci G."/>
            <person name="Gelen T."/>
            <person name="Chayvialle J.-A."/>
            <person name="Puisieux A."/>
            <person name="Ozturk M."/>
        </authorList>
    </citation>
    <scope>VARIANTS LYNCH2 GLY-182; THR-295 AND THR-551</scope>
</reference>
<reference key="55">
    <citation type="journal article" date="1997" name="J. Med. Genet.">
        <title>Germline HNPCC gene variants have little influence on the risk for sporadic colorectal cancer.</title>
        <authorList>
            <person name="Tomlinson I.P.M."/>
            <person name="Beck N.E."/>
            <person name="Homfray T."/>
            <person name="Harocopos C.J."/>
            <person name="Bodmer W.F."/>
        </authorList>
    </citation>
    <scope>VARIANT CRC TYR-77</scope>
    <scope>VARIANT VAL-219</scope>
</reference>
<reference key="56">
    <citation type="journal article" date="1997" name="Nat. Genet.">
        <title>A human compound heterozygote for two MLH1 missense mutations.</title>
        <authorList>
            <person name="Hackman P."/>
            <person name="Tannergaerd P."/>
            <person name="Osei-Mensa S."/>
            <person name="Chen J."/>
            <person name="Kane M.F."/>
            <person name="Kolodner R.D."/>
            <person name="Lambert B."/>
            <person name="Hellgren D."/>
            <person name="Lindblom A."/>
        </authorList>
    </citation>
    <scope>VARIANTS LYNCH2 PHE-44 AND THR-441</scope>
</reference>
<reference key="57">
    <citation type="journal article" date="1998" name="Am. J. Hum. Genet.">
        <title>Systematic analysis of hMSH2 and hMLH1 in young colon cancer patients and controls.</title>
        <authorList>
            <person name="Farrington S.M."/>
            <person name="Lin-Goerke J."/>
            <person name="Ling J."/>
            <person name="Wang Y."/>
            <person name="Burczak J.D."/>
            <person name="Robbins D.J."/>
            <person name="Dunlop M.G."/>
        </authorList>
    </citation>
    <scope>VARIANTS LYNCH2</scope>
    <scope>VARIANTS</scope>
</reference>
<reference key="58">
    <citation type="journal article" date="1998" name="Clin. Genet.">
        <title>DGGE screening of mutations in mismatch repair genes (hMSH2 and hMLH1) in 34 Swedish families with colorectal cancer.</title>
        <authorList>
            <person name="Liu T."/>
            <person name="Wahlberg S."/>
            <person name="Rubio C."/>
            <person name="Holmberg E."/>
            <person name="Groenberg H."/>
            <person name="Lindblom A."/>
        </authorList>
    </citation>
    <scope>VARIANT CRC GLY-268</scope>
</reference>
<reference key="59">
    <citation type="journal article" date="1998" name="Dis. Colon Rectum">
        <title>Germline mutations of hMLH1 and hMSH2 genes in patients with suspected hereditary nonpolyposis colorectal cancer and sporadic early-onset colorectal cancer.</title>
        <authorList>
            <person name="Yuan Y."/>
            <person name="Han H.-J."/>
            <person name="Zheng S."/>
            <person name="Park J.-G."/>
        </authorList>
    </citation>
    <scope>VARIANT LYNCH2 CYS-217</scope>
</reference>
<reference key="60">
    <citation type="journal article" date="1998" name="Hum. Hered.">
        <title>A novel missense mutation in the DNA mismatch repair gene hMLH1 present among East Asians but not among Europeans.</title>
        <authorList>
            <person name="Wang Y."/>
            <person name="Friedl W."/>
            <person name="Lamberti C."/>
            <person name="Noethen M.M."/>
            <person name="Kruse R."/>
            <person name="Propping P."/>
        </authorList>
    </citation>
    <scope>VARIANT ASP-384</scope>
    <scope>ASSOCIATION WITH HNPCC</scope>
</reference>
<reference key="61">
    <citation type="journal article" date="1998" name="Hum. Mutat.">
        <title>Four new mutations in the DNA mismatch repair gene MLH1 in colorectal cancers with microsatellite instability.</title>
        <authorList>
            <person name="Herfarth K.K.-F."/>
            <person name="Ogunbiyi O.A."/>
            <person name="Moley J.F."/>
            <person name="Kodner I.J."/>
            <person name="Wells S.A. Jr."/>
            <person name="Goodfellow P.J."/>
        </authorList>
    </citation>
    <scope>VARIANT LYNCH2 LYS-69</scope>
</reference>
<reference key="62">
    <citation type="journal article" date="1998" name="Hum. Mutat.">
        <title>hMLH1 mutations in hereditary nonpolyposis colorectal cancer kindreds.</title>
        <authorList>
            <person name="Panariello L."/>
            <person name="Scarano M.I."/>
            <person name="de Rosa M."/>
            <person name="Capasso L."/>
            <person name="Renda A."/>
            <person name="Riegler G."/>
            <person name="Rossi G.B."/>
            <person name="Salvatore F."/>
            <person name="Izzo P."/>
        </authorList>
    </citation>
    <scope>VARIANTS LYNCH2 ARG-77 AND PRO-193</scope>
</reference>
<reference key="63">
    <citation type="journal article" date="1998" name="Hum. Mutat.">
        <title>Hereditary nonpolyposis colorectal cancer: identification of novel germline mutations in two kindreds not fulfilling the Amsterdam criteria.</title>
        <authorList>
            <person name="Quaresima B."/>
            <person name="Grandinetti C."/>
            <person name="Baudi F."/>
            <person name="Tassone P."/>
            <person name="Barbieri V."/>
            <person name="Conforti S."/>
            <person name="Avvedimento E.V."/>
            <person name="Costanzo F."/>
            <person name="Venuta S."/>
        </authorList>
    </citation>
    <scope>VARIANT GLY-93</scope>
</reference>
<reference key="64">
    <citation type="journal article" date="1998" name="Int. J. Cancer">
        <title>Excess of hMLH1 germline mutations in Swiss families with hereditary non-polyposis colorectal cancer.</title>
        <authorList>
            <person name="Hutter P."/>
            <person name="Couturier A."/>
            <person name="Membrez V."/>
            <person name="Joris F."/>
            <person name="Sappino A.-P."/>
            <person name="Chappuis P.O."/>
        </authorList>
    </citation>
    <scope>VARIANTS LYNCH2 ARG-67; ILE-262 DEL; THR-551 AND PHE-565</scope>
    <scope>VARIANTS VAL-219 AND MET-716</scope>
</reference>
<reference key="65">
    <citation type="journal article" date="1999" name="Cancer">
        <title>Influence of selection criteria on mutation detection in patients with hereditary nonpolyposis colorectal cancer.</title>
        <authorList>
            <person name="Heinimann K."/>
            <person name="Scott R.J."/>
            <person name="Buerstedde J.-M."/>
            <person name="Weber W."/>
            <person name="Siebold K."/>
            <person name="Attenhofer M."/>
            <person name="Mueller H."/>
            <person name="Dobbie Z."/>
        </authorList>
    </citation>
    <scope>VARIANTS LYNCH2 ARG-67; ARG-117 AND GLU-485</scope>
    <scope>VARIANT VAL-219</scope>
</reference>
<reference key="66">
    <citation type="journal article" date="1999" name="Cancer Res.">
        <title>Neurofibromatosis and early onset of cancers in hMLH1-deficient children.</title>
        <authorList>
            <person name="Wang Q."/>
            <person name="Lasset C."/>
            <person name="Desseigne F."/>
            <person name="Frappaz D."/>
            <person name="Bergeron C."/>
            <person name="Navarro C."/>
            <person name="Ruano E."/>
            <person name="Puisieux A."/>
        </authorList>
    </citation>
    <scope>VARIANT LYNCH2 TRP-67</scope>
</reference>
<reference key="67">
    <citation type="journal article" date="1999" name="Eur. J. Hum. Genet.">
        <title>Assessment of pathogenicity criteria for constitutional missense mutations of the hereditary nonpolyposis colorectal cancer genes MLH1 and MSH2.</title>
        <authorList>
            <person name="Genuardi M."/>
            <person name="Carrara S."/>
            <person name="Anti M."/>
            <person name="Ponz de Leon M."/>
            <person name="Viel A."/>
        </authorList>
    </citation>
    <scope>VARIANTS HIS-265; ALA-326; PRO-385; ASN-406; THR-618 AND MET-716</scope>
</reference>
<reference key="68">
    <citation type="journal article" date="1999" name="Gut">
        <title>Microsatellite instability, a useful diagnostic tool to select patients at high risk for hereditary non-polyposis colorectal cancer: a study in different groups of patients with colorectal cancer.</title>
        <authorList>
            <person name="Lamberti C."/>
            <person name="Kruse R."/>
            <person name="Ruelfs C."/>
            <person name="Caspari R."/>
            <person name="Wang Y."/>
            <person name="Jungck M."/>
            <person name="Mathiak M."/>
            <person name="Malayeri H.R.H."/>
            <person name="Friedl W."/>
            <person name="Sauerbruch T."/>
            <person name="Propping P."/>
        </authorList>
    </citation>
    <scope>VARIANTS LYNCH2 LEU-28; GLU-84 AND PRO-329</scope>
</reference>
<reference key="69">
    <citation type="journal article" date="1999" name="Hum. Genet.">
        <title>Prevalence of germline mutations of hMLH1, hMSH2, hPMS1, hPMS2, and hMSH6 genes in 75 French kindreds with nonpolyposis colorectal cancer.</title>
        <authorList>
            <person name="Wang Q."/>
            <person name="Lasset C."/>
            <person name="Desseigne F."/>
            <person name="Saurin J.-C."/>
            <person name="Maugard C."/>
            <person name="Navarro C."/>
            <person name="Ruano E."/>
            <person name="Descos L."/>
            <person name="Trillet-Lenoir V."/>
            <person name="Bosset J.-F."/>
            <person name="Puisieux A."/>
        </authorList>
    </citation>
    <scope>VARIANTS LYNCH2 TRP-67; MET-117; GLY-182 AND LYS-616 DEL</scope>
    <scope>VARIANT HNPCC TRP-755</scope>
</reference>
<reference key="70">
    <citation type="journal article" date="1999" name="Hum. Genet.">
        <title>Missense mutations in hMLH1 associated with colorectal cancer.</title>
        <authorList>
            <person name="Liu T."/>
            <person name="Tannergaerd P."/>
            <person name="Hackman P."/>
            <person name="Rubio C."/>
            <person name="Kressner U."/>
            <person name="Lindmark G."/>
            <person name="Hellgren D."/>
            <person name="Lambert B."/>
            <person name="Lindblom A."/>
        </authorList>
    </citation>
    <scope>VARIANT CRC GLY-578</scope>
    <scope>VARIANT LYNCH2 ALA-618</scope>
</reference>
<reference key="71">
    <citation type="journal article" date="1999" name="JAMA">
        <title>Novel hMLH1 and hMSH2 germline mutations in African Americans with colorectal cancer.</title>
        <authorList>
            <person name="Weber T.K."/>
            <person name="Chin H.-M."/>
            <person name="Rodriguez-Bigas M."/>
            <person name="Keitz B."/>
            <person name="Gilligan R."/>
            <person name="O'Malley L."/>
            <person name="Urf E."/>
            <person name="Diba N."/>
            <person name="Pazik J."/>
            <person name="Petrelli N.J."/>
        </authorList>
    </citation>
    <scope>VARIANT LYNCH2 PHE-25</scope>
    <scope>VARIANT TYR-718</scope>
</reference>
<reference key="72">
    <citation type="journal article" date="1999" name="J. Natl. Cancer Inst.">
        <title>Frequent microsatellite instability and mismatch repair gene mutations in young Chinese patients with colorectal cancer.</title>
        <authorList>
            <person name="Chan T.L."/>
            <person name="Yuen S.T."/>
            <person name="Chung L.P."/>
            <person name="Ho J.W.C."/>
            <person name="Kwan K.Y.M."/>
            <person name="Chan A.S.Y."/>
            <person name="Ho J.C.Y."/>
            <person name="Leung S.Y."/>
            <person name="Wyllie A.H."/>
        </authorList>
    </citation>
    <scope>VARIANT LYNCH2 TYR-264</scope>
</reference>
<reference key="73">
    <citation type="journal article" date="2000" name="Biochem. Biophys. Res. Commun.">
        <title>Enhanced detection of deleterious and other germline mutations of hMSH2 and hMLH1 in Japanese hereditary nonpolyposis colorectal cancer kindreds.</title>
        <authorList>
            <person name="Nomura S."/>
            <person name="Sugano K."/>
            <person name="Kashiwabara H."/>
            <person name="Taniguchi T."/>
            <person name="Fukayama N."/>
            <person name="Fujita S."/>
            <person name="Akasu T."/>
            <person name="Moriya Y."/>
            <person name="Ohhigashi S."/>
            <person name="Kakizoe T."/>
            <person name="Sekiya T."/>
        </authorList>
    </citation>
    <scope>VARIANTS LYNCH2 VAL-111 AND PRO-588</scope>
    <scope>VARIANTS VAL-219 AND ASP-384</scope>
</reference>
<reference key="74">
    <citation type="journal article" date="2000" name="Eur. J. Hum. Genet.">
        <title>Detection of mutations in mismatch repair genes in Portuguese families with hereditary non-polyposis colorectal cancer (HNPCC) by a multi-method approach.</title>
        <authorList>
            <person name="Fidalgo P."/>
            <person name="Almeida M.R."/>
            <person name="West S."/>
            <person name="Gaspar C."/>
            <person name="Maia L."/>
            <person name="Wijnen J."/>
            <person name="Albuquerque C."/>
            <person name="Curtis A."/>
            <person name="Cravo M."/>
            <person name="Fodde R."/>
            <person name="Leitao C.N."/>
            <person name="Burn J."/>
        </authorList>
    </citation>
    <scope>VARIANTS LYNCH2 HIS-607; ALA-618 AND LEU-659</scope>
    <scope>VARIANT MET-213</scope>
</reference>
<reference key="75">
    <citation type="journal article" date="2000" name="J. Med. Genet.">
        <title>Mutational germline analysis of hMSH2 and hMLH1 genes in early onset colorectal cancer patients.</title>
        <authorList>
            <person name="Montera M."/>
            <person name="Resta N."/>
            <person name="Simone C."/>
            <person name="Guanti G."/>
            <person name="Marchese C."/>
            <person name="Civitelli S."/>
            <person name="Mancini A."/>
            <person name="Pozzi S."/>
            <person name="De Salvo L."/>
            <person name="Bruzzone D."/>
            <person name="Donadini A."/>
            <person name="Romio L."/>
            <person name="Mareni C."/>
        </authorList>
    </citation>
    <scope>VARIANT CRC ARG-260</scope>
    <scope>VARIANT LYNCH2 VAL-304</scope>
</reference>
<reference key="76">
    <citation type="journal article" date="2003" name="J. Med. Genet.">
        <authorList>
            <person name="Montera M."/>
            <person name="Resta N."/>
            <person name="Simone C."/>
            <person name="Guanti G."/>
            <person name="Marchese C."/>
            <person name="Civitelli S."/>
            <person name="Mancini A."/>
            <person name="Pozzi S."/>
            <person name="De Salvo L."/>
            <person name="Bruzzone D."/>
            <person name="Donadini A."/>
            <person name="Romio L."/>
            <person name="Mareni C."/>
        </authorList>
    </citation>
    <scope>ERRATUM OF PUBMED:10882759</scope>
</reference>
<reference key="77">
    <citation type="journal article" date="2001" name="Cancer Detect. Prev.">
        <title>hMLH1 and hMSH2 mutations in families with familial clustering of gastric cancer and hereditary non-polyposis colorectal cancer.</title>
        <authorList>
            <person name="Kim J.C."/>
            <person name="Kim H.C."/>
            <person name="Roh S.A."/>
            <person name="Koo K.H."/>
            <person name="Lee D.H."/>
            <person name="Yu C.S."/>
            <person name="Lee J.H."/>
            <person name="Kim T.W."/>
            <person name="Lee H.I."/>
            <person name="Beck N.E."/>
            <person name="Bodmer W.F."/>
        </authorList>
    </citation>
    <scope>VARIANTS GASTRIC CANCER ARG-106; GLN-109 AND LYS-635</scope>
    <scope>VARIANTS LYNCH2 GLY-234; ILE-321; HIS-485 AND ALA-631</scope>
    <scope>VARIANT CRC ILE-472</scope>
</reference>
<reference key="78">
    <citation type="journal article" date="2001" name="Cancer Lett.">
        <title>Contribution of germline MLH1 and MSH2 mutations to lobular carcinoma in situ of the breast.</title>
        <authorList>
            <person name="Stone J.G."/>
            <person name="Coleman G."/>
            <person name="Gusterson B."/>
            <person name="Marossy A."/>
            <person name="Lakhani S.R."/>
            <person name="Ward A."/>
            <person name="Nash A."/>
            <person name="McKinna A."/>
            <person name="A'Hern R."/>
            <person name="Stratton M.R."/>
            <person name="Houlston R.S."/>
        </authorList>
    </citation>
    <scope>VARIANT HIS-607</scope>
</reference>
<reference key="79">
    <citation type="journal article" date="2001" name="Cancer Res.">
        <title>Extensive somatic microsatellite mutations in normal human tissue.</title>
        <authorList>
            <person name="Vilkki S."/>
            <person name="Tsao J.-L."/>
            <person name="Loukola A."/>
            <person name="Poyhonen M."/>
            <person name="Vierimaa O."/>
            <person name="Herva R."/>
            <person name="Aaltonen L.A."/>
            <person name="Shibata D."/>
        </authorList>
    </citation>
    <scope>INVOLVEMENT IN TUMORIGENESIS</scope>
</reference>
<reference key="80">
    <citation type="journal article" date="2001" name="Eur. J. Med. Res.">
        <title>Sixteen rare sequence variants of the hMLH1 and hMSH2 genes found in a cohort of 254 suspected HNPCC (hereditary non-polyposis colorectal cancer) patients: mutations or polymorphisms?</title>
        <authorList>
            <person name="Mueller-Koch Y."/>
            <person name="Kopp R."/>
            <person name="Lohse P."/>
            <person name="Baretton G."/>
            <person name="Stoetzer A."/>
            <person name="Aust D."/>
            <person name="Daum J."/>
            <person name="Kerker B."/>
            <person name="Gross M."/>
            <person name="Dietmeier W."/>
            <person name="Holinski-Feder E."/>
        </authorList>
    </citation>
    <scope>VARIANTS LYNCH2 VAL-80; PRO-329; ARG-603; ALA-618; LEU-648; PRO-662 AND ARG-689</scope>
</reference>
<reference key="81">
    <citation type="journal article" date="2001" name="Hum. Mol. Genet.">
        <title>Functional analysis of human MLH1 and MSH2 missense variants and hybrid human-yeast MLH1 proteins in Saccharomyces cerevisiae.</title>
        <authorList>
            <person name="Ellison A.R."/>
            <person name="Lofing J."/>
            <person name="Bitter G.A."/>
        </authorList>
    </citation>
    <scope>CHARACTERIZATION OF VARIANTS</scope>
</reference>
<reference key="82">
    <citation type="journal article" date="2001" name="Hum. Mutat.">
        <title>Optimization of experimental conditions for RNA-based sequencing of MLH1 and MSH2 genes.</title>
        <authorList>
            <person name="Jakubowska A."/>
            <person name="Gorski B."/>
            <person name="Kurzawski G."/>
            <person name="Debniak T."/>
            <person name="Hadaczek P."/>
            <person name="Cybulski C."/>
            <person name="Kladny J."/>
            <person name="Oszurek O."/>
            <person name="Scott R.J."/>
            <person name="Lubinski J."/>
        </authorList>
    </citation>
    <scope>VARIANT LYNCH2 ARG-751</scope>
</reference>
<reference key="83">
    <citation type="journal article" date="2001" name="Hum. Mutat.">
        <title>Eight novel germline MLH1 and MSH2 mutations in hereditary non-polyposis colorectal cancer families from Spain.</title>
        <authorList>
            <person name="Godino J."/>
            <person name="de La Hoya M."/>
            <person name="Diaz-Rubio E."/>
            <person name="Benito M."/>
            <person name="Caldes T."/>
        </authorList>
    </citation>
    <scope>VARIANTS LYNCH2 HIS-622 AND TRP-687</scope>
</reference>
<reference key="84">
    <citation type="journal article" date="2002" name="Ann. Surg. Oncol.">
        <title>hMLH1 and hMSH2 gene mutation in Brazilian families with suspected hereditary nonpolyposis colorectal cancer.</title>
        <authorList>
            <person name="Rossi B.M."/>
            <person name="Lopes A."/>
            <person name="Oliveira Ferreira F."/>
            <person name="Nakagawa W.T."/>
            <person name="Napoli Ferreira C.C."/>
            <person name="Casali Da Rocha J.C."/>
            <person name="Simpson C.C."/>
            <person name="Simpson A.J.G."/>
        </authorList>
    </citation>
    <scope>VARIANTS LYNCH2 SER-338; ARG-603; THR-618 AND TYR-718</scope>
</reference>
<reference key="85">
    <citation type="journal article" date="2002" name="Br. J. Cancer">
        <title>Genomic deletions of MSH2 and MLH1 in colorectal cancer families detected by a novel mutation detection approach.</title>
        <authorList>
            <person name="Gille J.J.P."/>
            <person name="Hogervorst F.B.L."/>
            <person name="Pals G."/>
            <person name="Wijnen J.T."/>
            <person name="van Schooten R.J."/>
            <person name="Dommering C.J."/>
            <person name="Meijer G.A."/>
            <person name="Craanen M.E."/>
            <person name="Nederlof P.M."/>
            <person name="de Jong D."/>
            <person name="McElgunn C.J."/>
            <person name="Schouten J.P."/>
            <person name="Menko F.H."/>
        </authorList>
    </citation>
    <scope>VARIANTS LYNCH2 ASN-35; HIS-38; MET-117 AND ALA-618</scope>
</reference>
<reference key="86">
    <citation type="journal article" date="2002" name="Cancer">
        <title>Microsatellite instability and mutation analysis of candidate genes in unselected Sardinian patients with endometrial carcinoma.</title>
        <authorList>
            <person name="Baldinu P."/>
            <person name="Cossu A."/>
            <person name="Manca A."/>
            <person name="Satta M.P."/>
            <person name="Pisano M."/>
            <person name="Casula M."/>
            <person name="Dessole S."/>
            <person name="Pintus A."/>
            <person name="Tanda F."/>
            <person name="Palmieri G."/>
        </authorList>
    </citation>
    <scope>VARIANTS VAL-219 AND VAL-655</scope>
</reference>
<reference key="87">
    <citation type="journal article" date="2002" name="Gastroenterology">
        <title>Functional analysis of hMLH1 variants and HNPCC-related mutations using a human expression system.</title>
        <authorList>
            <person name="Trojan J."/>
            <person name="Zeuzem S."/>
            <person name="Randolph A."/>
            <person name="Hemmerle C."/>
            <person name="Brieger A."/>
            <person name="Raedle J."/>
            <person name="Plotz G."/>
            <person name="Jiricny J."/>
            <person name="Marra G."/>
        </authorList>
    </citation>
    <scope>CHARACTERIZATION OF VARIANTS LYNCH2 MET-117; GLY-185; CYS-217; ASP-244 AND ALA-326</scope>
    <scope>CHARACTERIZATION OF VARIANTS VAL-219 AND HIS-265</scope>
</reference>
<reference key="88">
    <citation type="journal article" date="2002" name="Gut">
        <title>Pathogenicity of missense and splice site mutations in hMSH2 and hMLH1 mismatch repair genes: implications for genetic testing.</title>
        <authorList>
            <person name="Cravo M."/>
            <person name="Afonso A.J."/>
            <person name="Lage P."/>
            <person name="Albuquerque C."/>
            <person name="Maia L."/>
            <person name="Lacerda C."/>
            <person name="Fidalgo P."/>
            <person name="Chaves P."/>
            <person name="Cruz C."/>
            <person name="Nobre-Leitao C."/>
        </authorList>
    </citation>
    <scope>VARIANTS LYNCH2 CYS-385; HIS-607; THR-618 AND SER-648</scope>
    <scope>VARIANT MET-213</scope>
</reference>
<reference key="89">
    <citation type="journal article" date="2002" name="Genes Chromosomes Cancer">
        <title>Functional analysis of MLH1 mutations linked to hereditary nonpolyposis colon cancer.</title>
        <authorList>
            <person name="Nystroem-Lahti M."/>
            <person name="Perrera C."/>
            <person name="Raeschle M."/>
            <person name="Panyushkina-Seiler E."/>
            <person name="Marra G."/>
            <person name="Curci A."/>
            <person name="Quaresima B."/>
            <person name="Costanzo F."/>
            <person name="D'Urso M."/>
            <person name="Venuta S."/>
            <person name="Jiricny J."/>
        </authorList>
    </citation>
    <scope>CHARACTERIZATION OF VARIANTS LYNCH2 ARG-77; ARG-107 AND PRO-659</scope>
    <scope>CHARACTERIZATION OF VARIANT GLY-93</scope>
</reference>
<reference key="90">
    <citation type="journal article" date="2002" name="Hum. Mutat.">
        <title>Seven novel MLH1 and MSH2 germline mutations in hereditary nonpolyposis colorectal cancer.</title>
        <authorList>
            <person name="Krueger S."/>
            <person name="Plaschke J."/>
            <person name="Pistorius S."/>
            <person name="Jeske B."/>
            <person name="Haas S."/>
            <person name="Kraemer H."/>
            <person name="Hinterseher I."/>
            <person name="Bier A."/>
            <person name="Kreuz F.R."/>
            <person name="Theissig F."/>
            <person name="Saeger H.D."/>
            <person name="Schackert H.K."/>
        </authorList>
    </citation>
    <scope>VARIANT LYNCH2 PRO-662</scope>
    <scope>VARIANT VAL-219</scope>
</reference>
<reference key="91">
    <citation type="journal article" date="2002" name="J. Cancer Res. Clin. Oncol.">
        <title>Impact of microsatellite testing and mismatch repair protein expression on the clinical interpretation of genetic testing in hereditary non-polyposis colorectal cancer.</title>
        <authorList>
            <person name="Ward R."/>
            <person name="Meldrum C."/>
            <person name="Williams R."/>
            <person name="Mokany E."/>
            <person name="Scott R."/>
            <person name="Turner J."/>
            <person name="Hawkins N."/>
            <person name="Burgess B."/>
            <person name="Groombridge C."/>
            <person name="Spigelman A."/>
        </authorList>
    </citation>
    <scope>VARIANTS LYNCH2 MET-117 AND PRO-247</scope>
    <scope>VARIANTS VAL-219; ALA-618 AND MET-716</scope>
</reference>
<reference key="92">
    <citation type="journal article" date="2002" name="J. Clin. Oncol.">
        <title>Mutations of hMLH1 and hMSH2 in patients with suspected hereditary nonpolyposis colorectal cancer: correlation with microsatellite instability and abnormalities of mismatch repair protein expression.</title>
        <authorList>
            <person name="Scartozzi M."/>
            <person name="Bianchi F."/>
            <person name="Rosati S."/>
            <person name="Galizia E."/>
            <person name="Antolini A."/>
            <person name="Loretelli C."/>
            <person name="Piga A."/>
            <person name="Bearzi I."/>
            <person name="Cellerino R."/>
            <person name="Porfiri E."/>
        </authorList>
    </citation>
    <scope>VARIANT LYNCH2 CYS-646</scope>
    <scope>VARIANT ALA-618</scope>
</reference>
<reference key="93">
    <citation type="journal article" date="2002" name="J. Med. Genet.">
        <title>Germline MSH2 and MLH1 mutational spectrum in HNPCC families from Poland and the Baltic States.</title>
        <authorList>
            <person name="Kurzawski G."/>
            <person name="Suchy J."/>
            <person name="Kladny J."/>
            <person name="Safranow K."/>
            <person name="Jakubowska A."/>
            <person name="Elsakov P."/>
            <person name="Kucinskas V."/>
            <person name="Gardovski J."/>
            <person name="Irmejs A."/>
            <person name="Sibul H."/>
            <person name="Huzarski T."/>
            <person name="Byrski T."/>
            <person name="Debniak T."/>
            <person name="Cybulski C."/>
            <person name="Gronwald J."/>
            <person name="Oszurek O."/>
            <person name="Clark J."/>
            <person name="Gozdz S."/>
            <person name="Niepsuj S."/>
            <person name="Slomski R."/>
            <person name="Plawski A."/>
            <person name="Lacka-Wojciechowska A."/>
            <person name="Rozmiarek A."/>
            <person name="Fiszer-Maliszewska L."/>
            <person name="Bebenek M."/>
            <person name="Sorokin D."/>
            <person name="Stawicka M."/>
            <person name="Godlewski D."/>
            <person name="Richter P."/>
            <person name="Brozek I."/>
            <person name="Wysocka B."/>
            <person name="Jawien A."/>
            <person name="Banaszkiewicz Z."/>
            <person name="Kowalczyk J."/>
            <person name="Czudowska D."/>
            <person name="Goretzki P.E."/>
            <person name="Moeslein G."/>
            <person name="Lubinski J."/>
        </authorList>
    </citation>
    <scope>VARIANTS LYNCH2 PHE-19; LEU-28; MET-117; PRO-292; THR-681 AND TRP-687</scope>
    <scope>VARIANT VAL-219</scope>
</reference>
<reference key="94">
    <citation type="journal article" date="2003" name="Am. J. Hum. Genet.">
        <title>Molecular analysis of hereditary nonpolyposis colorectal cancer in the United States: high mutation detection rate among clinically selected families and characterization of an American founder genomic deletion of the MSH2 gene.</title>
        <authorList>
            <person name="Wagner A."/>
            <person name="Barrows A."/>
            <person name="Wijnen J.T."/>
            <person name="van der Klift H."/>
            <person name="Franken P.F."/>
            <person name="Verkuijlen P."/>
            <person name="Nakagawa H."/>
            <person name="Geugien M."/>
            <person name="Jaghmohan-Changur S."/>
            <person name="Breukel C."/>
            <person name="Meijers-Heijboer H."/>
            <person name="Morreau H."/>
            <person name="van Puijenbroek M."/>
            <person name="Burn J."/>
            <person name="Coronel S."/>
            <person name="Kinarski Y."/>
            <person name="Okimoto R."/>
            <person name="Watson P."/>
            <person name="Lynch J.F."/>
            <person name="de la Chapelle A."/>
            <person name="Lynch H.T."/>
            <person name="Fodde R."/>
        </authorList>
    </citation>
    <scope>VARIANTS LYNCH2 SER-29; ARG-67; LEU-185 AND ASP-244</scope>
</reference>
<reference key="95">
    <citation type="journal article" date="2003" name="Ann. Oncol.">
        <title>Microsatellite instability and mutation analysis among southern Italian patients with colorectal carcinoma: detection of different alterations accounting for MLH1 and MSH2 inactivation in familial cases.</title>
        <authorList>
            <person name="Colombino M."/>
            <person name="Cossu A."/>
            <person name="Arba A."/>
            <person name="Manca A."/>
            <person name="Curci A."/>
            <person name="Avallone A."/>
            <person name="Comella G."/>
            <person name="Botti G."/>
            <person name="Scintu F."/>
            <person name="Amoruso M."/>
            <person name="D'Abbicco D."/>
            <person name="d'Agnessa M.R."/>
            <person name="Spanu A."/>
            <person name="Tanda F."/>
            <person name="Palmieri G."/>
        </authorList>
    </citation>
    <scope>VARIANTS CRC 325-ARG--GLN-327 DEL; ARG-618 AND PRO-749</scope>
</reference>
<reference key="96">
    <citation type="journal article" date="2003" name="Hum. Mutat.">
        <title>Identification of six novel MSH2 and MLH1 germline mutations in HNPCC.</title>
        <authorList>
            <person name="Kruger S."/>
            <person name="Plaschke J."/>
            <person name="Jeske B."/>
            <person name="Gorgens H."/>
            <person name="Pistorius S.R."/>
            <person name="Bier A."/>
            <person name="Kreuz F.R."/>
            <person name="Theissig F."/>
            <person name="Aust D.E."/>
            <person name="Saeger H.D."/>
            <person name="Schackert H.K."/>
        </authorList>
    </citation>
    <scope>VARIANT LYNCH2 PRO-586</scope>
</reference>
<reference key="97">
    <citation type="journal article" date="2003" name="Hum. Mutat.">
        <title>Genetic analysis of familial colorectal cancer in Israeli Arabs.</title>
        <authorList>
            <person name="Chen-Shtoyerman R."/>
            <person name="Theodor L."/>
            <person name="Harmati E."/>
            <person name="Friedman E."/>
            <person name="Dacka S."/>
            <person name="Kopelman Y."/>
            <person name="Sternberg A."/>
            <person name="Zarivach R."/>
            <person name="Bar-Meir S."/>
            <person name="Fireman Z."/>
        </authorList>
    </citation>
    <scope>VARIANT CRC GLY-601</scope>
</reference>
<reference key="98">
    <citation type="journal article" date="2003" name="Hum. Mutat.">
        <title>Genomic deletions in MSH2 or MLH1 are a frequent cause of hereditary non-polyposis colorectal cancer: identification of novel and recurrent deletions by MLPA.</title>
        <authorList>
            <person name="Taylor C.F."/>
            <person name="Charlton R.S."/>
            <person name="Burn J."/>
            <person name="Sheridan E."/>
            <person name="Taylor G.R."/>
        </authorList>
    </citation>
    <scope>VARIANTS LYNCH2 CYS-18; ASP-101; LYS-182; CYS-379; ARG-559 AND LYS-616 DEL</scope>
</reference>
<reference key="99">
    <citation type="journal article" date="2004" name="Genes Chromosomes Cancer">
        <title>HNPCC mutation MLH1 P648S makes the functional protein unstable, and homozygosity predisposes to mild neurofibromatosis type 1.</title>
        <authorList>
            <person name="Raevaara T.E."/>
            <person name="Gerdes A.-M."/>
            <person name="Loennqvist K.E."/>
            <person name="Tybjaerg-Hansen A."/>
            <person name="Abdel-Rahman W.M."/>
            <person name="Kariola R."/>
            <person name="Peltomaeki P."/>
            <person name="Nystroem-Lahti M."/>
        </authorList>
    </citation>
    <scope>VARIANT LYNCH2 SER-648</scope>
</reference>
<reference key="100">
    <citation type="journal article" date="2004" name="Hum. Mutat.">
        <title>Germline mutations in MLH1, MSH2 and MSH6 in Korean hereditary non-polyposis colorectal cancer families.</title>
        <authorList>
            <person name="Shin Y.-K."/>
            <person name="Heo S.-C."/>
            <person name="Shin J.-H."/>
            <person name="Hong S.-H."/>
            <person name="Ku J.-L."/>
            <person name="Yoo B.-C."/>
            <person name="Kim I.-J."/>
            <person name="Park J.-G."/>
        </authorList>
    </citation>
    <scope>VARIANTS LYNCH2 CYS-217; GLY-282; LEU-542; PRO-542; PRO-549; PRO-574; PRO-636; SER-640 AND MET-724</scope>
</reference>
<reference key="101">
    <citation type="journal article" date="2005" name="Hum. Mutat.">
        <authorList>
            <person name="Shin Y.K."/>
            <person name="Heo S.C."/>
            <person name="Shin J.H."/>
            <person name="Hong S.H."/>
            <person name="Ku J.L."/>
            <person name="Yoo B.C."/>
            <person name="Kim I.J."/>
            <person name="Park J.G."/>
        </authorList>
    </citation>
    <scope>ERRATUM OF PUBMED:15365995</scope>
</reference>
<reference key="102">
    <citation type="journal article" date="2004" name="Hum. Mutat.">
        <title>Ten novel MSH2 and MLH1 germline mutations in families with HNPCC.</title>
        <authorList>
            <person name="Krueger S."/>
            <person name="Bier A."/>
            <person name="Plaschke J."/>
            <person name="Hoehl R."/>
            <person name="Aust D.E."/>
            <person name="Kreuz F.R."/>
            <person name="Pistorius S.R."/>
            <person name="Saeger H.D."/>
            <person name="Rothhammer V."/>
            <person name="Al-Taie O."/>
            <person name="Schackert H.K."/>
        </authorList>
    </citation>
    <scope>VARIANTS LYNCH2 GLY-41 AND ASN-VAL-PHE-HIS-ILE-719 INS</scope>
</reference>
<reference key="103">
    <citation type="journal article" date="2004" name="Int. J. Cancer">
        <title>Mutation analysis of the MLH1, MSH2 and MSH6 genes in patients with double primary cancers of the colorectum and the endometrium: a population-based study in northern Sweden.</title>
        <authorList>
            <person name="Cederquist K."/>
            <person name="Emanuelsson M."/>
            <person name="Goeransson I."/>
            <person name="Holinski-Feder E."/>
            <person name="Mueller-Koch Y."/>
            <person name="Golovleva I."/>
            <person name="Groenberg H."/>
        </authorList>
    </citation>
    <scope>VARIANTS LYNCH2 VAL-21; ARG-67; ASN-68 AND LYS-616 DEL</scope>
</reference>
<reference key="104">
    <citation type="journal article" date="2005" name="Int. J. Cancer">
        <authorList>
            <person name="Cederquist K."/>
            <person name="Emanuelsson M."/>
            <person name="Goransson I."/>
            <person name="Holinski-Feder E."/>
            <person name="Muller-Koch Y."/>
            <person name="Golovleva I."/>
            <person name="Gronberg H."/>
        </authorList>
    </citation>
    <scope>ERRATUM OF PUBMED:14961575</scope>
</reference>
<reference key="105">
    <citation type="journal article" date="2004" name="Nat. Genet.">
        <title>Germline epimutation of MLH1 in individuals with multiple cancers.</title>
        <authorList>
            <person name="Suter C.M."/>
            <person name="Martin D.I.K."/>
            <person name="Ward R.L."/>
        </authorList>
    </citation>
    <scope>INVOLVEMENT IN LYNCH2 BY EPIGENETIC INHERITANCE</scope>
</reference>
<reference key="106">
    <citation type="journal article" date="2004" name="Nat. Genet.">
        <title>The MLH1 D132H variant is associated with susceptibility to sporadic colorectal cancer.</title>
        <authorList>
            <person name="Lipkin S.M."/>
            <person name="Rozek L.S."/>
            <person name="Rennert G."/>
            <person name="Yang W."/>
            <person name="Chen P.-C."/>
            <person name="Hacia J."/>
            <person name="Hunt N."/>
            <person name="Shin B."/>
            <person name="Fodor S."/>
            <person name="Kokoris M."/>
            <person name="Greenson J.K."/>
            <person name="Fearon E."/>
            <person name="Lynch H."/>
            <person name="Collins F."/>
            <person name="Gruber S.B."/>
        </authorList>
    </citation>
    <scope>VARIANT HIS-132</scope>
</reference>
<reference key="107">
    <citation type="journal article" date="2005" name="Gastroenterology">
        <title>Functional significance and clinical phenotype of nontruncating mismatch repair variants of MLH1.</title>
        <authorList>
            <person name="Raevaara T.E."/>
            <person name="Korhonen M.K."/>
            <person name="Lohi H."/>
            <person name="Hampel H."/>
            <person name="Lynch E."/>
            <person name="Loennqvist K.E."/>
            <person name="Holinski-Feder E."/>
            <person name="Sutter C."/>
            <person name="McKinnon W."/>
            <person name="Duraisamy S."/>
            <person name="Gerdes A.-M."/>
            <person name="Peltomaeki P."/>
            <person name="Kohonen-Corish M."/>
            <person name="Mangold E."/>
            <person name="Macrae F."/>
            <person name="Greenblatt M."/>
            <person name="de la Chapelle A."/>
            <person name="Nystroem M."/>
        </authorList>
    </citation>
    <scope>VARIANTS LYNCH2 LEU-28; 45-THR--PHE-47 DELINS CYS-PHE; GLU-63; ARG-67; GLU-71 DEL; ARG-77; VAL-80; GLU-84; ARG-107; ARG-155; GLY-185; PRO-247; PRO-329; ILE-330 DEL; PRO-550; ASP-589; VAL-612 DEL; LYS-616 DEL; LEU-648; SER-648; LEU-654 AND PRO-659</scope>
    <scope>VARIANTS SER-29; GLY-93; GLN-443; ALA-618; CYS-646; GLN-659; THR-681 AND MET-716</scope>
    <scope>CHARACTERIZATION OF VARIANTS LYNCH2 LEU-28; 45-THR--PHE-47 DELINS CYS-PHE; GLU-63; ARG-67; GLU-71 DEL; ARG-77; VAL-80; GLU-84; ARG-107; ARG-155; GLY-185; PRO-247; PRO-329; ILE-330 DEL; PRO-550; ASP-589; VAL-612 DEL; LYS-616 DEL; THR-618; LEU-648; SER-648; LEU-654 AND PRO-659</scope>
    <scope>CHARACTERIZATION OF VARIANTS SER-29; GLY-93; MET-213; VAL-219; GLN-443; ALA-618; CYS-646; GLN-659; THR-681 AND MET-716</scope>
</reference>
<reference key="108">
    <citation type="journal article" date="2006" name="Clin. Genet.">
        <title>Germline MSH2 and MLH1 mutational spectrum including large rearrangements in HNPCC families from Poland (update study).</title>
        <authorList>
            <person name="Kurzawski G."/>
            <person name="Suchy J."/>
            <person name="Lener M."/>
            <person name="Klujszo-Grabowska E."/>
            <person name="Kladny J."/>
            <person name="Safranow K."/>
            <person name="Jakubowska K."/>
            <person name="Jakubowska A."/>
            <person name="Huzarski T."/>
            <person name="Byrski T."/>
            <person name="Debniak T."/>
            <person name="Cybulski C."/>
            <person name="Gronwald J."/>
            <person name="Oszurek O."/>
            <person name="Oszutowska D."/>
            <person name="Kowalska E."/>
            <person name="Gozdz S."/>
            <person name="Niepsuj S."/>
            <person name="Slomski R."/>
            <person name="Plawski A."/>
            <person name="Lacka-Wojciechowska A."/>
            <person name="Rozmiarek A."/>
            <person name="Fiszer-Maliszewska L."/>
            <person name="Bebenek M."/>
            <person name="Sorokin D."/>
            <person name="Sasiadek M.M."/>
            <person name="Stembalska A."/>
            <person name="Grzebieniak Z."/>
            <person name="Kilar E."/>
            <person name="Stawicka M."/>
            <person name="Godlewski D."/>
            <person name="Richter P."/>
            <person name="Brozek I."/>
            <person name="Wysocka B."/>
            <person name="Limon J."/>
            <person name="Jawien A."/>
            <person name="Banaszkiewicz Z."/>
            <person name="Janiszewska H."/>
            <person name="Kowalczyk J."/>
            <person name="Czudowska D."/>
            <person name="Scott R.J."/>
            <person name="Lubinski J."/>
        </authorList>
    </citation>
    <scope>VARIANTS LYNCH2 LEU-28; LYS-35; ARG-67; VAL-111; MET-117; PRO-292; THR-441; LYS-618 DEL; PRO-623; ILE-657 DEL; THR-681; TRP-687 AND ARG-751</scope>
</reference>
<reference key="109">
    <citation type="journal article" date="2007" name="Cancer">
        <title>Biallelic germline mutations of mismatch-repair genes: a possible cause for multiple pediatric malignancies.</title>
        <authorList>
            <consortium name="Rotterdam initiative on gastrointestinal hereditary tumors"/>
            <person name="Poley J.-W."/>
            <person name="Wagner A."/>
            <person name="Hoogmans M.M.C.P."/>
            <person name="Menko F.H."/>
            <person name="Tops C."/>
            <person name="Kros J.M."/>
            <person name="Reddingius R.E."/>
            <person name="Meijers-Heijboer H."/>
            <person name="Kuipers E.J."/>
            <person name="Dinjens W.N.M."/>
        </authorList>
    </citation>
    <scope>VARIANT MMRCS1 ASN-35</scope>
</reference>
<reference key="110">
    <citation type="journal article" date="2007" name="Cancer Res.">
        <title>Functional analysis of human MLH1 variants using yeast and in vitro mismatch repair assays.</title>
        <authorList>
            <person name="Takahashi M."/>
            <person name="Shimodaira H."/>
            <person name="Andreutti-Zaugg C."/>
            <person name="Iggo R."/>
            <person name="Kolodner R.D."/>
            <person name="Ishioka C."/>
        </authorList>
    </citation>
    <scope>VARIANTS LYNCH2 LYS-102 AND GLN-474</scope>
</reference>
<reference key="111">
    <citation type="journal article" date="2007" name="N. Engl. J. Med.">
        <title>Inheritance of a cancer-associated MLH1 germ-line epimutation.</title>
        <authorList>
            <person name="Hitchins M.P."/>
            <person name="Wong J.J.L."/>
            <person name="Suthers G."/>
            <person name="Suter C.M."/>
            <person name="Martin D.I.K."/>
            <person name="Hawkins N.J."/>
            <person name="Ward R.L."/>
        </authorList>
    </citation>
    <scope>INVOLVEMENT IN LYNCH2 BY GERMLINE EPIMUTATION</scope>
</reference>
<reference key="112">
    <citation type="journal article" date="2008" name="Hum. Mutat.">
        <title>Classification of ambiguous mutations in DNA mismatch repair genes identified in a population-based study of colorectal cancer.</title>
        <authorList>
            <person name="Barnetson R.A."/>
            <person name="Cartwright N."/>
            <person name="van Vliet A."/>
            <person name="Haq N."/>
            <person name="Drew K."/>
            <person name="Farrington S."/>
            <person name="Williams N."/>
            <person name="Warner J."/>
            <person name="Campbell H."/>
            <person name="Porteous M.E."/>
            <person name="Dunlop M.G."/>
        </authorList>
    </citation>
    <scope>VARIANTS CRC GLU-67 AND THR-681</scope>
    <scope>VARIANTS ALA-22; GLY-93; SER-309; ASN-406; HIS-607; ALA-618; ARG-689; MET-716; TYR-718 AND ARG-751</scope>
</reference>
<reference key="113">
    <citation type="journal article" date="2008" name="Hum. Mutat.">
        <title>A large fraction of unclassified variants of the mismatch repair genes MLH1 and MSH2 is associated with splicing defects.</title>
        <authorList>
            <person name="Tournier I."/>
            <person name="Vezain M."/>
            <person name="Martins A."/>
            <person name="Charbonnier F."/>
            <person name="Baert-Desurmont S."/>
            <person name="Olschwang S."/>
            <person name="Wang Q."/>
            <person name="Buisine M.P."/>
            <person name="Soret J."/>
            <person name="Tazi J."/>
            <person name="Frebourg T."/>
            <person name="Tosi M."/>
        </authorList>
    </citation>
    <scope>VARIANTS LYNCH2 HIS-41; SER-101; ILE-330 DEL; PRO-619 AND ARG-689</scope>
    <scope>VARIANTS ARG-67; ARG-77; SER-98; ASP-101; LYS-116; MET-117; ASN-126; MET-213; SER-215; SER-216; PHE-260; CYS-265; HIS-265; ASP-320; ALA-326; ILE-330 DEL; TRP-474; GLN-474; ASP-539; PRO-549; THR-551; ARG-585; ARG-603; HIS-607; SER-640; LEU-640; VAL-655; SER-656; ARG-666 AND THR-681</scope>
</reference>
<reference key="114">
    <citation type="journal article" date="2012" name="Hum. Mutat.">
        <title>Functional characterization of MLH1 missense variants identified in Lynch syndrome patients.</title>
        <authorList>
            <person name="Andersen S.D."/>
            <person name="Liberti S.E."/>
            <person name="Luetzen A."/>
            <person name="Drost M."/>
            <person name="Bernstein I."/>
            <person name="Nilbert M."/>
            <person name="Dominguez M."/>
            <person name="Nystroem M."/>
            <person name="Hansen T.V."/>
            <person name="Christoffersen J.W."/>
            <person name="Jaeger A.C."/>
            <person name="de Wind N."/>
            <person name="Nielsen F.C."/>
            <person name="Toerring P.M."/>
            <person name="Rasmussen L.J."/>
        </authorList>
    </citation>
    <scope>VARIANTS LYNCH2 CYS-233 DEL AND TRP-389</scope>
    <scope>CHARACTERIZATION OF VARIANTS LYNCH2 LEU-28; LYS-37; HIS-38; LYS-38; PHE-44; ARG-67; PRO-109; PRO-111; MET-117; CYS-233 DEL; CYS-265; TRP-389; GLN-443; PRO-550; GLY-578; PHE-582; ASP-589; ALA-618; CYS-646; LEU-648; LEU-654; PRO-659 AND VAL-716 DEL</scope>
    <scope>CHARACTERIZATION OF VARIANTS GLY-93; VAL-219; SER-403; ASN-406 AND MET-716</scope>
    <scope>INTERACTION WITH PMS2</scope>
    <scope>INTERACTION WITH EXO1</scope>
    <scope>SUBCELLULAR LOCATION</scope>
</reference>
<reference key="115">
    <citation type="journal article" date="2017" name="Cancer Biol. Ther.">
        <title>Functional analysis of rare variants in mismatch repair proteins augments results from computation-based predictive methods.</title>
        <authorList>
            <person name="Arora S."/>
            <person name="Huwe P.J."/>
            <person name="Sikder R."/>
            <person name="Shah M."/>
            <person name="Browne A.J."/>
            <person name="Lesh R."/>
            <person name="Nicolas E."/>
            <person name="Deshpande S."/>
            <person name="Hall M.J."/>
            <person name="Dunbrack R.L. Jr."/>
            <person name="Golemis E.A."/>
        </authorList>
    </citation>
    <scope>VARIANTS ARG-116; LEU-213; LEU-264; THR-423 AND HIS-725</scope>
    <scope>CHARACTERIZATION OF VARIANTS ARG-116; LEU-213; LEU-264; THR-423 AND HIS-725</scope>
</reference>
<dbReference type="EMBL" id="U07343">
    <property type="protein sequence ID" value="AAC50285.1"/>
    <property type="molecule type" value="mRNA"/>
</dbReference>
<dbReference type="EMBL" id="U07418">
    <property type="protein sequence ID" value="AAA17374.1"/>
    <property type="molecule type" value="mRNA"/>
</dbReference>
<dbReference type="EMBL" id="U40978">
    <property type="protein sequence ID" value="AAA82079.1"/>
    <property type="molecule type" value="Genomic_DNA"/>
</dbReference>
<dbReference type="EMBL" id="U40960">
    <property type="protein sequence ID" value="AAA82079.1"/>
    <property type="status" value="JOINED"/>
    <property type="molecule type" value="Genomic_DNA"/>
</dbReference>
<dbReference type="EMBL" id="U40961">
    <property type="protein sequence ID" value="AAA82079.1"/>
    <property type="status" value="JOINED"/>
    <property type="molecule type" value="Genomic_DNA"/>
</dbReference>
<dbReference type="EMBL" id="U40962">
    <property type="protein sequence ID" value="AAA82079.1"/>
    <property type="status" value="JOINED"/>
    <property type="molecule type" value="Genomic_DNA"/>
</dbReference>
<dbReference type="EMBL" id="U40963">
    <property type="protein sequence ID" value="AAA82079.1"/>
    <property type="status" value="JOINED"/>
    <property type="molecule type" value="Genomic_DNA"/>
</dbReference>
<dbReference type="EMBL" id="U40964">
    <property type="protein sequence ID" value="AAA82079.1"/>
    <property type="status" value="JOINED"/>
    <property type="molecule type" value="Genomic_DNA"/>
</dbReference>
<dbReference type="EMBL" id="U40965">
    <property type="protein sequence ID" value="AAA82079.1"/>
    <property type="status" value="JOINED"/>
    <property type="molecule type" value="Genomic_DNA"/>
</dbReference>
<dbReference type="EMBL" id="U40966">
    <property type="protein sequence ID" value="AAA82079.1"/>
    <property type="status" value="JOINED"/>
    <property type="molecule type" value="Genomic_DNA"/>
</dbReference>
<dbReference type="EMBL" id="U40967">
    <property type="protein sequence ID" value="AAA82079.1"/>
    <property type="status" value="JOINED"/>
    <property type="molecule type" value="Genomic_DNA"/>
</dbReference>
<dbReference type="EMBL" id="U40968">
    <property type="protein sequence ID" value="AAA82079.1"/>
    <property type="status" value="JOINED"/>
    <property type="molecule type" value="Genomic_DNA"/>
</dbReference>
<dbReference type="EMBL" id="U40969">
    <property type="protein sequence ID" value="AAA82079.1"/>
    <property type="status" value="JOINED"/>
    <property type="molecule type" value="Genomic_DNA"/>
</dbReference>
<dbReference type="EMBL" id="U40970">
    <property type="protein sequence ID" value="AAA82079.1"/>
    <property type="status" value="JOINED"/>
    <property type="molecule type" value="Genomic_DNA"/>
</dbReference>
<dbReference type="EMBL" id="U40971">
    <property type="protein sequence ID" value="AAA82079.1"/>
    <property type="status" value="JOINED"/>
    <property type="molecule type" value="Genomic_DNA"/>
</dbReference>
<dbReference type="EMBL" id="U40972">
    <property type="protein sequence ID" value="AAA82079.1"/>
    <property type="status" value="JOINED"/>
    <property type="molecule type" value="Genomic_DNA"/>
</dbReference>
<dbReference type="EMBL" id="U40973">
    <property type="protein sequence ID" value="AAA82079.1"/>
    <property type="status" value="JOINED"/>
    <property type="molecule type" value="Genomic_DNA"/>
</dbReference>
<dbReference type="EMBL" id="U40974">
    <property type="protein sequence ID" value="AAA82079.1"/>
    <property type="status" value="JOINED"/>
    <property type="molecule type" value="Genomic_DNA"/>
</dbReference>
<dbReference type="EMBL" id="U40975">
    <property type="protein sequence ID" value="AAA82079.1"/>
    <property type="status" value="JOINED"/>
    <property type="molecule type" value="Genomic_DNA"/>
</dbReference>
<dbReference type="EMBL" id="U40976">
    <property type="protein sequence ID" value="AAA82079.1"/>
    <property type="status" value="JOINED"/>
    <property type="molecule type" value="Genomic_DNA"/>
</dbReference>
<dbReference type="EMBL" id="U40977">
    <property type="protein sequence ID" value="AAA82079.1"/>
    <property type="status" value="JOINED"/>
    <property type="molecule type" value="Genomic_DNA"/>
</dbReference>
<dbReference type="EMBL" id="U17857">
    <property type="protein sequence ID" value="AAA85687.1"/>
    <property type="molecule type" value="Genomic_DNA"/>
</dbReference>
<dbReference type="EMBL" id="U17839">
    <property type="protein sequence ID" value="AAA85687.1"/>
    <property type="status" value="JOINED"/>
    <property type="molecule type" value="Genomic_DNA"/>
</dbReference>
<dbReference type="EMBL" id="U17840">
    <property type="protein sequence ID" value="AAA85687.1"/>
    <property type="status" value="JOINED"/>
    <property type="molecule type" value="Genomic_DNA"/>
</dbReference>
<dbReference type="EMBL" id="U17841">
    <property type="protein sequence ID" value="AAA85687.1"/>
    <property type="status" value="JOINED"/>
    <property type="molecule type" value="Genomic_DNA"/>
</dbReference>
<dbReference type="EMBL" id="U17842">
    <property type="protein sequence ID" value="AAA85687.1"/>
    <property type="status" value="JOINED"/>
    <property type="molecule type" value="Genomic_DNA"/>
</dbReference>
<dbReference type="EMBL" id="U17843">
    <property type="protein sequence ID" value="AAA85687.1"/>
    <property type="status" value="JOINED"/>
    <property type="molecule type" value="Genomic_DNA"/>
</dbReference>
<dbReference type="EMBL" id="U17844">
    <property type="protein sequence ID" value="AAA85687.1"/>
    <property type="status" value="JOINED"/>
    <property type="molecule type" value="Genomic_DNA"/>
</dbReference>
<dbReference type="EMBL" id="U17845">
    <property type="protein sequence ID" value="AAA85687.1"/>
    <property type="status" value="JOINED"/>
    <property type="molecule type" value="Genomic_DNA"/>
</dbReference>
<dbReference type="EMBL" id="U17846">
    <property type="protein sequence ID" value="AAA85687.1"/>
    <property type="status" value="JOINED"/>
    <property type="molecule type" value="Genomic_DNA"/>
</dbReference>
<dbReference type="EMBL" id="U17847">
    <property type="protein sequence ID" value="AAA85687.1"/>
    <property type="status" value="JOINED"/>
    <property type="molecule type" value="Genomic_DNA"/>
</dbReference>
<dbReference type="EMBL" id="U17848">
    <property type="protein sequence ID" value="AAA85687.1"/>
    <property type="status" value="JOINED"/>
    <property type="molecule type" value="Genomic_DNA"/>
</dbReference>
<dbReference type="EMBL" id="U17849">
    <property type="protein sequence ID" value="AAA85687.1"/>
    <property type="status" value="JOINED"/>
    <property type="molecule type" value="Genomic_DNA"/>
</dbReference>
<dbReference type="EMBL" id="U17851">
    <property type="protein sequence ID" value="AAA85687.1"/>
    <property type="status" value="JOINED"/>
    <property type="molecule type" value="Genomic_DNA"/>
</dbReference>
<dbReference type="EMBL" id="U17852">
    <property type="protein sequence ID" value="AAA85687.1"/>
    <property type="status" value="JOINED"/>
    <property type="molecule type" value="Genomic_DNA"/>
</dbReference>
<dbReference type="EMBL" id="U17853">
    <property type="protein sequence ID" value="AAA85687.1"/>
    <property type="status" value="JOINED"/>
    <property type="molecule type" value="Genomic_DNA"/>
</dbReference>
<dbReference type="EMBL" id="U17854">
    <property type="protein sequence ID" value="AAA85687.1"/>
    <property type="status" value="JOINED"/>
    <property type="molecule type" value="Genomic_DNA"/>
</dbReference>
<dbReference type="EMBL" id="U17855">
    <property type="protein sequence ID" value="AAA85687.1"/>
    <property type="status" value="JOINED"/>
    <property type="molecule type" value="Genomic_DNA"/>
</dbReference>
<dbReference type="EMBL" id="U17856">
    <property type="protein sequence ID" value="AAA85687.1"/>
    <property type="status" value="JOINED"/>
    <property type="molecule type" value="Genomic_DNA"/>
</dbReference>
<dbReference type="EMBL" id="AY217549">
    <property type="protein sequence ID" value="AAO22994.1"/>
    <property type="molecule type" value="Genomic_DNA"/>
</dbReference>
<dbReference type="EMBL" id="AK295359">
    <property type="protein sequence ID" value="BAG58325.1"/>
    <property type="molecule type" value="mRNA"/>
</dbReference>
<dbReference type="EMBL" id="AK298324">
    <property type="protein sequence ID" value="BAG60576.1"/>
    <property type="molecule type" value="mRNA"/>
</dbReference>
<dbReference type="EMBL" id="AK298583">
    <property type="protein sequence ID" value="BAG60773.1"/>
    <property type="molecule type" value="mRNA"/>
</dbReference>
<dbReference type="EMBL" id="AK316074">
    <property type="protein sequence ID" value="BAH14445.1"/>
    <property type="molecule type" value="mRNA"/>
</dbReference>
<dbReference type="EMBL" id="AK316264">
    <property type="protein sequence ID" value="BAH14635.1"/>
    <property type="molecule type" value="mRNA"/>
</dbReference>
<dbReference type="EMBL" id="AC006583">
    <property type="status" value="NOT_ANNOTATED_CDS"/>
    <property type="molecule type" value="Genomic_DNA"/>
</dbReference>
<dbReference type="EMBL" id="AC011816">
    <property type="status" value="NOT_ANNOTATED_CDS"/>
    <property type="molecule type" value="Genomic_DNA"/>
</dbReference>
<dbReference type="EMBL" id="CH471055">
    <property type="protein sequence ID" value="EAW64483.1"/>
    <property type="molecule type" value="Genomic_DNA"/>
</dbReference>
<dbReference type="EMBL" id="BC006850">
    <property type="protein sequence ID" value="AAH06850.1"/>
    <property type="molecule type" value="mRNA"/>
</dbReference>
<dbReference type="CCDS" id="CCDS2663.1">
    <molecule id="P40692-1"/>
</dbReference>
<dbReference type="CCDS" id="CCDS54562.1">
    <molecule id="P40692-3"/>
</dbReference>
<dbReference type="CCDS" id="CCDS54563.1">
    <molecule id="P40692-2"/>
</dbReference>
<dbReference type="PIR" id="S43085">
    <property type="entry name" value="S43085"/>
</dbReference>
<dbReference type="RefSeq" id="NP_000240.1">
    <molecule id="P40692-1"/>
    <property type="nucleotide sequence ID" value="NM_000249.4"/>
</dbReference>
<dbReference type="RefSeq" id="NP_001161089.1">
    <molecule id="P40692-3"/>
    <property type="nucleotide sequence ID" value="NM_001167617.3"/>
</dbReference>
<dbReference type="RefSeq" id="NP_001161090.1">
    <molecule id="P40692-2"/>
    <property type="nucleotide sequence ID" value="NM_001167618.3"/>
</dbReference>
<dbReference type="RefSeq" id="NP_001161091.1">
    <molecule id="P40692-2"/>
    <property type="nucleotide sequence ID" value="NM_001167619.3"/>
</dbReference>
<dbReference type="RefSeq" id="NP_001245200.1">
    <property type="nucleotide sequence ID" value="NM_001258271.1"/>
</dbReference>
<dbReference type="RefSeq" id="NP_001245202.1">
    <molecule id="P40692-2"/>
    <property type="nucleotide sequence ID" value="NM_001258273.2"/>
</dbReference>
<dbReference type="RefSeq" id="NP_001245203.1">
    <molecule id="P40692-2"/>
    <property type="nucleotide sequence ID" value="NM_001258274.3"/>
</dbReference>
<dbReference type="RefSeq" id="NP_001341544.1">
    <molecule id="P40692-2"/>
    <property type="nucleotide sequence ID" value="NM_001354615.2"/>
</dbReference>
<dbReference type="RefSeq" id="NP_001341545.1">
    <molecule id="P40692-2"/>
    <property type="nucleotide sequence ID" value="NM_001354616.2"/>
</dbReference>
<dbReference type="RefSeq" id="NP_001341546.1">
    <molecule id="P40692-2"/>
    <property type="nucleotide sequence ID" value="NM_001354617.2"/>
</dbReference>
<dbReference type="RefSeq" id="NP_001341547.1">
    <molecule id="P40692-2"/>
    <property type="nucleotide sequence ID" value="NM_001354618.2"/>
</dbReference>
<dbReference type="RefSeq" id="NP_001341548.1">
    <molecule id="P40692-2"/>
    <property type="nucleotide sequence ID" value="NM_001354619.2"/>
</dbReference>
<dbReference type="RefSeq" id="NP_001341549.1">
    <molecule id="P40692-3"/>
    <property type="nucleotide sequence ID" value="NM_001354620.2"/>
</dbReference>
<dbReference type="RefSeq" id="XP_005265220.1">
    <property type="nucleotide sequence ID" value="XM_005265163.1"/>
</dbReference>
<dbReference type="RefSeq" id="XP_005265221.1">
    <property type="nucleotide sequence ID" value="XM_005265164.1"/>
</dbReference>
<dbReference type="RefSeq" id="XP_047304109.1">
    <molecule id="P40692-2"/>
    <property type="nucleotide sequence ID" value="XM_047448153.1"/>
</dbReference>
<dbReference type="RefSeq" id="XP_047304110.1">
    <molecule id="P40692-2"/>
    <property type="nucleotide sequence ID" value="XM_047448154.1"/>
</dbReference>
<dbReference type="RefSeq" id="XP_047304111.1">
    <molecule id="P40692-2"/>
    <property type="nucleotide sequence ID" value="XM_047448155.1"/>
</dbReference>
<dbReference type="RefSeq" id="XP_054202541.1">
    <molecule id="P40692-2"/>
    <property type="nucleotide sequence ID" value="XM_054346566.1"/>
</dbReference>
<dbReference type="RefSeq" id="XP_054202542.1">
    <molecule id="P40692-2"/>
    <property type="nucleotide sequence ID" value="XM_054346567.1"/>
</dbReference>
<dbReference type="RefSeq" id="XP_054202543.1">
    <molecule id="P40692-2"/>
    <property type="nucleotide sequence ID" value="XM_054346568.1"/>
</dbReference>
<dbReference type="PDB" id="3RBN">
    <property type="method" value="X-ray"/>
    <property type="resolution" value="2.16 A"/>
    <property type="chains" value="A/B=486-751"/>
</dbReference>
<dbReference type="PDB" id="4P7A">
    <property type="method" value="X-ray"/>
    <property type="resolution" value="2.30 A"/>
    <property type="chains" value="A=1-347"/>
</dbReference>
<dbReference type="PDB" id="5U5P">
    <property type="method" value="X-ray"/>
    <property type="resolution" value="2.17 A"/>
    <property type="chains" value="B/C=467-476"/>
</dbReference>
<dbReference type="PDB" id="6WBA">
    <property type="method" value="X-ray"/>
    <property type="resolution" value="2.15 A"/>
    <property type="chains" value="B/C=466-476"/>
</dbReference>
<dbReference type="PDB" id="6WBB">
    <property type="method" value="X-ray"/>
    <property type="resolution" value="2.66 A"/>
    <property type="chains" value="B/C=466-476"/>
</dbReference>
<dbReference type="PDB" id="6WBC">
    <property type="method" value="X-ray"/>
    <property type="resolution" value="2.15 A"/>
    <property type="chains" value="B=466-476"/>
</dbReference>
<dbReference type="PDB" id="7M60">
    <property type="method" value="X-ray"/>
    <property type="resolution" value="2.30 A"/>
    <property type="chains" value="B/C=466-476"/>
</dbReference>
<dbReference type="PDBsum" id="3RBN"/>
<dbReference type="PDBsum" id="4P7A"/>
<dbReference type="PDBsum" id="5U5P"/>
<dbReference type="PDBsum" id="6WBA"/>
<dbReference type="PDBsum" id="6WBB"/>
<dbReference type="PDBsum" id="6WBC"/>
<dbReference type="PDBsum" id="7M60"/>
<dbReference type="SMR" id="P40692"/>
<dbReference type="BioGRID" id="110438">
    <property type="interactions" value="256"/>
</dbReference>
<dbReference type="ComplexPortal" id="CPX-9901">
    <property type="entry name" value="MutLalpha endonuclease complex"/>
</dbReference>
<dbReference type="ComplexPortal" id="CPX-9941">
    <property type="entry name" value="MutLabeta endonuclease complex"/>
</dbReference>
<dbReference type="ComplexPortal" id="CPX-9961">
    <property type="entry name" value="MutLgamma endonuclease complex"/>
</dbReference>
<dbReference type="CORUM" id="P40692"/>
<dbReference type="DIP" id="DIP-27601N"/>
<dbReference type="FunCoup" id="P40692">
    <property type="interactions" value="2633"/>
</dbReference>
<dbReference type="IntAct" id="P40692">
    <property type="interactions" value="208"/>
</dbReference>
<dbReference type="MINT" id="P40692"/>
<dbReference type="STRING" id="9606.ENSP00000231790"/>
<dbReference type="GlyCosmos" id="P40692">
    <property type="glycosylation" value="1 site, 1 glycan"/>
</dbReference>
<dbReference type="GlyGen" id="P40692">
    <property type="glycosylation" value="3 sites, 1 N-linked glycan (1 site), 1 O-linked glycan (1 site)"/>
</dbReference>
<dbReference type="iPTMnet" id="P40692"/>
<dbReference type="MetOSite" id="P40692"/>
<dbReference type="PhosphoSitePlus" id="P40692"/>
<dbReference type="BioMuta" id="MLH1"/>
<dbReference type="DMDM" id="730028"/>
<dbReference type="jPOST" id="P40692"/>
<dbReference type="MassIVE" id="P40692"/>
<dbReference type="PaxDb" id="9606-ENSP00000231790"/>
<dbReference type="PeptideAtlas" id="P40692"/>
<dbReference type="ProteomicsDB" id="19516"/>
<dbReference type="ProteomicsDB" id="4266"/>
<dbReference type="ProteomicsDB" id="55377">
    <molecule id="P40692-1"/>
</dbReference>
<dbReference type="Pumba" id="P40692"/>
<dbReference type="Antibodypedia" id="4599">
    <property type="antibodies" value="921 antibodies from 46 providers"/>
</dbReference>
<dbReference type="CPTC" id="P40692">
    <property type="antibodies" value="2 antibodies"/>
</dbReference>
<dbReference type="DNASU" id="4292"/>
<dbReference type="Ensembl" id="ENST00000231790.8">
    <molecule id="P40692-1"/>
    <property type="protein sequence ID" value="ENSP00000231790.3"/>
    <property type="gene ID" value="ENSG00000076242.18"/>
</dbReference>
<dbReference type="Ensembl" id="ENST00000429117.6">
    <molecule id="P40692-3"/>
    <property type="protein sequence ID" value="ENSP00000407019.2"/>
    <property type="gene ID" value="ENSG00000076242.18"/>
</dbReference>
<dbReference type="Ensembl" id="ENST00000435176.5">
    <molecule id="P40692-3"/>
    <property type="protein sequence ID" value="ENSP00000402564.1"/>
    <property type="gene ID" value="ENSG00000076242.18"/>
</dbReference>
<dbReference type="Ensembl" id="ENST00000455445.6">
    <molecule id="P40692-2"/>
    <property type="protein sequence ID" value="ENSP00000398272.2"/>
    <property type="gene ID" value="ENSG00000076242.18"/>
</dbReference>
<dbReference type="Ensembl" id="ENST00000458205.6">
    <molecule id="P40692-2"/>
    <property type="protein sequence ID" value="ENSP00000402667.2"/>
    <property type="gene ID" value="ENSG00000076242.18"/>
</dbReference>
<dbReference type="Ensembl" id="ENST00000466900.6">
    <molecule id="P40692-2"/>
    <property type="protein sequence ID" value="ENSP00000519069.1"/>
    <property type="gene ID" value="ENSG00000076242.18"/>
</dbReference>
<dbReference type="Ensembl" id="ENST00000485889.2">
    <molecule id="P40692-2"/>
    <property type="protein sequence ID" value="ENSP00000518946.1"/>
    <property type="gene ID" value="ENSG00000076242.18"/>
</dbReference>
<dbReference type="Ensembl" id="ENST00000492474.6">
    <molecule id="P40692-2"/>
    <property type="protein sequence ID" value="ENSP00000518393.1"/>
    <property type="gene ID" value="ENSG00000076242.18"/>
</dbReference>
<dbReference type="Ensembl" id="ENST00000536378.5">
    <molecule id="P40692-2"/>
    <property type="protein sequence ID" value="ENSP00000444286.2"/>
    <property type="gene ID" value="ENSG00000076242.18"/>
</dbReference>
<dbReference type="Ensembl" id="ENST00000539477.6">
    <molecule id="P40692-2"/>
    <property type="protein sequence ID" value="ENSP00000443665.1"/>
    <property type="gene ID" value="ENSG00000076242.18"/>
</dbReference>
<dbReference type="Ensembl" id="ENST00000674019.1">
    <molecule id="P40692-2"/>
    <property type="protein sequence ID" value="ENSP00000501081.1"/>
    <property type="gene ID" value="ENSG00000076242.18"/>
</dbReference>
<dbReference type="GeneID" id="4292"/>
<dbReference type="KEGG" id="hsa:4292"/>
<dbReference type="MANE-Select" id="ENST00000231790.8">
    <property type="protein sequence ID" value="ENSP00000231790.3"/>
    <property type="RefSeq nucleotide sequence ID" value="NM_000249.4"/>
    <property type="RefSeq protein sequence ID" value="NP_000240.1"/>
</dbReference>
<dbReference type="UCSC" id="uc003cgl.4">
    <molecule id="P40692-1"/>
    <property type="organism name" value="human"/>
</dbReference>
<dbReference type="AGR" id="HGNC:7127"/>
<dbReference type="CTD" id="4292"/>
<dbReference type="DisGeNET" id="4292"/>
<dbReference type="GeneCards" id="MLH1"/>
<dbReference type="GeneReviews" id="MLH1"/>
<dbReference type="HGNC" id="HGNC:7127">
    <property type="gene designation" value="MLH1"/>
</dbReference>
<dbReference type="HPA" id="ENSG00000076242">
    <property type="expression patterns" value="Low tissue specificity"/>
</dbReference>
<dbReference type="MalaCards" id="MLH1"/>
<dbReference type="MIM" id="114500">
    <property type="type" value="phenotype"/>
</dbReference>
<dbReference type="MIM" id="120436">
    <property type="type" value="gene"/>
</dbReference>
<dbReference type="MIM" id="158320">
    <property type="type" value="phenotype"/>
</dbReference>
<dbReference type="MIM" id="276300">
    <property type="type" value="phenotype"/>
</dbReference>
<dbReference type="MIM" id="608089">
    <property type="type" value="phenotype"/>
</dbReference>
<dbReference type="MIM" id="609310">
    <property type="type" value="phenotype"/>
</dbReference>
<dbReference type="neXtProt" id="NX_P40692"/>
<dbReference type="OpenTargets" id="ENSG00000076242"/>
<dbReference type="Orphanet" id="252202">
    <property type="disease" value="Constitutional mismatch repair deficiency syndrome"/>
</dbReference>
<dbReference type="Orphanet" id="144">
    <property type="disease" value="Lynch syndrome"/>
</dbReference>
<dbReference type="PharmGKB" id="PA240"/>
<dbReference type="VEuPathDB" id="HostDB:ENSG00000076242"/>
<dbReference type="eggNOG" id="KOG1979">
    <property type="taxonomic scope" value="Eukaryota"/>
</dbReference>
<dbReference type="GeneTree" id="ENSGT00800000124177"/>
<dbReference type="InParanoid" id="P40692"/>
<dbReference type="OMA" id="ANYHVKK"/>
<dbReference type="OrthoDB" id="10263226at2759"/>
<dbReference type="PAN-GO" id="P40692">
    <property type="GO annotations" value="4 GO annotations based on evolutionary models"/>
</dbReference>
<dbReference type="PhylomeDB" id="P40692"/>
<dbReference type="TreeFam" id="TF300493"/>
<dbReference type="PathwayCommons" id="P40692"/>
<dbReference type="Reactome" id="R-HSA-5358565">
    <property type="pathway name" value="Mismatch repair (MMR) directed by MSH2:MSH6 (MutSalpha)"/>
</dbReference>
<dbReference type="Reactome" id="R-HSA-5358606">
    <property type="pathway name" value="Mismatch repair (MMR) directed by MSH2:MSH3 (MutSbeta)"/>
</dbReference>
<dbReference type="Reactome" id="R-HSA-5545483">
    <property type="pathway name" value="Defective Mismatch Repair Associated With MLH1"/>
</dbReference>
<dbReference type="Reactome" id="R-HSA-5632987">
    <property type="pathway name" value="Defective Mismatch Repair Associated With PMS2"/>
</dbReference>
<dbReference type="Reactome" id="R-HSA-6796648">
    <property type="pathway name" value="TP53 Regulates Transcription of DNA Repair Genes"/>
</dbReference>
<dbReference type="Reactome" id="R-HSA-912446">
    <property type="pathway name" value="Meiotic recombination"/>
</dbReference>
<dbReference type="SignaLink" id="P40692"/>
<dbReference type="SIGNOR" id="P40692"/>
<dbReference type="BioGRID-ORCS" id="4292">
    <property type="hits" value="15 hits in 1172 CRISPR screens"/>
</dbReference>
<dbReference type="CD-CODE" id="91857CE7">
    <property type="entry name" value="Nucleolus"/>
</dbReference>
<dbReference type="ChiTaRS" id="MLH1">
    <property type="organism name" value="human"/>
</dbReference>
<dbReference type="EvolutionaryTrace" id="P40692"/>
<dbReference type="GeneWiki" id="MLH1"/>
<dbReference type="GenomeRNAi" id="4292"/>
<dbReference type="Pharos" id="P40692">
    <property type="development level" value="Tbio"/>
</dbReference>
<dbReference type="PRO" id="PR:P40692"/>
<dbReference type="Proteomes" id="UP000005640">
    <property type="component" value="Chromosome 3"/>
</dbReference>
<dbReference type="RNAct" id="P40692">
    <property type="molecule type" value="protein"/>
</dbReference>
<dbReference type="Bgee" id="ENSG00000076242">
    <property type="expression patterns" value="Expressed in tibialis anterior and 210 other cell types or tissues"/>
</dbReference>
<dbReference type="ExpressionAtlas" id="P40692">
    <property type="expression patterns" value="baseline and differential"/>
</dbReference>
<dbReference type="GO" id="GO:0005712">
    <property type="term" value="C:chiasma"/>
    <property type="evidence" value="ECO:0007669"/>
    <property type="project" value="Ensembl"/>
</dbReference>
<dbReference type="GO" id="GO:0005694">
    <property type="term" value="C:chromosome"/>
    <property type="evidence" value="ECO:0000250"/>
    <property type="project" value="UniProtKB"/>
</dbReference>
<dbReference type="GO" id="GO:0005715">
    <property type="term" value="C:late recombination nodule"/>
    <property type="evidence" value="ECO:0007669"/>
    <property type="project" value="Ensembl"/>
</dbReference>
<dbReference type="GO" id="GO:0001673">
    <property type="term" value="C:male germ cell nucleus"/>
    <property type="evidence" value="ECO:0007669"/>
    <property type="project" value="Ensembl"/>
</dbReference>
<dbReference type="GO" id="GO:0016020">
    <property type="term" value="C:membrane"/>
    <property type="evidence" value="ECO:0007005"/>
    <property type="project" value="UniProtKB"/>
</dbReference>
<dbReference type="GO" id="GO:0032389">
    <property type="term" value="C:MutLalpha complex"/>
    <property type="evidence" value="ECO:0000318"/>
    <property type="project" value="GO_Central"/>
</dbReference>
<dbReference type="GO" id="GO:0005654">
    <property type="term" value="C:nucleoplasm"/>
    <property type="evidence" value="ECO:0000314"/>
    <property type="project" value="HPA"/>
</dbReference>
<dbReference type="GO" id="GO:0005634">
    <property type="term" value="C:nucleus"/>
    <property type="evidence" value="ECO:0000314"/>
    <property type="project" value="UniProtKB"/>
</dbReference>
<dbReference type="GO" id="GO:0000795">
    <property type="term" value="C:synaptonemal complex"/>
    <property type="evidence" value="ECO:0007669"/>
    <property type="project" value="Ensembl"/>
</dbReference>
<dbReference type="GO" id="GO:0005524">
    <property type="term" value="F:ATP binding"/>
    <property type="evidence" value="ECO:0007669"/>
    <property type="project" value="UniProtKB-KW"/>
</dbReference>
<dbReference type="GO" id="GO:0016887">
    <property type="term" value="F:ATP hydrolysis activity"/>
    <property type="evidence" value="ECO:0000318"/>
    <property type="project" value="GO_Central"/>
</dbReference>
<dbReference type="GO" id="GO:0140664">
    <property type="term" value="F:ATP-dependent DNA damage sensor activity"/>
    <property type="evidence" value="ECO:0007669"/>
    <property type="project" value="InterPro"/>
</dbReference>
<dbReference type="GO" id="GO:0003682">
    <property type="term" value="F:chromatin binding"/>
    <property type="evidence" value="ECO:0000314"/>
    <property type="project" value="UniProtKB"/>
</dbReference>
<dbReference type="GO" id="GO:0008047">
    <property type="term" value="F:enzyme activator activity"/>
    <property type="evidence" value="ECO:0000314"/>
    <property type="project" value="BHF-UCL"/>
</dbReference>
<dbReference type="GO" id="GO:0019899">
    <property type="term" value="F:enzyme binding"/>
    <property type="evidence" value="ECO:0000353"/>
    <property type="project" value="UniProtKB"/>
</dbReference>
<dbReference type="GO" id="GO:0032137">
    <property type="term" value="F:guanine/thymine mispair binding"/>
    <property type="evidence" value="ECO:0007669"/>
    <property type="project" value="Ensembl"/>
</dbReference>
<dbReference type="GO" id="GO:0006303">
    <property type="term" value="P:double-strand break repair via nonhomologous end joining"/>
    <property type="evidence" value="ECO:0007669"/>
    <property type="project" value="Ensembl"/>
</dbReference>
<dbReference type="GO" id="GO:0016321">
    <property type="term" value="P:female meiosis chromosome segregation"/>
    <property type="evidence" value="ECO:0007669"/>
    <property type="project" value="Ensembl"/>
</dbReference>
<dbReference type="GO" id="GO:0007129">
    <property type="term" value="P:homologous chromosome pairing at meiosis"/>
    <property type="evidence" value="ECO:0007669"/>
    <property type="project" value="Ensembl"/>
</dbReference>
<dbReference type="GO" id="GO:0008630">
    <property type="term" value="P:intrinsic apoptotic signaling pathway in response to DNA damage"/>
    <property type="evidence" value="ECO:0007669"/>
    <property type="project" value="Ensembl"/>
</dbReference>
<dbReference type="GO" id="GO:0045190">
    <property type="term" value="P:isotype switching"/>
    <property type="evidence" value="ECO:0007669"/>
    <property type="project" value="Ensembl"/>
</dbReference>
<dbReference type="GO" id="GO:0007060">
    <property type="term" value="P:male meiosis chromosome segregation"/>
    <property type="evidence" value="ECO:0007669"/>
    <property type="project" value="Ensembl"/>
</dbReference>
<dbReference type="GO" id="GO:0043060">
    <property type="term" value="P:meiotic metaphase I homologous chromosome alignment"/>
    <property type="evidence" value="ECO:0007669"/>
    <property type="project" value="Ensembl"/>
</dbReference>
<dbReference type="GO" id="GO:0051257">
    <property type="term" value="P:meiotic spindle midzone assembly"/>
    <property type="evidence" value="ECO:0007669"/>
    <property type="project" value="Ensembl"/>
</dbReference>
<dbReference type="GO" id="GO:0045141">
    <property type="term" value="P:meiotic telomere clustering"/>
    <property type="evidence" value="ECO:0007669"/>
    <property type="project" value="Ensembl"/>
</dbReference>
<dbReference type="GO" id="GO:0006298">
    <property type="term" value="P:mismatch repair"/>
    <property type="evidence" value="ECO:0000316"/>
    <property type="project" value="MGI"/>
</dbReference>
<dbReference type="GO" id="GO:0045950">
    <property type="term" value="P:negative regulation of mitotic recombination"/>
    <property type="evidence" value="ECO:0007669"/>
    <property type="project" value="Ensembl"/>
</dbReference>
<dbReference type="GO" id="GO:0000289">
    <property type="term" value="P:nuclear-transcribed mRNA poly(A) tail shortening"/>
    <property type="evidence" value="ECO:0007669"/>
    <property type="project" value="Ensembl"/>
</dbReference>
<dbReference type="GO" id="GO:0048477">
    <property type="term" value="P:oogenesis"/>
    <property type="evidence" value="ECO:0007669"/>
    <property type="project" value="Ensembl"/>
</dbReference>
<dbReference type="GO" id="GO:0048298">
    <property type="term" value="P:positive regulation of isotype switching to IgA isotypes"/>
    <property type="evidence" value="ECO:0007669"/>
    <property type="project" value="Ensembl"/>
</dbReference>
<dbReference type="GO" id="GO:0048304">
    <property type="term" value="P:positive regulation of isotype switching to IgG isotypes"/>
    <property type="evidence" value="ECO:0007669"/>
    <property type="project" value="Ensembl"/>
</dbReference>
<dbReference type="GO" id="GO:0000712">
    <property type="term" value="P:resolution of meiotic recombination intermediates"/>
    <property type="evidence" value="ECO:0007669"/>
    <property type="project" value="Ensembl"/>
</dbReference>
<dbReference type="GO" id="GO:0009617">
    <property type="term" value="P:response to bacterium"/>
    <property type="evidence" value="ECO:0007669"/>
    <property type="project" value="Ensembl"/>
</dbReference>
<dbReference type="GO" id="GO:0016446">
    <property type="term" value="P:somatic hypermutation of immunoglobulin genes"/>
    <property type="evidence" value="ECO:0000318"/>
    <property type="project" value="GO_Central"/>
</dbReference>
<dbReference type="GO" id="GO:0007283">
    <property type="term" value="P:spermatogenesis"/>
    <property type="evidence" value="ECO:0007669"/>
    <property type="project" value="Ensembl"/>
</dbReference>
<dbReference type="CDD" id="cd16926">
    <property type="entry name" value="HATPase_MutL-MLH-PMS-like"/>
    <property type="match status" value="1"/>
</dbReference>
<dbReference type="CDD" id="cd03483">
    <property type="entry name" value="MutL_Trans_MLH1"/>
    <property type="match status" value="1"/>
</dbReference>
<dbReference type="DisProt" id="DP03062"/>
<dbReference type="FunFam" id="3.30.230.10:FF:000014">
    <property type="entry name" value="DNA mismatch repair protein Mlh1"/>
    <property type="match status" value="1"/>
</dbReference>
<dbReference type="FunFam" id="3.30.565.10:FF:000034">
    <property type="entry name" value="DNA mismatch repair protein mlh1, putative"/>
    <property type="match status" value="1"/>
</dbReference>
<dbReference type="Gene3D" id="3.30.230.10">
    <property type="match status" value="1"/>
</dbReference>
<dbReference type="Gene3D" id="3.30.565.10">
    <property type="entry name" value="Histidine kinase-like ATPase, C-terminal domain"/>
    <property type="match status" value="1"/>
</dbReference>
<dbReference type="InterPro" id="IPR014762">
    <property type="entry name" value="DNA_mismatch_repair_CS"/>
</dbReference>
<dbReference type="InterPro" id="IPR013507">
    <property type="entry name" value="DNA_mismatch_S5_2-like"/>
</dbReference>
<dbReference type="InterPro" id="IPR036890">
    <property type="entry name" value="HATPase_C_sf"/>
</dbReference>
<dbReference type="InterPro" id="IPR032189">
    <property type="entry name" value="Mlh1_C"/>
</dbReference>
<dbReference type="InterPro" id="IPR002099">
    <property type="entry name" value="MutL/Mlh/PMS"/>
</dbReference>
<dbReference type="InterPro" id="IPR038973">
    <property type="entry name" value="MutL/Mlh/Pms-like"/>
</dbReference>
<dbReference type="InterPro" id="IPR020568">
    <property type="entry name" value="Ribosomal_Su5_D2-typ_SF"/>
</dbReference>
<dbReference type="InterPro" id="IPR014721">
    <property type="entry name" value="Ribsml_uS5_D2-typ_fold_subgr"/>
</dbReference>
<dbReference type="NCBIfam" id="TIGR00585">
    <property type="entry name" value="mutl"/>
    <property type="match status" value="1"/>
</dbReference>
<dbReference type="PANTHER" id="PTHR10073">
    <property type="entry name" value="DNA MISMATCH REPAIR PROTEIN MLH, PMS, MUTL"/>
    <property type="match status" value="1"/>
</dbReference>
<dbReference type="PANTHER" id="PTHR10073:SF12">
    <property type="entry name" value="DNA MISMATCH REPAIR PROTEIN MLH1"/>
    <property type="match status" value="1"/>
</dbReference>
<dbReference type="Pfam" id="PF01119">
    <property type="entry name" value="DNA_mis_repair"/>
    <property type="match status" value="1"/>
</dbReference>
<dbReference type="Pfam" id="PF13589">
    <property type="entry name" value="HATPase_c_3"/>
    <property type="match status" value="1"/>
</dbReference>
<dbReference type="Pfam" id="PF16413">
    <property type="entry name" value="Mlh1_C"/>
    <property type="match status" value="1"/>
</dbReference>
<dbReference type="SMART" id="SM01340">
    <property type="entry name" value="DNA_mis_repair"/>
    <property type="match status" value="1"/>
</dbReference>
<dbReference type="SUPFAM" id="SSF55874">
    <property type="entry name" value="ATPase domain of HSP90 chaperone/DNA topoisomerase II/histidine kinase"/>
    <property type="match status" value="1"/>
</dbReference>
<dbReference type="SUPFAM" id="SSF54211">
    <property type="entry name" value="Ribosomal protein S5 domain 2-like"/>
    <property type="match status" value="1"/>
</dbReference>
<dbReference type="PROSITE" id="PS00058">
    <property type="entry name" value="DNA_MISMATCH_REPAIR_1"/>
    <property type="match status" value="1"/>
</dbReference>
<name>MLH1_HUMAN</name>